<reference key="1">
    <citation type="journal article" date="1984" name="Biochem. Biophys. Res. Commun.">
        <title>Cloning and sequence analysis of cDNA for human prealbumin.</title>
        <authorList>
            <person name="Mita S."/>
            <person name="Maeda S."/>
            <person name="Shimada K."/>
            <person name="Araki S."/>
        </authorList>
    </citation>
    <scope>NUCLEOTIDE SEQUENCE [MRNA]</scope>
    <source>
        <tissue>Liver</tissue>
    </source>
</reference>
<reference key="2">
    <citation type="journal article" date="1985" name="Biochem. Biophys. Res. Commun.">
        <title>Localization of the human prealbumin gene to chromosome 18.</title>
        <authorList>
            <person name="Wallace M.R."/>
            <person name="Naylor S.L."/>
            <person name="Kluve-Beckerman B."/>
            <person name="Long G.L."/>
            <person name="McDonald L."/>
            <person name="Shows T.B."/>
            <person name="Benson M.D."/>
        </authorList>
    </citation>
    <scope>NUCLEOTIDE SEQUENCE [MRNA]</scope>
</reference>
<reference key="3">
    <citation type="journal article" date="1985" name="Gene">
        <title>Structure of the chromosomal gene for human serum prealbumin.</title>
        <authorList>
            <person name="Sasaki H."/>
            <person name="Yoshioka N."/>
            <person name="Takagi Y."/>
            <person name="Sakaki Y."/>
        </authorList>
    </citation>
    <scope>NUCLEOTIDE SEQUENCE [GENOMIC DNA]</scope>
</reference>
<reference key="4">
    <citation type="journal article" date="1985" name="J. Biol. Chem.">
        <title>Structure of the human prealbumin gene.</title>
        <authorList>
            <person name="Tsuzuki T."/>
            <person name="Mita S."/>
            <person name="Maeda S."/>
            <person name="Araki S."/>
            <person name="Shimada K."/>
        </authorList>
    </citation>
    <scope>NUCLEOTIDE SEQUENCE [GENOMIC DNA]</scope>
</reference>
<reference key="5">
    <citation type="journal article" date="1986" name="J. Biochem.">
        <title>Analyses of prealbumin mRNAs in individuals with familial amyloidotic polyneuropathy.</title>
        <authorList>
            <person name="Mita S."/>
            <person name="Maeda S."/>
            <person name="Shimada K."/>
            <person name="Araki S."/>
        </authorList>
    </citation>
    <scope>NUCLEOTIDE SEQUENCE [MRNA]</scope>
    <scope>VARIANT AMYLD1 MET-50</scope>
</reference>
<reference key="6">
    <citation type="journal article" date="1986" name="Mol. Biol. Med.">
        <title>Structure and expression of the mutant prealbumin gene associated with familial amyloidotic polyneuropathy.</title>
        <authorList>
            <person name="Maeda S."/>
            <person name="Mita S."/>
            <person name="Araki S."/>
            <person name="Shimada K."/>
        </authorList>
    </citation>
    <scope>NUCLEOTIDE SEQUENCE [GENOMIC DNA]</scope>
    <scope>VARIANT AMYLD1 MET-50</scope>
    <source>
        <tissue>Liver</tissue>
    </source>
</reference>
<reference key="7">
    <citation type="journal article" date="1991" name="FEBS Lett.">
        <title>The transthyretin cDNA sequence is normal in transthyretin-derived senile systemic amyloidosis.</title>
        <authorList>
            <person name="Christmanson L."/>
            <person name="Betsholtz C."/>
            <person name="Gustavsson A."/>
            <person name="Johansson B."/>
            <person name="Sletten K."/>
            <person name="Westermark P."/>
        </authorList>
    </citation>
    <scope>NUCLEOTIDE SEQUENCE [MRNA]</scope>
    <scope>PROTEIN SEQUENCE OF 22-28</scope>
    <source>
        <tissue>Liver</tissue>
    </source>
</reference>
<reference key="8">
    <citation type="journal article" date="1991" name="Sci. China, Ser. B, Chem. Life Sci. Earth Sci.">
        <title>Transthyretin (prealbumin) gene in human primary hepatic cancer.</title>
        <authorList>
            <person name="Gu J.R."/>
            <person name="Jiang H.Q."/>
            <person name="He L.P."/>
            <person name="Li D.Z."/>
            <person name="Zhou X.M."/>
            <person name="Dai W.L."/>
            <person name="Qian L.F."/>
            <person name="Chen Y.Q."/>
            <person name="Schweinfest C."/>
            <person name="Papas T."/>
        </authorList>
    </citation>
    <scope>NUCLEOTIDE SEQUENCE [MRNA]</scope>
    <source>
        <tissue>Liver</tissue>
    </source>
</reference>
<reference key="9">
    <citation type="journal article" date="1999" name="Exp. Eye Res.">
        <title>Transthyretin localization in cultured and native human retinal pigment epithelium.</title>
        <authorList>
            <person name="Getz R.K."/>
            <person name="Kennedy B.G."/>
            <person name="Mangini N.J."/>
        </authorList>
    </citation>
    <scope>NUCLEOTIDE SEQUENCE [MRNA]</scope>
    <scope>TISSUE SPECIFICITY</scope>
    <scope>SUBCELLULAR LOCATION</scope>
    <source>
        <tissue>Retina</tissue>
    </source>
</reference>
<reference key="10">
    <citation type="journal article" date="2004" name="Nat. Genet.">
        <title>Complete sequencing and characterization of 21,243 full-length human cDNAs.</title>
        <authorList>
            <person name="Ota T."/>
            <person name="Suzuki Y."/>
            <person name="Nishikawa T."/>
            <person name="Otsuki T."/>
            <person name="Sugiyama T."/>
            <person name="Irie R."/>
            <person name="Wakamatsu A."/>
            <person name="Hayashi K."/>
            <person name="Sato H."/>
            <person name="Nagai K."/>
            <person name="Kimura K."/>
            <person name="Makita H."/>
            <person name="Sekine M."/>
            <person name="Obayashi M."/>
            <person name="Nishi T."/>
            <person name="Shibahara T."/>
            <person name="Tanaka T."/>
            <person name="Ishii S."/>
            <person name="Yamamoto J."/>
            <person name="Saito K."/>
            <person name="Kawai Y."/>
            <person name="Isono Y."/>
            <person name="Nakamura Y."/>
            <person name="Nagahari K."/>
            <person name="Murakami K."/>
            <person name="Yasuda T."/>
            <person name="Iwayanagi T."/>
            <person name="Wagatsuma M."/>
            <person name="Shiratori A."/>
            <person name="Sudo H."/>
            <person name="Hosoiri T."/>
            <person name="Kaku Y."/>
            <person name="Kodaira H."/>
            <person name="Kondo H."/>
            <person name="Sugawara M."/>
            <person name="Takahashi M."/>
            <person name="Kanda K."/>
            <person name="Yokoi T."/>
            <person name="Furuya T."/>
            <person name="Kikkawa E."/>
            <person name="Omura Y."/>
            <person name="Abe K."/>
            <person name="Kamihara K."/>
            <person name="Katsuta N."/>
            <person name="Sato K."/>
            <person name="Tanikawa M."/>
            <person name="Yamazaki M."/>
            <person name="Ninomiya K."/>
            <person name="Ishibashi T."/>
            <person name="Yamashita H."/>
            <person name="Murakawa K."/>
            <person name="Fujimori K."/>
            <person name="Tanai H."/>
            <person name="Kimata M."/>
            <person name="Watanabe M."/>
            <person name="Hiraoka S."/>
            <person name="Chiba Y."/>
            <person name="Ishida S."/>
            <person name="Ono Y."/>
            <person name="Takiguchi S."/>
            <person name="Watanabe S."/>
            <person name="Yosida M."/>
            <person name="Hotuta T."/>
            <person name="Kusano J."/>
            <person name="Kanehori K."/>
            <person name="Takahashi-Fujii A."/>
            <person name="Hara H."/>
            <person name="Tanase T.-O."/>
            <person name="Nomura Y."/>
            <person name="Togiya S."/>
            <person name="Komai F."/>
            <person name="Hara R."/>
            <person name="Takeuchi K."/>
            <person name="Arita M."/>
            <person name="Imose N."/>
            <person name="Musashino K."/>
            <person name="Yuuki H."/>
            <person name="Oshima A."/>
            <person name="Sasaki N."/>
            <person name="Aotsuka S."/>
            <person name="Yoshikawa Y."/>
            <person name="Matsunawa H."/>
            <person name="Ichihara T."/>
            <person name="Shiohata N."/>
            <person name="Sano S."/>
            <person name="Moriya S."/>
            <person name="Momiyama H."/>
            <person name="Satoh N."/>
            <person name="Takami S."/>
            <person name="Terashima Y."/>
            <person name="Suzuki O."/>
            <person name="Nakagawa S."/>
            <person name="Senoh A."/>
            <person name="Mizoguchi H."/>
            <person name="Goto Y."/>
            <person name="Shimizu F."/>
            <person name="Wakebe H."/>
            <person name="Hishigaki H."/>
            <person name="Watanabe T."/>
            <person name="Sugiyama A."/>
            <person name="Takemoto M."/>
            <person name="Kawakami B."/>
            <person name="Yamazaki M."/>
            <person name="Watanabe K."/>
            <person name="Kumagai A."/>
            <person name="Itakura S."/>
            <person name="Fukuzumi Y."/>
            <person name="Fujimori Y."/>
            <person name="Komiyama M."/>
            <person name="Tashiro H."/>
            <person name="Tanigami A."/>
            <person name="Fujiwara T."/>
            <person name="Ono T."/>
            <person name="Yamada K."/>
            <person name="Fujii Y."/>
            <person name="Ozaki K."/>
            <person name="Hirao M."/>
            <person name="Ohmori Y."/>
            <person name="Kawabata A."/>
            <person name="Hikiji T."/>
            <person name="Kobatake N."/>
            <person name="Inagaki H."/>
            <person name="Ikema Y."/>
            <person name="Okamoto S."/>
            <person name="Okitani R."/>
            <person name="Kawakami T."/>
            <person name="Noguchi S."/>
            <person name="Itoh T."/>
            <person name="Shigeta K."/>
            <person name="Senba T."/>
            <person name="Matsumura K."/>
            <person name="Nakajima Y."/>
            <person name="Mizuno T."/>
            <person name="Morinaga M."/>
            <person name="Sasaki M."/>
            <person name="Togashi T."/>
            <person name="Oyama M."/>
            <person name="Hata H."/>
            <person name="Watanabe M."/>
            <person name="Komatsu T."/>
            <person name="Mizushima-Sugano J."/>
            <person name="Satoh T."/>
            <person name="Shirai Y."/>
            <person name="Takahashi Y."/>
            <person name="Nakagawa K."/>
            <person name="Okumura K."/>
            <person name="Nagase T."/>
            <person name="Nomura N."/>
            <person name="Kikuchi H."/>
            <person name="Masuho Y."/>
            <person name="Yamashita R."/>
            <person name="Nakai K."/>
            <person name="Yada T."/>
            <person name="Nakamura Y."/>
            <person name="Ohara O."/>
            <person name="Isogai T."/>
            <person name="Sugano S."/>
        </authorList>
    </citation>
    <scope>NUCLEOTIDE SEQUENCE [LARGE SCALE MRNA]</scope>
    <source>
        <tissue>Corpus callosum</tissue>
    </source>
</reference>
<reference key="11">
    <citation type="submission" date="2003-05" db="EMBL/GenBank/DDBJ databases">
        <title>Cloning of human full-length CDSs in BD Creator(TM) system donor vector.</title>
        <authorList>
            <person name="Kalnine N."/>
            <person name="Chen X."/>
            <person name="Rolfs A."/>
            <person name="Halleck A."/>
            <person name="Hines L."/>
            <person name="Eisenstein S."/>
            <person name="Koundinya M."/>
            <person name="Raphael J."/>
            <person name="Moreira D."/>
            <person name="Kelley T."/>
            <person name="LaBaer J."/>
            <person name="Lin Y."/>
            <person name="Phelan M."/>
            <person name="Farmer A."/>
        </authorList>
    </citation>
    <scope>NUCLEOTIDE SEQUENCE [LARGE SCALE MRNA]</scope>
</reference>
<reference key="12">
    <citation type="submission" date="2004-06" db="EMBL/GenBank/DDBJ databases">
        <title>Cloning of human full open reading frames in Gateway(TM) system entry vector (pDONR201).</title>
        <authorList>
            <person name="Ebert L."/>
            <person name="Schick M."/>
            <person name="Neubert P."/>
            <person name="Schatten R."/>
            <person name="Henze S."/>
            <person name="Korn B."/>
        </authorList>
    </citation>
    <scope>NUCLEOTIDE SEQUENCE [LARGE SCALE MRNA]</scope>
</reference>
<reference key="13">
    <citation type="submission" date="2005-07" db="EMBL/GenBank/DDBJ databases">
        <authorList>
            <person name="Mural R.J."/>
            <person name="Istrail S."/>
            <person name="Sutton G.G."/>
            <person name="Florea L."/>
            <person name="Halpern A.L."/>
            <person name="Mobarry C.M."/>
            <person name="Lippert R."/>
            <person name="Walenz B."/>
            <person name="Shatkay H."/>
            <person name="Dew I."/>
            <person name="Miller J.R."/>
            <person name="Flanigan M.J."/>
            <person name="Edwards N.J."/>
            <person name="Bolanos R."/>
            <person name="Fasulo D."/>
            <person name="Halldorsson B.V."/>
            <person name="Hannenhalli S."/>
            <person name="Turner R."/>
            <person name="Yooseph S."/>
            <person name="Lu F."/>
            <person name="Nusskern D.R."/>
            <person name="Shue B.C."/>
            <person name="Zheng X.H."/>
            <person name="Zhong F."/>
            <person name="Delcher A.L."/>
            <person name="Huson D.H."/>
            <person name="Kravitz S.A."/>
            <person name="Mouchard L."/>
            <person name="Reinert K."/>
            <person name="Remington K.A."/>
            <person name="Clark A.G."/>
            <person name="Waterman M.S."/>
            <person name="Eichler E.E."/>
            <person name="Adams M.D."/>
            <person name="Hunkapiller M.W."/>
            <person name="Myers E.W."/>
            <person name="Venter J.C."/>
        </authorList>
    </citation>
    <scope>NUCLEOTIDE SEQUENCE [LARGE SCALE GENOMIC DNA]</scope>
</reference>
<reference key="14">
    <citation type="journal article" date="2004" name="Genome Res.">
        <title>The status, quality, and expansion of the NIH full-length cDNA project: the Mammalian Gene Collection (MGC).</title>
        <authorList>
            <consortium name="The MGC Project Team"/>
        </authorList>
    </citation>
    <scope>NUCLEOTIDE SEQUENCE [LARGE SCALE MRNA]</scope>
    <source>
        <tissue>Liver</tissue>
    </source>
</reference>
<reference key="15">
    <citation type="journal article" date="1974" name="J. Biol. Chem.">
        <title>The amino acid sequence of human plasma prealbumin.</title>
        <authorList>
            <person name="Kanda Y."/>
            <person name="Goodman D.S."/>
            <person name="Canfield R.E."/>
            <person name="Morgan F.J."/>
        </authorList>
    </citation>
    <scope>PROTEIN SEQUENCE OF 21-147</scope>
</reference>
<reference key="16">
    <citation type="journal article" date="1983" name="Proc. Natl. Acad. Sci. U.S.A.">
        <title>Primary structure of an amyloid prealbumin variant in familial polyneuropathy of Jewish origin.</title>
        <authorList>
            <person name="Pras M."/>
            <person name="Prelli F."/>
            <person name="Franklin E.C."/>
            <person name="Frangione B."/>
        </authorList>
    </citation>
    <scope>PRELIMINARY PROTEIN SEQUENCE OF 21-147</scope>
    <scope>VARIANT SER-26</scope>
</reference>
<reference key="17">
    <citation type="journal article" date="1983" name="Biochem. Biophys. Res. Commun.">
        <title>Identification of amyloid prealbumin variant in familial amyloidotic polyneuropathy (Japanese type).</title>
        <authorList>
            <person name="Tawara S."/>
            <person name="Nakazato M."/>
            <person name="Kangawa K."/>
            <person name="Matsuo H."/>
            <person name="Araki S."/>
        </authorList>
    </citation>
    <scope>PROTEIN SEQUENCE OF 21-147</scope>
    <scope>VARIANT AMYLD1 MET-50</scope>
</reference>
<reference key="18">
    <citation type="journal article" date="1984" name="Proc. Natl. Acad. Sci. U.S.A.">
        <title>Primary structure of an amyloid prealbumin and its plasma precursor in a heredofamilial polyneuropathy of Swedish origin.</title>
        <authorList>
            <person name="Dwulet F.E."/>
            <person name="Benson M.D."/>
        </authorList>
    </citation>
    <scope>PROTEIN SEQUENCE OF 21-147</scope>
    <scope>VARIANT AMYLD1 MET-50</scope>
</reference>
<reference key="19">
    <citation type="journal article" date="1988" name="Biochem. Biophys. Res. Commun.">
        <title>Evidence that the amyloid fibril protein in senile systemic amyloidosis is derived from normal prealbumin.</title>
        <authorList>
            <person name="Cornwell G.G. III"/>
            <person name="Sletten K."/>
            <person name="Johansson B."/>
            <person name="Westermark P."/>
        </authorList>
    </citation>
    <scope>PROTEIN SEQUENCE OF 21-147</scope>
    <scope>VARIANT AMYLD1 ILE-142</scope>
</reference>
<reference key="20">
    <citation type="journal article" date="1992" name="J. Neurol. Sci.">
        <title>Characterization of a transthyretin-related amyloid fibril protein from cerebral amyloid angiopathy in type I familial amyloid polyneuropathy.</title>
        <authorList>
            <person name="Kametani F."/>
            <person name="Ikeda S."/>
            <person name="Yanagisawa N."/>
            <person name="Ishi T."/>
            <person name="Hanyu N."/>
        </authorList>
    </citation>
    <scope>PROTEIN SEQUENCE OF 21-147</scope>
    <scope>VARIANT AMYLD1 MET-50</scope>
</reference>
<reference key="21">
    <citation type="journal article" date="2003" name="Nat. Biotechnol.">
        <title>Exploring proteomes and analyzing protein processing by mass spectrometric identification of sorted N-terminal peptides.</title>
        <authorList>
            <person name="Gevaert K."/>
            <person name="Goethals M."/>
            <person name="Martens L."/>
            <person name="Van Damme J."/>
            <person name="Staes A."/>
            <person name="Thomas G.R."/>
            <person name="Vandekerckhove J."/>
        </authorList>
    </citation>
    <scope>PROTEIN SEQUENCE OF 21-41</scope>
    <source>
        <tissue>Platelet</tissue>
    </source>
</reference>
<reference key="22">
    <citation type="journal article" date="1991" name="Biochim. Biophys. Acta">
        <title>A second transthyretin mutation at position 33 (Leu/Phe) associated with familial amyloidotic polyneuropathy.</title>
        <authorList>
            <person name="Harding J."/>
            <person name="Skare J."/>
            <person name="Skinner M."/>
        </authorList>
    </citation>
    <scope>NUCLEOTIDE SEQUENCE [GENOMIC DNA] OF 24-67</scope>
    <scope>VARIANT AMYLD1 LEU-53</scope>
</reference>
<reference key="23">
    <citation type="journal article" date="1994" name="Clin. Genet.">
        <title>Two transthyretin mutations (Glu42Gly, His90Asn) in an Italian family with amyloidosis.</title>
        <authorList>
            <person name="Skare J.C."/>
            <person name="Jones L.A."/>
            <person name="Myles N."/>
            <person name="Kane K."/>
            <person name="Milunsky A."/>
            <person name="Cohen A.S."/>
            <person name="Skinner M."/>
        </authorList>
    </citation>
    <scope>NUCLEOTIDE SEQUENCE [GENOMIC DNA] OF 24-67</scope>
    <scope>VARIANT AMYLD1 GLY-62</scope>
    <scope>VARIANT ASN-110</scope>
</reference>
<reference key="24">
    <citation type="journal article" date="1985" name="J. Biol. Chem.">
        <title>Demonstration of transthyretin mRNA in the brain and other extrahepatic tissues in the rat.</title>
        <authorList>
            <person name="Soprano D.R."/>
            <person name="Herbert J."/>
            <person name="Soprano K.J."/>
            <person name="Schon E.A."/>
            <person name="Goodman D.S."/>
        </authorList>
    </citation>
    <scope>NUCLEOTIDE SEQUENCE [MRNA] OF 31-147</scope>
</reference>
<reference key="25">
    <citation type="submission" date="2008-12" db="UniProtKB">
        <authorList>
            <person name="Lubec G."/>
            <person name="Vishwanath V."/>
            <person name="Chen W.-Q."/>
            <person name="Sun Y."/>
        </authorList>
    </citation>
    <scope>PROTEIN SEQUENCE OF 42-68; 101-123 AND 125-146</scope>
    <scope>IDENTIFICATION BY MASS SPECTROMETRY</scope>
    <source>
        <tissue>Brain</tissue>
        <tissue>Cajal-Retzius cell</tissue>
        <tissue>Fetal brain cortex</tissue>
    </source>
</reference>
<reference key="26">
    <citation type="journal article" date="1990" name="J. Clin. Invest.">
        <title>A point mutation in transthyretin increases affinity for thyroxine and produces euthyroid hyperthyroxinemia.</title>
        <authorList>
            <person name="Moses A.C."/>
            <person name="Rosen H.N."/>
            <person name="Moller D.E."/>
            <person name="Tsuzaki S."/>
            <person name="Haddow J.E."/>
            <person name="Lawlor J."/>
            <person name="Liepnieks J.J."/>
            <person name="Nichols W.C."/>
            <person name="Benson M.D."/>
        </authorList>
    </citation>
    <scope>NUCLEOTIDE SEQUENCE [GENOMIC DNA] OF 113-129</scope>
    <scope>VARIANT DTTRH THR-129</scope>
</reference>
<reference key="27">
    <citation type="journal article" date="1995" name="Lab. Invest.">
        <title>Amyloid fibril composition and transthyretin gene structure in senile systemic amyloidosis.</title>
        <authorList>
            <person name="Gustavsson A."/>
            <person name="Jahr H."/>
            <person name="Tobiassen R."/>
            <person name="Jacobson D.R."/>
            <person name="Sletten K."/>
            <person name="Westermark P."/>
        </authorList>
    </citation>
    <scope>PARTIAL PROTEIN SEQUENCE</scope>
</reference>
<reference key="28">
    <citation type="journal article" date="1977" name="Nature">
        <title>Protein-DNA and protein-hormone interactions in prealbumin: a model of the thyroid hormone nuclear receptor?</title>
        <authorList>
            <person name="Blake C.C.F."/>
            <person name="Oatley S.J."/>
        </authorList>
    </citation>
    <scope>BINDING SITES FOR THYROID HORMONES</scope>
</reference>
<reference key="29">
    <citation type="journal article" date="1986" name="Neurology">
        <title>Transthyretin: a choroid plexus-specific transport protein in human brain. The 1986 S. Weir Mitchell award.</title>
        <authorList>
            <person name="Herbert J."/>
            <person name="Wilcox J.N."/>
            <person name="Pham K.T."/>
            <person name="Fremeau R.T. Jr."/>
            <person name="Zeviani M."/>
            <person name="Dwork A."/>
            <person name="Soprano D.R."/>
            <person name="Makover A."/>
            <person name="Goodman D.S."/>
            <person name="Zimmerman E.A."/>
            <person name="Roberts J.L."/>
            <person name="Schon E.A."/>
        </authorList>
    </citation>
    <scope>FUNCTION</scope>
    <scope>TISSUE SPECIFICITY</scope>
    <scope>SUBCELLULAR LOCATION</scope>
</reference>
<reference key="30">
    <citation type="journal article" date="2004" name="Proteomics">
        <title>Screening for N-glycosylated proteins by liquid chromatography mass spectrometry.</title>
        <authorList>
            <person name="Bunkenborg J."/>
            <person name="Pilch B.J."/>
            <person name="Podtelejnikov A.V."/>
            <person name="Wisniewski J.R."/>
        </authorList>
    </citation>
    <scope>GLYCOSYLATION [LARGE SCALE ANALYSIS]</scope>
    <source>
        <tissue>Plasma</tissue>
    </source>
</reference>
<reference key="31">
    <citation type="journal article" date="2005" name="J. Proteome Res.">
        <title>Human plasma N-glycoproteome analysis by immunoaffinity subtraction, hydrazide chemistry, and mass spectrometry.</title>
        <authorList>
            <person name="Liu T."/>
            <person name="Qian W.-J."/>
            <person name="Gritsenko M.A."/>
            <person name="Camp D.G. II"/>
            <person name="Monroe M.E."/>
            <person name="Moore R.J."/>
            <person name="Smith R.D."/>
        </authorList>
    </citation>
    <scope>GLYCOSYLATION [LARGE SCALE ANALYSIS] AT ASN-118</scope>
    <source>
        <tissue>Plasma</tissue>
    </source>
</reference>
<reference key="32">
    <citation type="journal article" date="2008" name="Protein Pept. Lett.">
        <title>Detection of a gamma-carboxy-glutamate as novel post-translational modification of human transthyretin.</title>
        <authorList>
            <person name="Rueggeberg S."/>
            <person name="Horn P."/>
            <person name="Li X."/>
            <person name="Vajkoczy P."/>
            <person name="Franz T."/>
        </authorList>
    </citation>
    <scope>GAMMA-CARBOXYGLUTAMATION AT GLU-62</scope>
    <scope>IDENTIFICATION BY MASS SPECTROMETRY</scope>
    <source>
        <tissue>Cerebrospinal fluid</tissue>
    </source>
</reference>
<reference key="33">
    <citation type="journal article" date="2009" name="Cell">
        <title>Cotranslational and posttranslational N-glycosylation of polypeptides by distinct mammalian OST isoforms.</title>
        <authorList>
            <person name="Ruiz-Canada C."/>
            <person name="Kelleher D.J."/>
            <person name="Gilmore R."/>
        </authorList>
    </citation>
    <scope>GLYCOSYLATION AT ASN-118</scope>
    <scope>CHARACTERIZATION OF VARIANT AMYLD1 GLY-38</scope>
</reference>
<reference key="34">
    <citation type="journal article" date="2014" name="J. Proteomics">
        <title>An enzyme assisted RP-RPLC approach for in-depth analysis of human liver phosphoproteome.</title>
        <authorList>
            <person name="Bian Y."/>
            <person name="Song C."/>
            <person name="Cheng K."/>
            <person name="Dong M."/>
            <person name="Wang F."/>
            <person name="Huang J."/>
            <person name="Sun D."/>
            <person name="Wang L."/>
            <person name="Ye M."/>
            <person name="Zou H."/>
        </authorList>
    </citation>
    <scope>IDENTIFICATION BY MASS SPECTROMETRY [LARGE SCALE ANALYSIS]</scope>
    <source>
        <tissue>Liver</tissue>
    </source>
</reference>
<reference key="35">
    <citation type="journal article" date="1974" name="J. Mol. Biol.">
        <title>Structure of human plasma prealbumin at 2.5-A resolution. A preliminary report on the polypeptide chain conformation, quaternary structure and thyroxine binding.</title>
        <authorList>
            <person name="Blake C.C.F."/>
            <person name="Geisow M.J."/>
            <person name="Swan I.D.A."/>
            <person name="Rerat C."/>
            <person name="Rerat B."/>
        </authorList>
    </citation>
    <scope>X-RAY CRYSTALLOGRAPHY (2.5 ANGSTROMS)</scope>
</reference>
<reference key="36">
    <citation type="journal article" date="1978" name="J. Mol. Biol.">
        <title>Structure of prealbumin: secondary, tertiary and quaternary interactions determined by Fourier refinement at 1.8 A.</title>
        <authorList>
            <person name="Blake C.C.F."/>
            <person name="Geisow M.J."/>
            <person name="Oatley S.J."/>
            <person name="Rerat B."/>
            <person name="Rerat C."/>
        </authorList>
    </citation>
    <scope>X-RAY CRYSTALLOGRAPHY (1.8 ANGSTROMS)</scope>
</reference>
<reference key="37">
    <citation type="journal article" date="1993" name="EMBO J.">
        <title>Structure of Met30 variant of transthyretin and its amyloidogenic implications.</title>
        <authorList>
            <person name="Terry C.J."/>
            <person name="Damas A.M."/>
            <person name="Oliveira P."/>
            <person name="Saraiva M.J.M."/>
            <person name="Alves I.L."/>
            <person name="Costa P.P."/>
            <person name="Matias P.M."/>
            <person name="Sakaki Y."/>
            <person name="Blake C.C.F."/>
        </authorList>
    </citation>
    <scope>X-RAY CRYSTALLOGRAPHY (2.7 ANGSTROMS) OF VARIANT AMYLD1 MET-50</scope>
</reference>
<reference key="38">
    <citation type="journal article" date="1993" name="J. Biol. Chem.">
        <title>The X-ray crystal structure refinements of normal human transthyretin and the amyloidogenic Val-30--&gt;Met variant to 1.7-A resolution.</title>
        <authorList>
            <person name="Hamilton J.A."/>
            <person name="Steinrauf L.K."/>
            <person name="Braden B.C."/>
            <person name="Liepnieks J."/>
            <person name="Benson M.D."/>
            <person name="Holmgren G."/>
            <person name="Sandgren O."/>
            <person name="Steen L."/>
        </authorList>
    </citation>
    <scope>X-RAY CRYSTALLOGRAPHY (1.7 ANGSTROMS) OF VARIANT AMYLD1 MET-50</scope>
</reference>
<reference key="39">
    <citation type="journal article" date="1995" name="Science">
        <title>Structure of a complex of two plasma proteins: transthyretin and retinol-binding protein.</title>
        <authorList>
            <person name="Monaco H.L."/>
            <person name="Rizzi M."/>
            <person name="Coda A."/>
        </authorList>
    </citation>
    <scope>X-RAY CRYSTALLOGRAPHY (3.1 ANGSTROMS) OF COMPLEX WITH RBP</scope>
</reference>
<reference key="40">
    <citation type="journal article" date="1998" name="Amyloid">
        <title>Tertiary structures of amyloidogenic and non-amyloidogenic transthyretin variants: new model for amyloid fibril formation.</title>
        <authorList>
            <person name="Schormann N."/>
            <person name="Murrell J.R."/>
            <person name="Benson M.D."/>
        </authorList>
    </citation>
    <scope>X-RAY CRYSTALLOGRAPHY (1.9 ANGSTROMS) OF VARIANTS</scope>
</reference>
<reference key="41">
    <citation type="journal article" date="1998" name="J. Biol. Chem.">
        <title>The crystal structure of amyloidogenic Leu55 --&gt; Pro transthyretin variant reveals a possible pathway for transthyretin polymerization into amyloid fibrils.</title>
        <authorList>
            <person name="Sebastiao M.P."/>
            <person name="Saraiva M.J."/>
            <person name="Damas A.M."/>
        </authorList>
    </citation>
    <scope>X-RAY CRYSTALLOGRAPHY (2.7 ANGSTROMS) OF 21-147 OF VARIANT AMYLD1 PRO-75</scope>
</reference>
<reference key="42">
    <citation type="journal article" date="1998" name="Proc. Natl. Acad. Sci. U.S.A.">
        <title>Inhibiting transthyretin conformational changes that lead to amyloid fibril formation.</title>
        <authorList>
            <person name="Peterson S.A."/>
            <person name="Klabunde T."/>
            <person name="Lashuel H.A."/>
            <person name="Purkey H."/>
            <person name="Sacchettini J.C."/>
            <person name="Kelly J.W."/>
        </authorList>
    </citation>
    <scope>X-RAY CRYSTALLOGRAPHY (2.0 ANGSTROMS)</scope>
</reference>
<reference key="43">
    <citation type="journal article" date="1999" name="Biochemistry">
        <title>The structure of human retinol-binding protein (RBP) with its carrier protein transthyretin reveals an interaction with the carboxy terminus of RBP.</title>
        <authorList>
            <person name="Naylor H.M."/>
            <person name="Newcomer M.E."/>
        </authorList>
    </citation>
    <scope>X-RAY CRYSTALLOGRAPHY (3.2 ANGSTROMS) OF COMPLEX WITH RBP4</scope>
    <scope>SUBUNIT</scope>
</reference>
<reference key="44">
    <citation type="journal article" date="2000" name="J. Mol. Biol.">
        <title>A comparative analysis of 23 structures of the amyloidogenic protein transthyretin.</title>
        <authorList>
            <person name="Hoernberg A."/>
            <person name="Eneqvist T."/>
            <person name="Olofsson A."/>
            <person name="Lundgren E."/>
            <person name="Sauer-Eriksson A.E."/>
        </authorList>
    </citation>
    <scope>X-RAY CRYSTALLOGRAPHY (1.3 ANGSTROMS) OF 21-147</scope>
</reference>
<reference key="45">
    <citation type="journal article" date="2000" name="Nat. Struct. Biol.">
        <title>Rational design of potent human transthyretin amyloid disease inhibitors.</title>
        <authorList>
            <person name="Klabunde T."/>
            <person name="Petrassi H.M."/>
            <person name="Oza V.B."/>
            <person name="Raman P."/>
            <person name="Kelly J.W."/>
            <person name="Sacchettini J.C."/>
        </authorList>
    </citation>
    <scope>X-RAY CRYSTALLOGRAPHY (2.0 ANGSTROMS)</scope>
</reference>
<reference evidence="108" key="46">
    <citation type="journal article" date="2001" name="Acta Crystallogr. D">
        <title>Structure of a new polymorphic monoclinic form of human transthyretin at 3 A resolution reveals a mixed complex between unliganded and T4-bound tetramers of TTR.</title>
        <authorList>
            <person name="Wojtczak A."/>
            <person name="Neumann P."/>
            <person name="Cody V."/>
        </authorList>
    </citation>
    <scope>X-RAY CRYSTALLOGRAPHY (3.00 ANGSTROMS) OF 21-147 IN COMPLEX WITH L-THYROXINE</scope>
</reference>
<reference key="47">
    <citation type="journal article" date="2001" name="Biochemistry">
        <title>An engineered transthyretin monomer that is nonamyloidogenic, unless it is partially denatured.</title>
        <authorList>
            <person name="Jiang X."/>
            <person name="Smith C.S."/>
            <person name="Petrassi H.M."/>
            <person name="Hammarstroem P."/>
            <person name="White J.T."/>
            <person name="Sacchettini J.C."/>
            <person name="Kelly J.W."/>
        </authorList>
    </citation>
    <scope>X-RAY CRYSTALLOGRAPHY (2.1 ANGSTROMS) OF 21-147</scope>
    <scope>MUTAGENESIS OF PHE-107 AND LEU-130</scope>
    <scope>IDENTIFICATION BY MASS SPECTROMETRY</scope>
    <scope>FORMATION OF AMYLOID FIBERS AT ACIDIC PH</scope>
    <scope>SUBUNIT</scope>
</reference>
<reference key="48">
    <citation type="journal article" date="2001" name="J. Mol. Biol.">
        <title>Transthyretin stability as a key factor in amyloidogenesis: X-ray analysis at atomic resolution.</title>
        <authorList>
            <person name="Sebastiao M.P."/>
            <person name="Lamzin V."/>
            <person name="Saraiva M.J."/>
            <person name="Damas A.M."/>
        </authorList>
    </citation>
    <scope>X-RAY CRYSTALLOGRAPHY (1.1 ANGSTROMS) OF 30-144 OF VARIANT AMYLD1 MET-50 AND VARIANT CHICAGO MET-139 IN COMPLEX WITH L-THYROXINE</scope>
    <scope>SUBUNIT</scope>
</reference>
<reference key="49">
    <citation type="journal article" date="2002" name="Biochemistry">
        <title>Disulfide-bond formation in the transthyretin mutant Y114C prevents amyloid fibril formation in vivo and in vitro.</title>
        <authorList>
            <person name="Eneqvist T."/>
            <person name="Olofsson A."/>
            <person name="Ando Y."/>
            <person name="Miyakawa T."/>
            <person name="Katsuragi S."/>
            <person name="Jass J."/>
            <person name="Lundgren E."/>
            <person name="Sauer-Eriksson A.E."/>
        </authorList>
    </citation>
    <scope>X-RAY CRYSTALLOGRAPHY (2.0 ANGSTROMS) OF 21-147 OF VARIANT AMYLD1 CYS-134</scope>
</reference>
<reference key="50">
    <citation type="journal article" date="2003" name="Angew. Chem. Int. Ed.">
        <title>Benzoxazoles as transthyretin amyloid fibril inhibitors: synthesis, evaluation, and mechanism of action.</title>
        <authorList>
            <person name="Razavi H."/>
            <person name="Palaninathan S.K."/>
            <person name="Powers E.T."/>
            <person name="Wiseman R.L."/>
            <person name="Purkey H.E."/>
            <person name="Mohamedmohaideen N.N."/>
            <person name="Deechongkit S."/>
            <person name="Chiang K.P."/>
            <person name="Dendle M.T.A."/>
            <person name="Sacchettini J.C."/>
            <person name="Kelly J.W."/>
        </authorList>
    </citation>
    <scope>X-RAY CRYSTALLOGRAPHY (1.54 ANGSTROMS) OF 21-147IN COMPLEX WITH AMYLOIDOGENESIS INHIBITORS</scope>
</reference>
<reference key="51">
    <citation type="journal article" date="2003" name="J. Am. Chem. Soc.">
        <title>Synthesis and characterization of potent bivalent amyloidosis inhibitors that bind prior to transthyretin tetramerization.</title>
        <authorList>
            <person name="Green N.S."/>
            <person name="Palaninathan S.K."/>
            <person name="Sacchettini J.C."/>
            <person name="Kelly J.W."/>
        </authorList>
    </citation>
    <scope>X-RAY CRYSTALLOGRAPHY (1.46 ANGSTROMS) OF 21-147 IN COMPLEX WITH AMYLOIDOGENESIS INHIBITORS</scope>
    <scope>FIBRIL FORMATION</scope>
</reference>
<reference key="52">
    <citation type="journal article" date="2004" name="J. Med. Chem.">
        <title>Diflunisal analogues stabilize the native state of transthyretin. Potent inhibition of amyloidogenesis.</title>
        <authorList>
            <person name="Adamski-Werner S.L."/>
            <person name="Palaninathan S.K."/>
            <person name="Sacchettini J.C."/>
            <person name="Kelly J.W."/>
        </authorList>
    </citation>
    <scope>X-RAY CRYSTALLOGRAPHY (1.54 ANGSTROMS) OF 21-147 IN COMPLEX WITH DIFLUNISAL ANALOGS</scope>
    <scope>INHIBITION OF AMYLOID FORMATION</scope>
</reference>
<reference key="53">
    <citation type="journal article" date="2005" name="Acta Crystallogr. D">
        <title>X-ray crystallographic studies of two transthyretin variants: further insights into amyloidogenesis.</title>
        <authorList>
            <person name="Neto-Silva R.M."/>
            <person name="Macedo-Ribeiro S."/>
            <person name="Pereira P.J.B."/>
            <person name="Coll M."/>
            <person name="Saraiva M.J."/>
            <person name="Damas A.M."/>
        </authorList>
    </citation>
    <scope>X-RAY CRYSTALLOGRAPHY (1.55 ANGSTROMS) OF 21-147 OF VARIANT AMYLD1 PHE-98 AND VARIANT HIS-124</scope>
    <scope>SUBUNIT</scope>
</reference>
<reference key="54">
    <citation type="journal article" date="2005" name="Biochemistry">
        <title>The effect of iodide and chloride on transthyretin structure and stability.</title>
        <authorList>
            <person name="Hoernberg A."/>
            <person name="Hultdin U.W."/>
            <person name="Olofsson A."/>
            <person name="Sauer-Eriksson A.E."/>
        </authorList>
    </citation>
    <scope>X-RAY CRYSTALLOGRAPHY (1.8 ANGSTROMS) OF 21-147 IN COMPLEXES WITH CHLORIDE AND IODIDE IONS</scope>
</reference>
<reference key="55">
    <citation type="journal article" date="2005" name="Biochemistry">
        <title>Cys114-linked dimers of transthyretin are compatible with amyloid formation.</title>
        <authorList>
            <person name="Karlsson A."/>
            <person name="Olofsson A."/>
            <person name="Eneqvist T."/>
            <person name="Sauer-Eriksson A.E."/>
        </authorList>
    </citation>
    <scope>X-RAY CRYSTALLOGRAPHY (1.7 ANGSTROMS) OF 21-147 OF VARIANT AMYLD1 CYS-134</scope>
</reference>
<reference key="56">
    <citation type="journal article" date="2005" name="J. Am. Chem. Soc.">
        <title>Kinetic stabilization of an oligomeric protein by a single ligand binding event.</title>
        <authorList>
            <person name="Wiseman R.L."/>
            <person name="Johnson S.M."/>
            <person name="Kelker M.S."/>
            <person name="Foss T."/>
            <person name="Wilson I.A."/>
            <person name="Kelly J.W."/>
        </authorList>
    </citation>
    <scope>X-RAY CRYSTALLOGRAPHY (1.69 ANGSTROMS) OF 21-147 IN COMPLEX WITH THYROID HORMONE ANALOG</scope>
    <scope>SUBUNIT</scope>
</reference>
<reference key="57">
    <citation type="journal article" date="2005" name="J. Mol. Biol.">
        <title>Kinetic stabilization of the native state by protein engineering: implications for inhibition of transthyretin amyloidogenesis.</title>
        <authorList>
            <person name="Foss T.R."/>
            <person name="Kelker M.S."/>
            <person name="Wiseman R.L."/>
            <person name="Wilson I.A."/>
            <person name="Kelly J.W."/>
        </authorList>
    </citation>
    <scope>X-RAY CRYSTALLOGRAPHY (1.36 ANGSTROMS) OF 31-147</scope>
    <scope>SUBUNIT</scope>
</reference>
<reference key="58">
    <citation type="journal article" date="2006" name="Acta Crystallogr. D">
        <title>The binding of 2,4-dinitrophenol to wild-type and amyloidogenic transthyretin.</title>
        <authorList>
            <person name="Morais-de-Sa E."/>
            <person name="Neto-Silva R.M."/>
            <person name="Pereira P.J.B."/>
            <person name="Saraiva M.J."/>
            <person name="Damas A.M."/>
        </authorList>
    </citation>
    <scope>X-RAY CRYSTALLOGRAPHY (1.7 ANGSTROMS) OF 21-147 OF WILD-TYPE AND VARIANTS AMYLD1 PRO-75 AND PHE-98</scope>
</reference>
<reference evidence="109" key="59">
    <citation type="journal article" date="2007" name="Biochim. Biophys. Acta">
        <title>Structural basis for the protective role of sulfite against transthyretin amyloid formation.</title>
        <authorList>
            <person name="Gales L."/>
            <person name="Saraiva M.J."/>
            <person name="Damas A.M."/>
        </authorList>
    </citation>
    <scope>X-RAY CRYSTALLOGRAPHY (1.45 ANGSTROMS) OF 21-147</scope>
    <scope>SULFATION AT CYS-30</scope>
</reference>
<reference key="60">
    <citation type="journal article" date="2007" name="J. Mol. Biol.">
        <title>Acidic pH-induced conformational changes in amyloidogenic mutant transthyretin.</title>
        <authorList>
            <person name="Pasquato N."/>
            <person name="Berni R."/>
            <person name="Folli C."/>
            <person name="Alfieri B."/>
            <person name="Cendron L."/>
            <person name="Zanotti G."/>
        </authorList>
    </citation>
    <scope>X-RAY CRYSTALLOGRAPHY (1.8 ANGSTROMS) OF 21-147</scope>
</reference>
<reference key="61">
    <citation type="journal article" date="2008" name="Biochim. Biophys. Acta">
        <title>Iodination of salicylic acid improves its binding to transthyretin.</title>
        <authorList>
            <person name="Gales L."/>
            <person name="Almeida M.R."/>
            <person name="Arsequell G."/>
            <person name="Valencia G."/>
            <person name="Saraiva M.J."/>
            <person name="Damas A.M."/>
        </authorList>
    </citation>
    <scope>X-RAY CRYSTALLOGRAPHY (1.55 ANGSTROMS) OF 21-147 IN COMPLEX WITH 3,5-DIIODOSALICYLIC ACID</scope>
    <scope>THYROXINE BINDING</scope>
</reference>
<reference key="62">
    <citation type="journal article" date="2008" name="FEBS J.">
        <title>Structural and mutational analyses of protein-protein interactions between transthyretin and retinol-binding protein.</title>
        <authorList>
            <person name="Zanotti G."/>
            <person name="Folli C."/>
            <person name="Cendron L."/>
            <person name="Alfieri B."/>
            <person name="Nishida S.K."/>
            <person name="Gliubich F."/>
            <person name="Pasquato N."/>
            <person name="Negro A."/>
            <person name="Berni R."/>
        </authorList>
    </citation>
    <scope>X-RAY CRYSTALLOGRAPHY (3.38 ANGSTROMS) OF 21-147 IN COMPLEX WITH RBP4</scope>
</reference>
<reference key="63">
    <citation type="journal article" date="2008" name="J. Med. Chem.">
        <title>Biochemical and structural evaluation of highly selective 2-arylbenzoxazole-based transthyretin amyloidogenesis inhibitors.</title>
        <authorList>
            <person name="Johnson S.M."/>
            <person name="Connelly S."/>
            <person name="Wilson I.A."/>
            <person name="Kelly J.W."/>
        </authorList>
    </citation>
    <scope>X-RAY CRYSTALLOGRAPHY (1.3 ANGSTROMS) OF 21-147 IN COMPLEX WITH 2-ARYLBENZOXAZOLE-BASED TRANSTHYRETIN AMYLOIDOGENESIS INHIBITORS</scope>
</reference>
<reference key="64">
    <citation type="journal article" date="2008" name="J. Med. Chem.">
        <title>Toward optimization of the linker substructure common to transthyretin amyloidogenesis inhibitors using biochemical and structural studies.</title>
        <authorList>
            <person name="Johnson S.M."/>
            <person name="Connelly S."/>
            <person name="Wilson I.A."/>
            <person name="Kelly J.W."/>
        </authorList>
    </citation>
    <scope>X-RAY CRYSTALLOGRAPHY (1.4 ANGSTROMS) OF 21-147 IN COMPLEX WITH BISARYL AMYLOIDOGENESIS INHIBITORS</scope>
</reference>
<reference key="65">
    <citation type="journal article" date="2008" name="J. Mol. Biol.">
        <title>Structural insight into pH-induced conformational changes within the native human transthyretin tetramer.</title>
        <authorList>
            <person name="Palaninathan S.K."/>
            <person name="Mohamedmohaideen N.N."/>
            <person name="Snee W.C."/>
            <person name="Kelly J.W."/>
            <person name="Sacchettini J.C."/>
        </authorList>
    </citation>
    <scope>X-RAY CRYSTALLOGRAPHY (1.72 ANGSTROMS) OF 21-147 AT PH 3.5 AND 4.5</scope>
</reference>
<reference key="66">
    <citation type="submission" date="2008-07" db="PDB data bank">
        <title>Crystal structure of the F87M/L110M mutant of human transthyretin at pH 4.6 soaked.</title>
        <authorList>
            <consortium name="Mycobacterium tuberculosis structural genomics consortium (TB)"/>
        </authorList>
    </citation>
    <scope>X-RAY CRYSTALLOGRAPHY (1.38 ANGSTROMS) OF 21-147</scope>
</reference>
<reference key="67">
    <citation type="journal article" date="1995" name="Hum. Mutat.">
        <title>Transthyretin mutations in health and disease.</title>
        <authorList>
            <person name="Saraiva M.J.M."/>
        </authorList>
    </citation>
    <scope>REVIEW ON VARIANTS</scope>
</reference>
<reference key="68">
    <citation type="journal article" date="1984" name="Biochem. Biophys. Res. Commun.">
        <title>Revised analysis of amino acid replacement in a prealbumin variant (SKO-III) associated with familial amyloidotic polyneuropathy of Jewish origin.</title>
        <authorList>
            <person name="Nakazato M."/>
            <person name="Kangawa K."/>
            <person name="Minamino N."/>
            <person name="Tawara S."/>
            <person name="Matsuo H."/>
            <person name="Araki S."/>
        </authorList>
    </citation>
    <scope>VARIANT AMYLD1 ILE-53</scope>
</reference>
<reference key="69">
    <citation type="journal article" date="1986" name="J. Clin. Invest.">
        <title>Biochemical and molecular genetic characterization of a new variant prealbumin associated with hereditary amyloidosis.</title>
        <authorList>
            <person name="Wallace M.R."/>
            <person name="Dwulet F.E."/>
            <person name="Conneally P.M."/>
            <person name="Benson M.D."/>
        </authorList>
    </citation>
    <scope>VARIANT AMYLD1 SER-104</scope>
</reference>
<reference key="70">
    <citation type="journal article" date="1987" name="Biochem. Biophys. Res. Commun.">
        <title>Identification and characterization of a human transthyretin variant.</title>
        <authorList>
            <person name="Strahler J.R."/>
            <person name="Rosenblum B.B."/>
            <person name="Hanash S.M."/>
        </authorList>
    </citation>
    <scope>VARIANT VAL-136</scope>
</reference>
<reference key="71">
    <citation type="journal article" date="1988" name="J. Clin. Invest.">
        <title>Identification of a new hereditary amyloidosis prealbumin variant, Tyr-77, and detection of the gene by DNA analysis.</title>
        <authorList>
            <person name="Wallace M.R."/>
            <person name="Dwulet F.E."/>
            <person name="Williams E.C."/>
            <person name="Conneally P.M."/>
            <person name="Benson M.D."/>
        </authorList>
    </citation>
    <scope>VARIANT AMYLD1 TYR-97</scope>
</reference>
<reference key="72">
    <citation type="journal article" date="1990" name="Biochem. Biophys. Res. Commun.">
        <title>A novel variant of transthyretin (Tyr114 to Cys) deduced from the nucleotide sequences of gene fragments from familial amyloidotic polyneuropathy in Japanese sibling cases.</title>
        <authorList>
            <person name="Ueno S."/>
            <person name="Uemichi T."/>
            <person name="Yorifuji S."/>
            <person name="Tarui S."/>
        </authorList>
    </citation>
    <scope>VARIANT AMYLD1 CYS-134</scope>
</reference>
<reference key="73">
    <citation type="journal article" date="1990" name="Biochem. Biophys. Res. Commun.">
        <title>Two novel variants of transthyretin identified in Japanese cases with familial amyloidotic polyneuropathy: transthyretin (Glu42 to Gly) and transthyretin (Ser50 to Arg).</title>
        <authorList>
            <person name="Ueno S."/>
            <person name="Uemichi T."/>
            <person name="Takahashi N."/>
            <person name="Soga F."/>
            <person name="Yorifuji S."/>
            <person name="Tarui S."/>
        </authorList>
    </citation>
    <scope>VARIANTS AMYLD1 GLY-62 AND ARG-70</scope>
</reference>
<reference key="74">
    <citation type="journal article" date="1991" name="Am. J. Med. Genet.">
        <title>Biochemical and clinical characterization of prealbuminCHICAGO: an apparently benign variant of serum prealbumin (transthyretin) discovered with high-resolution two-dimensional electrophoresis.</title>
        <authorList>
            <person name="Harrison H.H."/>
            <person name="Gordon E.D."/>
            <person name="Nichols W.C."/>
            <person name="Benson M.D."/>
        </authorList>
    </citation>
    <scope>VARIANT CHICAGO MET-139</scope>
</reference>
<reference key="75">
    <citation type="journal article" date="1991" name="Biochem. Biophys. Res. Commun.">
        <title>New mutant gene (transthyretin Arg 58) in cases with hereditary polyneuropathy detected by non-isotope method of single-strand conformation polymorphism analysis.</title>
        <authorList>
            <person name="Saeki Y."/>
            <person name="Ueno S."/>
            <person name="Yorifuji S."/>
            <person name="Sugiyama Y."/>
            <person name="Ide Y."/>
            <person name="Matsuzawa Y."/>
        </authorList>
    </citation>
    <scope>VARIANT AMYLD1 ARG-78</scope>
</reference>
<reference key="76">
    <citation type="journal article" date="1991" name="Clin. Genet.">
        <title>A new transthyretin variant from a patient with familial amyloidotic polyneuropathy has asparagine substituted for histidine at position 90.</title>
        <authorList>
            <person name="Skare J.C."/>
            <person name="Milunsky J.M."/>
            <person name="Milunsky A."/>
            <person name="Skare I.B."/>
            <person name="Cohen A.S."/>
            <person name="Skinner M."/>
        </authorList>
    </citation>
    <scope>VARIANT ASN-110</scope>
</reference>
<reference key="77">
    <citation type="journal article" date="1991" name="Neurology">
        <title>Two-tiered DNA-based diagnosis of transthyretin amyloidosis reveals two novel point mutations.</title>
        <authorList>
            <person name="Li S."/>
            <person name="Minnerath S."/>
            <person name="Li K."/>
            <person name="Dyck P.J."/>
            <person name="Sommer S.S."/>
        </authorList>
    </citation>
    <scope>VARIANTS AMYLD1 LEU-53 AND LEU-84</scope>
</reference>
<reference key="78">
    <citation type="journal article" date="1992" name="Am. J. Hum. Genet.">
        <title>A new transthyretin mutation associated with amyloid cardiomyopathy.</title>
        <authorList>
            <person name="Saraiva M.J.M."/>
            <person name="Almeida M.R."/>
            <person name="Sherman W."/>
            <person name="Gawinowicz M."/>
            <person name="Costa P."/>
            <person name="Costa P.P."/>
            <person name="Goodman D.S."/>
        </authorList>
    </citation>
    <scope>VARIANT AMYLD1 THR-65</scope>
</reference>
<reference key="79">
    <citation type="journal article" date="1992" name="Biochem. Biophys. Res. Commun.">
        <title>A novel transthyretin mutation associated with familial amyloidotic polyneuropathy.</title>
        <authorList>
            <person name="Murakami T."/>
            <person name="Maeda S."/>
            <person name="Yi S."/>
            <person name="Ikegawa S."/>
            <person name="Kawashima E."/>
            <person name="Onodera S."/>
            <person name="Shimada K."/>
            <person name="Araki S."/>
        </authorList>
    </citation>
    <scope>VARIANT AMYLD1 ARG-67</scope>
</reference>
<reference key="80">
    <citation type="journal article" date="1992" name="Biochem. Biophys. Res. Commun.">
        <title>A novel transthyretin mutation at position 30 (Leu for Val) associated with familial amyloidotic polyneuropathy.</title>
        <authorList>
            <person name="Murakami T."/>
            <person name="Atsumi T."/>
            <person name="Maeda S."/>
            <person name="Tanase S."/>
            <person name="Ishikawa K."/>
            <person name="Mita S."/>
            <person name="Kumamoto T."/>
            <person name="Araki S."/>
            <person name="Ando M."/>
        </authorList>
    </citation>
    <scope>VARIANT AMYLD1 LEU-50</scope>
</reference>
<reference key="81">
    <citation type="journal article" date="1992" name="Biochem. Biophys. Res. Commun.">
        <title>Novel variant transthyretin gene (Ser50 to Ile) in familial cardiac amyloidosis.</title>
        <authorList>
            <person name="Nishi H."/>
            <person name="Kimura A."/>
            <person name="Harada H."/>
            <person name="Hayashi Y."/>
            <person name="Nakamura M."/>
            <person name="Sasazuki T."/>
        </authorList>
    </citation>
    <scope>VARIANT AMYLD1 ILE-70</scope>
</reference>
<reference key="82">
    <citation type="journal article" date="1992" name="Clin. Genet.">
        <title>Familial amyloidotic polyneuropathy: a new transthyretin position 30 mutation (alanine for valine) in a family of German descent.</title>
        <authorList>
            <person name="Jones L.A."/>
            <person name="Skare J.C."/>
            <person name="Cohen A.S."/>
            <person name="Harding J.A."/>
            <person name="Milunsky A."/>
            <person name="Skinner M."/>
        </authorList>
    </citation>
    <scope>VARIANT AMYLD1 ALA-50</scope>
</reference>
<reference key="83">
    <citation type="journal article" date="1992" name="Hum. Genet.">
        <title>Transthyretin Pro55, a variant associated with early-onset, aggressive, diffuse amyloidosis with cardiac and neurologic involvement.</title>
        <authorList>
            <person name="Jacobson D.R."/>
            <person name="McFarlin D.E."/>
            <person name="Kane I."/>
            <person name="Buxbaum J.N."/>
        </authorList>
    </citation>
    <scope>VARIANT AMYLD1 PRO-75</scope>
</reference>
<reference key="84">
    <citation type="journal article" date="1992" name="Hum. Mutat.">
        <title>Two transthyretin variants (TTR Ala-49 and TTR Gln-89) in two Sicilian kindreds with hereditary amyloidosis.</title>
        <authorList>
            <person name="Almeida M.R."/>
            <person name="Ferlini A."/>
            <person name="Forabosco A."/>
            <person name="Gawinowicz M.A."/>
            <person name="Costa P.P."/>
            <person name="Salvi F."/>
            <person name="Plasmati R."/>
            <person name="Tassinari C.A."/>
            <person name="Altland K."/>
            <person name="Saraiva M.J."/>
        </authorList>
    </citation>
    <scope>VARIANTS AMYLD1 ALA-69 AND GLN-109</scope>
</reference>
<reference key="85">
    <citation type="journal article" date="1992" name="J. Med. Genet.">
        <title>A new mutant transthyretin (Arg 10) associated with familial amyloid polyneuropathy.</title>
        <authorList>
            <person name="Uemichi T."/>
            <person name="Murrel J.R."/>
            <person name="Zeldenrust S."/>
            <person name="Benson M.D."/>
        </authorList>
    </citation>
    <scope>VARIANT AMYLD1 ARG-30</scope>
</reference>
<reference key="86">
    <citation type="journal article" date="1992" name="Neurology">
        <title>Familial amyloidotic polyneuropathy presenting with carpal tunnel syndrome and a new transthyretin mutation, asparagine 70.</title>
        <authorList>
            <person name="Izumoto S."/>
            <person name="Younger D."/>
            <person name="Hays A.P."/>
            <person name="Martone R.L."/>
            <person name="Smith R.T."/>
            <person name="Herbert J."/>
        </authorList>
    </citation>
    <scope>VARIANT AMYLD1 ASN-90</scope>
</reference>
<reference key="87">
    <citation type="journal article" date="1993" name="Biochem. Biophys. Res. Commun.">
        <title>A basic transthyretin variant (Glu61--&gt;Lys) causes familial amyloidotic polyneuropathy: protein and DNA sequencing and PCR-induced mutation restriction analysis.</title>
        <authorList>
            <person name="Shiomi K."/>
            <person name="Nakazato M."/>
            <person name="Matsukura S."/>
            <person name="Ohnishi A."/>
            <person name="Hatanaka H."/>
            <person name="Tsuji S."/>
            <person name="Murai Y."/>
            <person name="Kojima M."/>
            <person name="Kangawa K."/>
            <person name="Matsuo H."/>
        </authorList>
    </citation>
    <scope>VARIANT AMYLD1 LYS-81</scope>
</reference>
<reference key="88">
    <citation type="journal article" date="1993" name="Br. Heart J.">
        <title>Cardiac amyloidosis: a review and report of a new transthyretin (prealbumin) variant.</title>
        <authorList>
            <person name="Hesse A."/>
            <person name="Altland K."/>
            <person name="Linke R.P."/>
            <person name="Almeida M.R."/>
            <person name="Saraiva M.J.M."/>
            <person name="Steinmetz A."/>
            <person name="Maisch B."/>
        </authorList>
    </citation>
    <scope>VARIANT AMYLD1 LEU-88</scope>
</reference>
<reference key="89">
    <citation type="journal article" date="1993" name="Hum. Mutat.">
        <title>Transthyretin Ala-71: a new transthyretin variant in a Spanish family with familial amyloidotic polyneuropathy.</title>
        <authorList>
            <person name="Almeida M.R."/>
            <person name="Lopez-Andreu F."/>
            <person name="Munar-Ques M."/>
            <person name="Costa P.P."/>
            <person name="Saraiva M.J."/>
        </authorList>
    </citation>
    <scope>VARIANT AMYLD1 ALA-91</scope>
</reference>
<reference key="90">
    <citation type="journal article" date="1993" name="J. Med. Genet.">
        <title>A transthyretin variant (alanine 71) associated with familial amyloidotic polyneuropathy in a French family.</title>
        <authorList>
            <person name="Benson M.D. II"/>
            <person name="Turpin J.C."/>
            <person name="Lucotte G."/>
            <person name="Zeldenrust S."/>
            <person name="Lechevalier B."/>
            <person name="Benson M.D."/>
        </authorList>
    </citation>
    <scope>VARIANT AMYLD1 ALA-91</scope>
</reference>
<reference key="91">
    <citation type="journal article" date="1993" name="J. Rheumatol.">
        <title>Gly47Ala: a new transthyretin gene mutation in hereditary amyloidosis TTR-related.</title>
        <authorList>
            <person name="Ferlini A."/>
            <person name="Salvi F."/>
            <person name="Patrosso C."/>
            <person name="Fini S."/>
            <person name="Vezzoni P."/>
            <person name="Forbasco A."/>
        </authorList>
    </citation>
    <scope>VARIANT AMYLD1 ALA-67</scope>
</reference>
<reference key="92">
    <citation type="journal article" date="1994" name="Hum. Mutat.">
        <title>A double-variant transthyretin allele (Ser 6, Ile 33) in the Israeli patient 'SKO' with familial amyloidotic polyneuropathy.</title>
        <authorList>
            <person name="Jacobson D.R."/>
            <person name="Buxbaum J.N."/>
        </authorList>
    </citation>
    <scope>VARIANT SER-26</scope>
    <scope>VARIANT AMYLD1 ILE-53</scope>
</reference>
<reference key="93">
    <citation type="journal article" date="1994" name="Hum. Mutat.">
        <title>Transthyretin VAL107, a new variant associated with familial cardiac and neuropathic amyloidosis.</title>
        <authorList>
            <person name="Jacobson D."/>
            <person name="Gertz M.A."/>
            <person name="Buxbaum J.N."/>
        </authorList>
    </citation>
    <scope>VARIANT AMYLD1 VAL-127</scope>
</reference>
<reference key="94">
    <citation type="journal article" date="1994" name="J. Biol. Chem.">
        <title>The Ile-84--&gt;Ser amino acid substitution in transthyretin interferes with the interaction with plasma retinol-binding protein.</title>
        <authorList>
            <person name="Berni R."/>
            <person name="Malpeli G."/>
            <person name="Folli C."/>
            <person name="Murrell J.R."/>
            <person name="Liepnieks J.J."/>
            <person name="Benson M.D."/>
        </authorList>
    </citation>
    <scope>VARIANT SER-104</scope>
    <scope>RBP BINDING STUDIES</scope>
</reference>
<reference key="95">
    <citation type="journal article" date="1994" name="J. Med. Genet.">
        <title>Amyloid polyneuropathy in two German-American families: a new transthyretin variant (Val 107).</title>
        <authorList>
            <person name="Uemichi T."/>
            <person name="Gertz M.A."/>
            <person name="Benson M.D."/>
        </authorList>
    </citation>
    <scope>VARIANT AMYLD1 VAL-127</scope>
</reference>
<reference key="96">
    <citation type="journal article" date="1994" name="J. Neurol. Sci.">
        <title>Familial amyloidotic polyneuropathy with late-onset and well-preserved autonomic function: a Japanese kindred with novel mutant transthyretin (Ala97 to Gly).</title>
        <authorList>
            <person name="Yasuda T."/>
            <person name="Sobue G."/>
            <person name="Doyu M."/>
            <person name="Nakazato M."/>
            <person name="Shiomi K."/>
            <person name="Yanagi T."/>
            <person name="Mitsuma T."/>
        </authorList>
    </citation>
    <scope>VARIANT AMYLD1 GLY-117</scope>
</reference>
<reference key="97">
    <citation type="journal article" date="1994" name="Muscle Nerve">
        <title>Familial amyloid polyneuropathy in Taiwan: identification of transthyretin variant (Leu55--&gt;Pro).</title>
        <authorList>
            <person name="Yamamoto K."/>
            <person name="Hsu S.P."/>
            <person name="Yoshida K."/>
            <person name="Ikeda S."/>
            <person name="Nakazato M."/>
            <person name="Shiomi K."/>
            <person name="Cheng S.Y."/>
            <person name="Furihata K."/>
            <person name="Ueno I."/>
            <person name="Yanagisawa N."/>
        </authorList>
    </citation>
    <scope>VARIANT AMYLD1 PRO-75</scope>
</reference>
<reference key="98">
    <citation type="journal article" date="1994" name="Neurology">
        <title>Familial carpal tunnel syndrome due to amyloidogenic transthyretin His 114 variant.</title>
        <authorList>
            <person name="Murakami T."/>
            <person name="Tachibana S."/>
            <person name="Endo Y."/>
            <person name="Kawai R."/>
            <person name="Hara M."/>
            <person name="Tanase S."/>
            <person name="Ando M."/>
        </authorList>
    </citation>
    <scope>VARIANT CTS1 HIS-134</scope>
</reference>
<reference key="99">
    <citation type="journal article" date="1995" name="Brain">
        <title>Transthyretin gene analysis in European patients with suspected familial amyloid polyneuropathy.</title>
        <authorList>
            <person name="Reilly M.M."/>
            <person name="Adams D."/>
            <person name="Booth D.R."/>
            <person name="Davis M.B."/>
            <person name="Said G."/>
            <person name="Laubriat-Bianchin M."/>
            <person name="Pepys M.B."/>
            <person name="Thomas P.K."/>
            <person name="Harding A.E."/>
        </authorList>
    </citation>
    <scope>VARIANTS AMYLD1 MET-50; ASN-55; ALA-69; ARG-70; ALA-80; TYR-97 AND GLN-109</scope>
</reference>
<reference key="100">
    <citation type="journal article" date="1995" name="Circulation">
        <title>A novel variant of transthyretin, 59Thr--&gt;Lys, associated with autosomal dominant cardiac amyloidosis in an Italian family.</title>
        <authorList>
            <person name="Booth D.R."/>
            <person name="Tan S.Y."/>
            <person name="Hawkins P.N."/>
            <person name="Pepys M.B."/>
            <person name="Frustaci A."/>
        </authorList>
    </citation>
    <scope>VARIANT AMYLD1 LYS-79</scope>
</reference>
<reference key="101">
    <citation type="journal article" date="1996" name="Am. J. Pathol.">
        <title>Meningocerebrovascular amyloidosis associated with a novel transthyretin mis-sense mutation at codon 18 (TTRD 18G).</title>
        <authorList>
            <person name="Vidal R."/>
            <person name="Garzuly F."/>
            <person name="Budka H."/>
            <person name="Lalowski M."/>
            <person name="Linke R.P."/>
            <person name="Brittig F."/>
            <person name="Frangione B."/>
            <person name="Wisniewski T."/>
        </authorList>
    </citation>
    <scope>VARIANT AMYLD1 GLY-38</scope>
</reference>
<reference key="102">
    <citation type="journal article" date="1997" name="Ann. Neurol.">
        <title>Transthyretin amyloidosis: a new mutation associated with dementia.</title>
        <authorList>
            <person name="Petersen R.B."/>
            <person name="Goren H."/>
            <person name="Cohen M."/>
            <person name="Richardson S.L."/>
            <person name="Tresser N."/>
            <person name="Lynn A."/>
            <person name="Gali M."/>
            <person name="Estes M."/>
            <person name="Gambetti P."/>
        </authorList>
    </citation>
    <scope>VARIANT AMYLD1 GLY-50</scope>
</reference>
<reference key="103">
    <citation type="journal article" date="1997" name="Hum. Mutat.">
        <title>Transthyretin ILE20, a new variant associated with late-onset cardiac amyloidosis.</title>
        <authorList>
            <person name="Jacobson D.R."/>
            <person name="Pan T."/>
            <person name="Kyle R.A."/>
            <person name="Buxbaum J.N."/>
        </authorList>
    </citation>
    <scope>VARIANT AMYLD1 ILE-40</scope>
</reference>
<reference key="104">
    <citation type="journal article" date="1998" name="Am. J. Med. Genet.">
        <title>Novel transthyretin missense mutation (Thr34) in an Italian family with hereditary amyloidosis.</title>
        <authorList>
            <person name="Patrosso M.C."/>
            <person name="Salvi F."/>
            <person name="De Grandis D."/>
            <person name="Vezzoni P."/>
            <person name="Jacobson D.R."/>
            <person name="Ferlini A."/>
        </authorList>
    </citation>
    <scope>VARIANT AMYLD1 THR-54</scope>
</reference>
<reference key="105">
    <citation type="journal article" date="1998" name="Amyloid">
        <title>A novel variant of transthyretin (Glu42Asp) associated with sporadic late-onset cardiac amyloidosis.</title>
        <authorList>
            <person name="Dupuy O."/>
            <person name="Bletry O."/>
            <person name="Blanc A.S."/>
            <person name="Droz D."/>
            <person name="Viemont M."/>
            <person name="Delpech M."/>
            <person name="Grateau G."/>
        </authorList>
    </citation>
    <scope>VARIANT AMYLD1 ASP-62</scope>
</reference>
<reference key="106">
    <citation type="journal article" date="1998" name="Hum. Mutat.">
        <title>New transthyretin variants Ser 91 and Ser 116 associated with familial amyloidotic polyneuropathy.</title>
        <authorList>
            <person name="Misrahi A.M."/>
            <person name="Plante V."/>
            <person name="Lalu T."/>
            <person name="Serre I."/>
            <person name="Adams D."/>
            <person name="Lacroix D.C."/>
            <person name="Said G."/>
        </authorList>
    </citation>
    <scope>VARIANTS AMYLD1 SER-111 AND SER-136</scope>
</reference>
<reference key="107">
    <citation type="journal article" date="1998" name="Hum. Mutat.">
        <title>Transthyretin Ile73Val is associated with familial amyloidotic polyneuropathy in a Bangladeshi family.</title>
        <authorList>
            <person name="Booth D.R."/>
            <person name="Gillmore J.D."/>
            <person name="Persey M.R."/>
            <person name="Booth S.E."/>
            <person name="Cafferty K.D."/>
            <person name="Tennent G.A."/>
            <person name="Madhoo S."/>
            <person name="Cochrane S.W."/>
            <person name="Whitehead T.C."/>
            <person name="Pasvol G."/>
            <person name="Hawkins P.N."/>
        </authorList>
    </citation>
    <scope>VARIANT AMYLD1 VAL-93</scope>
</reference>
<reference key="108">
    <citation type="journal article" date="1998" name="Hum. Mutat.">
        <title>A new nonamyloid transthyretin variant, G101S, detected by electrospray ionization/mass spectrometry.</title>
        <authorList>
            <person name="Kishikawa M."/>
            <person name="Nakanishi T."/>
            <person name="Miyazaki A."/>
            <person name="Hatanaka M."/>
            <person name="Shimizu A."/>
            <person name="Tamoto S."/>
            <person name="Ohsawa N."/>
            <person name="Hayashi H."/>
            <person name="Kanai M."/>
        </authorList>
    </citation>
    <scope>VARIANT SER-121</scope>
    <scope>IDENTIFICATION BY MASS SPECTROMETRY</scope>
</reference>
<reference key="109">
    <citation type="journal article" date="1998" name="Neurology">
        <title>Transthyretin amyloidosis (serine 44) with headache, hearing loss, and peripheral neuropathy.</title>
        <authorList>
            <person name="Klein C.J."/>
            <person name="Nakumura M."/>
            <person name="Jacobson D.R."/>
            <person name="Lacy M.Q."/>
            <person name="Benson M.D."/>
            <person name="Petersen R.C."/>
        </authorList>
    </citation>
    <scope>VARIANT SER-64</scope>
</reference>
<reference key="110">
    <citation type="journal article" date="1999" name="Amyloid">
        <title>A new amyloidogenic transthyretin variant (Val122Ala) found in a compound heterozygous patient.</title>
        <authorList>
            <person name="Theberge R."/>
            <person name="Connors L."/>
            <person name="Skare J."/>
            <person name="Skinner M."/>
            <person name="Falk R.H."/>
            <person name="Costello C.E."/>
        </authorList>
    </citation>
    <scope>VARIANT AMYLD1 ALA-142</scope>
    <scope>VARIANT SER-26</scope>
    <scope>IDENTIFICATION BY MASS SPECTROMETRY</scope>
</reference>
<reference key="111">
    <citation type="journal article" date="1999" name="Amyloid">
        <title>A new transthyretin variant (Ser23Asn) associated with familial amyloidosis in a Portuguese patient.</title>
        <authorList>
            <person name="Connors L.H."/>
            <person name="Theberge R."/>
            <person name="Skare J."/>
            <person name="Costello C.E."/>
            <person name="Falk R.H."/>
            <person name="Skinner M."/>
        </authorList>
    </citation>
    <scope>VARIANT AMYLD1 ASN-43</scope>
    <scope>IDENTIFICATION BY MASS SPECTROMETRY</scope>
</reference>
<reference key="112">
    <citation type="journal article" date="1999" name="Amyloid">
        <title>Usefulness of MALDI/TOF mass spectrometry of immunoprecipitated serum variant transthyretin in the diagnosis of familial amyloid polyneuropathy.</title>
        <authorList>
            <person name="Tachibana N."/>
            <person name="Tokuda T."/>
            <person name="Yoshida K."/>
            <person name="Taketomi T."/>
            <person name="Nakazato M."/>
            <person name="Li Y.F."/>
            <person name="Masuda Y."/>
            <person name="Ikeda S."/>
        </authorList>
    </citation>
    <scope>VARIANTS AMYLD1 LEU-50; VAL-53; ALA-58; ARG-70; GLY-117 AND SER-117</scope>
    <scope>IDENTIFICATION BY MASS SPECTROMETRY</scope>
</reference>
<reference key="113">
    <citation type="journal article" date="1999" name="Biochem. Biophys. Res. Commun.">
        <title>A novel compound heterozygote (FAP ATTR Arg104His/ATTR Val30Met) with high serum transthyretin (TTR) and retinol binding protein (RBP) levels.</title>
        <authorList>
            <person name="Terazaki H."/>
            <person name="Ando Y."/>
            <person name="Misumi S."/>
            <person name="Nakamura M."/>
            <person name="Ando E."/>
            <person name="Matsunaga N."/>
            <person name="Shoji S."/>
            <person name="Okuyama M."/>
            <person name="Ideta H."/>
            <person name="Nakagawa K."/>
            <person name="Ishizaki T."/>
            <person name="Ando M."/>
            <person name="Saraiva M.J."/>
        </authorList>
    </citation>
    <scope>VARIANT HIS-124</scope>
    <scope>IDENTIFICATION BY MASS SPECTROMETRY</scope>
</reference>
<reference key="114">
    <citation type="journal article" date="1999" name="Brain">
        <title>Transthyretin Leu12Pro is associated with systemic, neuropathic and leptomeningeal amyloidosis.</title>
        <authorList>
            <person name="Brett M."/>
            <person name="Persey M.R."/>
            <person name="Reilly M.M."/>
            <person name="Revesz T."/>
            <person name="Booth D.R."/>
            <person name="Booth S.E."/>
            <person name="Hawkins P.N."/>
            <person name="Pepys M.B."/>
            <person name="Morgan-Hughes J.A."/>
        </authorList>
    </citation>
    <scope>VARIANT AMYLD1 PRO-32</scope>
</reference>
<reference key="115">
    <citation type="journal article" date="1999" name="Hum. Hered.">
        <title>Identification of a new transthyretin variant (Ile49) in familial amyloidotic polyneuropathy using electrospray ionization mass spectrometry and nonisotopic RNase cleavage assay.</title>
        <authorList>
            <person name="Nakamura M."/>
            <person name="Yamashita T."/>
            <person name="Ando Y."/>
            <person name="Hamidi Asl K."/>
            <person name="Tashima K."/>
            <person name="Ohlsson P."/>
            <person name="Kususe Y."/>
            <person name="Benson M.D."/>
        </authorList>
    </citation>
    <scope>VARIANT AMYLD1 ILE-69</scope>
    <scope>IDENTIFICATION BY MASS SPECTROMETRY</scope>
</reference>
<reference key="116">
    <citation type="journal article" date="2000" name="Amyloid">
        <title>A novel variant of transthyretin (Glu89Lys) associated with familial amyloidotic polyneuropathy.</title>
        <authorList>
            <person name="Nakamura M."/>
            <person name="Hamidi Asl K."/>
            <person name="Benson M.D."/>
        </authorList>
    </citation>
    <scope>VARIANT AMYLD1 LYS-109</scope>
</reference>
<reference key="117">
    <citation type="journal article" date="2000" name="Amyloid">
        <title>Heart failure caused by a novel amyloidogenic mutation of the transthyretin gene: ATTR Ala45Ser.</title>
        <authorList>
            <person name="Janunger T."/>
            <person name="Anan I."/>
            <person name="Holmgren G."/>
            <person name="Lovheim O."/>
            <person name="Ohlsson P.I."/>
            <person name="Suhr O.B."/>
            <person name="Tashima K."/>
        </authorList>
    </citation>
    <scope>VARIANT AMYLD1 SER-65</scope>
    <scope>IDENTIFICATION BY MASS SPECTROMETRY</scope>
</reference>
<reference key="118">
    <citation type="journal article" date="2000" name="Muscle Nerve">
        <title>New transthyretin mutation V28M in a Portuguese kindred with amyloid polyneuropathy.</title>
        <authorList>
            <person name="de Carvalho M."/>
            <person name="Moreira P."/>
            <person name="Evangelista T."/>
            <person name="Ducla-Soares J.L."/>
            <person name="Bento M."/>
            <person name="Fernandes R."/>
            <person name="Saraiva M.J."/>
        </authorList>
    </citation>
    <scope>VARIANT AMYLD1 MET-48</scope>
</reference>
<reference key="119">
    <citation type="journal article" date="2001" name="Neurology">
        <title>Recurrent subarachnoid hemorrhage associated with a new transthyretin variant (Gly53Glu).</title>
        <authorList>
            <person name="Ellie E."/>
            <person name="Camou F."/>
            <person name="Vital A."/>
            <person name="Rummens C."/>
            <person name="Grateau G."/>
            <person name="Delpech M."/>
            <person name="Valleix S."/>
        </authorList>
    </citation>
    <scope>VARIANT AMYLD1 GLU-73</scope>
</reference>
<reference key="120">
    <citation type="journal article" date="2002" name="Amyloid">
        <title>A new transthyretin variant Leu55Gln in a patient with systemic amyloidosis.</title>
        <authorList>
            <person name="Yazaki M."/>
            <person name="Varga J."/>
            <person name="Dyck P.J."/>
            <person name="Benson M.D."/>
        </authorList>
    </citation>
    <scope>VARIANT AMYLD1 GLN-75</scope>
</reference>
<reference key="121">
    <citation type="journal article" date="2002" name="Anal. Chem.">
        <title>Characterization of transthyretin variants in familial transthyretin amyloidosis by mass spectrometric peptide mapping and DNA sequence analysis.</title>
        <authorList>
            <person name="Lim A."/>
            <person name="Prokaeva T."/>
            <person name="McComb M.E."/>
            <person name="O'Connor P.B."/>
            <person name="Theberge R."/>
            <person name="Connors L.H."/>
            <person name="Skinner M."/>
            <person name="Costello C.E."/>
        </authorList>
    </citation>
    <scope>VARIANTS SER-26 AND MET-139</scope>
    <scope>VARIANTS AMYLD1 ALA-58; LEU-61; SER-64 AND LEU-84</scope>
    <scope>IDENTIFICATION BY MASS SPECTROMETRY</scope>
</reference>
<reference key="122">
    <citation type="journal article" date="2002" name="N. Engl. J. Med.">
        <title>Misdiagnosis of hereditary amyloidosis as AL (primary) amyloidosis.</title>
        <authorList>
            <person name="Lachmann H.J."/>
            <person name="Booth D.R."/>
            <person name="Booth S.E."/>
            <person name="Bybee A."/>
            <person name="Gilbertson J.A."/>
            <person name="Gillmore J.D."/>
            <person name="Pepys M.B."/>
            <person name="Hawkins P.N."/>
        </authorList>
    </citation>
    <scope>VARIANTS AMYLD1 MET-50; LEU-53; VAL-53; VAL-58; GLU-67; ALA-80; SER-140 AND ILE-142</scope>
</reference>
<reference key="123">
    <citation type="journal article" date="2003" name="Neurology">
        <title>Oculoleptomeningeal amyloidosis in a large kindred with a new transthyretin variant Tyr69His.</title>
        <authorList>
            <person name="Blevins G."/>
            <person name="Macaulay R."/>
            <person name="Harder S."/>
            <person name="Fladeland D."/>
            <person name="Yamashita T."/>
            <person name="Yazaki M."/>
            <person name="Hamidi Asl K."/>
            <person name="Benson M.D."/>
            <person name="Donat J.R."/>
        </authorList>
    </citation>
    <scope>VARIANT AMYLD1 HIS-89</scope>
</reference>
<reference key="124">
    <citation type="journal article" date="2003" name="Protein Sci.">
        <title>Identification of S-sulfonation and S-thiolation of a novel transthyretin Phe33Cys variant from a patient diagnosed with familial transthyretin amyloidosis.</title>
        <authorList>
            <person name="Lim A."/>
            <person name="Prokaeva T."/>
            <person name="McComb M.E."/>
            <person name="Connors L.H."/>
            <person name="Skinner M."/>
            <person name="Costello C.E."/>
        </authorList>
    </citation>
    <scope>VARIANT CYS-53</scope>
    <scope>IDENTIFICATION BY MASS SPECTROMETRY</scope>
</reference>
<reference key="125">
    <citation type="journal article" date="2004" name="Am. J. Med. Genet. A">
        <title>A severe form of amyloidotic polyneuropathy in a Costa Rican family with a rare transthyretin mutation (Glu54Lys).</title>
        <authorList>
            <person name="Busse A."/>
            <person name="Sanchez M.A."/>
            <person name="Monterroso V."/>
            <person name="Alvarado M.V."/>
            <person name="Leon P."/>
        </authorList>
    </citation>
    <scope>VARIANT AMYLD1 LYS-74</scope>
</reference>
<reference key="126">
    <citation type="journal article" date="2004" name="Amyloid">
        <title>An unusual transthyretin gene missense mutation (TTR Phe33Val) linked to familial amyloidotic polyneuropathy.</title>
        <authorList>
            <person name="Frigerio R."/>
            <person name="Fabrizi G.M."/>
            <person name="Ferrarini M."/>
            <person name="Cavallaro T."/>
            <person name="Brighina L."/>
            <person name="Santoro P."/>
            <person name="Agostoni E."/>
            <person name="Cavaletti G."/>
            <person name="Rizzuto N."/>
            <person name="Ferrarese C."/>
        </authorList>
    </citation>
    <scope>VARIANT AMYLD1 VAL-53</scope>
</reference>
<reference key="127">
    <citation type="journal article" date="2004" name="Clin. Chem.">
        <title>Identification of transthyretin variants by sequential proteomic and genomic analysis.</title>
        <authorList>
            <person name="Bergen H.R. III"/>
            <person name="Zeldenrust S.R."/>
            <person name="Butz M.L."/>
            <person name="Snow D.S."/>
            <person name="Dyck P.J."/>
            <person name="Dyck P.J.B."/>
            <person name="Klein C.J."/>
            <person name="O'Brien J.F."/>
            <person name="Thibodeau S.N."/>
            <person name="Muddiman D.C."/>
        </authorList>
    </citation>
    <scope>VARIANTS SER-26; CYS-53 AND ALA-114</scope>
    <scope>VARIANTS AMYLD1 GLU-67; HIS-78; ALA-80 AND TYR-97</scope>
    <scope>IDENTIFICATION BY MASS SPECTROMETRY</scope>
</reference>
<reference key="128">
    <citation type="journal article" date="2007" name="Amyloid">
        <title>A new transthyretin variant (Glu61Gly) associated with cardiomyopathy.</title>
        <authorList>
            <person name="Rosenzweig M."/>
            <person name="Skinner M."/>
            <person name="Prokaeva T."/>
            <person name="Theberge R."/>
            <person name="Costello C."/>
            <person name="Drachman B.M."/>
            <person name="Connors L.H."/>
        </authorList>
    </citation>
    <scope>VARIANT AMYLD1 GLY-81</scope>
</reference>
<reference key="129">
    <citation type="journal article" date="2007" name="Amyloid">
        <title>A novel type of familial transthyretin amyloidosis, ATTR Asn124Ser, with co-localization of kappa light chains.</title>
        <authorList>
            <person name="Bergstroem J."/>
            <person name="Patrosso M.C."/>
            <person name="Colussi G."/>
            <person name="Salvadore M."/>
            <person name="Penco S."/>
            <person name="Lando G."/>
            <person name="Marocchi A."/>
            <person name="Ueda A."/>
            <person name="Nakamura M."/>
            <person name="Ando Y."/>
        </authorList>
    </citation>
    <scope>VARIANT AMYLD1 SER-144</scope>
</reference>
<reference key="130">
    <citation type="journal article" date="2007" name="Electrophoresis">
        <title>Genetic microheterogeneity of human transthyretin detected by IEF.</title>
        <authorList>
            <person name="Altland K."/>
            <person name="Benson M.D."/>
            <person name="Costello C.E."/>
            <person name="Ferlini A."/>
            <person name="Hazenberg B.P.C."/>
            <person name="Hund E."/>
            <person name="Kristen A.V."/>
            <person name="Linke R.P."/>
            <person name="Merlini G."/>
            <person name="Salvi F."/>
            <person name="Saraiva M.J."/>
            <person name="Singer R."/>
            <person name="Skinner M."/>
            <person name="Winter P."/>
        </authorList>
    </citation>
    <scope>VARIANTS AMYLD1 PRO-32; ILE-40; SER-44; ALA-50; MET-50; LEU-53; VAL-53; PRO-56; THR-65; ALA-67; ALA-69; ILE-69; ALA-80; LEU-84; LEU-88; ALA-91; TYR-97; PHE-98; SER-104; ASN-104; THR-104; ALA-114; GLY-117; ASN-126; MET-127; VAL-127; MET-131 AND ILE-142</scope>
    <scope>VARIANTS ILE-33; SER-121 AND THR-129</scope>
    <scope>VARIANT CHICAGO MET-139</scope>
</reference>
<reference key="131">
    <citation type="journal article" date="2007" name="Eur. J. Clin. Invest.">
        <title>Familial amyloidosis in a large Spanish kindred resulting from a D38V mutation in the transthyretin gene.</title>
        <authorList>
            <person name="Augustin S."/>
            <person name="Llige D."/>
            <person name="Andreu A."/>
            <person name="Gonzalez A."/>
            <person name="Genesca J."/>
        </authorList>
    </citation>
    <scope>VARIANT AMYLD1 VAL-58</scope>
</reference>
<reference key="132">
    <citation type="journal article" date="2013" name="J. Am. Acad. Dermatol.">
        <title>Delayed diagnosis of transthyretin amyloidosis with a novel mutation (c.210T&gt;A) in the transthyretin gene.</title>
        <authorList>
            <person name="Dekmezian M.S."/>
            <person name="Tschen J.A."/>
            <person name="Cho-Vega J.H."/>
        </authorList>
    </citation>
    <scope>VARIANT AMYLD1 ARG-70</scope>
</reference>
<feature type="signal peptide" evidence="25 36 73 78 81 82">
    <location>
        <begin position="1"/>
        <end position="20"/>
    </location>
</feature>
<feature type="chain" id="PRO_0000035755" description="Transthyretin">
    <location>
        <begin position="21"/>
        <end position="147"/>
    </location>
</feature>
<feature type="binding site" evidence="18 108">
    <location>
        <position position="35"/>
    </location>
    <ligand>
        <name>L-thyroxine</name>
        <dbReference type="ChEBI" id="CHEBI:58448"/>
    </ligand>
</feature>
<feature type="binding site" evidence="18 108">
    <location>
        <position position="74"/>
    </location>
    <ligand>
        <name>L-thyroxine</name>
        <dbReference type="ChEBI" id="CHEBI:58448"/>
    </ligand>
</feature>
<feature type="binding site" evidence="18 108">
    <location>
        <position position="137"/>
    </location>
    <ligand>
        <name>L-thyroxine</name>
        <dbReference type="ChEBI" id="CHEBI:58448"/>
    </ligand>
</feature>
<feature type="modified residue" description="Sulfocysteine" evidence="51 109">
    <location>
        <position position="30"/>
    </location>
</feature>
<feature type="modified residue" description="4-carboxyglutamate; in a patient with Moyamoya disease" evidence="59">
    <location>
        <position position="62"/>
    </location>
</feature>
<feature type="modified residue" description="Phosphoserine" evidence="1">
    <location>
        <position position="72"/>
    </location>
</feature>
<feature type="glycosylation site" description="N-linked (GlcNAc...) asparagine" evidence="48 63">
    <location>
        <position position="118"/>
    </location>
</feature>
<feature type="sequence variant" id="VAR_007546" description="In dbSNP:rs1800458." evidence="5 21 40 79 88">
    <original>G</original>
    <variation>S</variation>
    <location>
        <position position="26"/>
    </location>
</feature>
<feature type="sequence variant" id="VAR_007547" description="In AMYLD1; amyloid polyneuropathy; dbSNP:rs121918083." evidence="31">
    <original>C</original>
    <variation>R</variation>
    <location>
        <position position="30"/>
    </location>
</feature>
<feature type="sequence variant" id="VAR_038959" description="In AMYLD1; dbSNP:rs121918094." evidence="4 54">
    <original>L</original>
    <variation>P</variation>
    <location>
        <position position="32"/>
    </location>
</feature>
<feature type="sequence variant" id="VAR_038960" evidence="54">
    <original>M</original>
    <variation>I</variation>
    <location>
        <position position="33"/>
    </location>
</feature>
<feature type="sequence variant" id="VAR_007548" description="In AMYLD1; amyloid polyneuropathy.">
    <original>D</original>
    <variation>E</variation>
    <location>
        <position position="38"/>
    </location>
</feature>
<feature type="sequence variant" id="VAR_007549" description="In AMYLD1; leptomeningeal amyloidosis; leads to unfolding and exposure of N-118 to glycosylation by STT3B and subsequent degradation by the ERAD pathway; dbSNP:rs121918098." evidence="63 99">
    <original>D</original>
    <variation>G</variation>
    <location>
        <position position="38"/>
    </location>
</feature>
<feature type="sequence variant" id="VAR_007550" description="In AMYLD1; late-onset amyloid polyneuropathy with carpal tunnel syndrome; dbSNP:rs121918093." evidence="54 100">
    <original>V</original>
    <variation>I</variation>
    <location>
        <position position="40"/>
    </location>
</feature>
<feature type="sequence variant" id="VAR_038961" description="In AMYLD1." evidence="8">
    <original>S</original>
    <variation>N</variation>
    <location>
        <position position="43"/>
    </location>
</feature>
<feature type="sequence variant" id="VAR_007551" description="In AMYLD1; amyloid polyneuropathy; dbSNP:rs11541790." evidence="54">
    <original>P</original>
    <variation>S</variation>
    <location>
        <position position="44"/>
    </location>
</feature>
<feature type="sequence variant" id="VAR_010658" description="In AMYLD1; amyloid polyneuropathy." evidence="16">
    <original>V</original>
    <variation>M</variation>
    <location>
        <position position="48"/>
    </location>
</feature>
<feature type="sequence variant" id="VAR_007552" description="In AMYLD1; amyloid polyneuropathy; dbSNP:rs79977247." evidence="41 54">
    <original>V</original>
    <variation>A</variation>
    <location>
        <position position="50"/>
    </location>
</feature>
<feature type="sequence variant" id="VAR_038962" description="In AMYLD1; dbSNP:rs79977247." evidence="101">
    <original>V</original>
    <variation>G</variation>
    <location>
        <position position="50"/>
    </location>
</feature>
<feature type="sequence variant" id="VAR_007553" description="In AMYLD1; amyloid polyneuropathy; dbSNP:rs28933979." evidence="10 37">
    <original>V</original>
    <variation>L</variation>
    <location>
        <position position="50"/>
    </location>
</feature>
<feature type="sequence variant" id="VAR_007554" description="In AMYLD1; amyloid polyneuropathy; by far the most frequent mutation; dbSNP:rs28933979." evidence="22 36 54 72 77 81 82 83 97 98">
    <original>V</original>
    <variation>M</variation>
    <location>
        <position position="50"/>
    </location>
</feature>
<feature type="sequence variant" id="VAR_038963" description="In a patient with amyloidosis." evidence="28 40">
    <original>F</original>
    <variation>C</variation>
    <location>
        <position position="53"/>
    </location>
</feature>
<feature type="sequence variant" id="VAR_007555" description="In AMYLD1; Jewish 'SKO' amyloid polyneuropathy; dbSNP:rs121918068." evidence="80 88">
    <original>F</original>
    <variation>I</variation>
    <location>
        <position position="53"/>
    </location>
</feature>
<feature type="sequence variant" id="VAR_007556" description="In AMYLD1; amyloid polyneuropathy; dbSNP:rs121918068." evidence="22 54 64 67">
    <original>F</original>
    <variation>L</variation>
    <location>
        <position position="53"/>
    </location>
</feature>
<feature type="sequence variant" id="VAR_038964" description="In AMYLD1; amyloid polyneuropathy." evidence="10 22 42 54">
    <original>F</original>
    <variation>V</variation>
    <location>
        <position position="53"/>
    </location>
</feature>
<feature type="sequence variant" id="VAR_038965" description="In AMYLD1." evidence="102">
    <original>R</original>
    <variation>T</variation>
    <location>
        <position position="54"/>
    </location>
</feature>
<feature type="sequence variant" id="VAR_038966" description="In AMYLD1; amyloid polyneuropathy." evidence="83">
    <original>K</original>
    <variation>N</variation>
    <location>
        <position position="55"/>
    </location>
</feature>
<feature type="sequence variant" id="VAR_007557" description="In AMYLD1; amyloid polyneuropathy; dbSNP:rs121918077." evidence="54">
    <original>A</original>
    <variation>P</variation>
    <location>
        <position position="56"/>
    </location>
</feature>
<feature type="sequence variant" id="VAR_038967" description="In AMYLD1." evidence="10 21">
    <original>D</original>
    <variation>A</variation>
    <location>
        <position position="58"/>
    </location>
</feature>
<feature type="sequence variant" id="VAR_038968" description="In AMYLD1." evidence="22 56">
    <original>D</original>
    <variation>V</variation>
    <location>
        <position position="58"/>
    </location>
</feature>
<feature type="sequence variant" id="VAR_038969" description="In AMYLD1." evidence="21">
    <original>W</original>
    <variation>L</variation>
    <location>
        <position position="61"/>
    </location>
</feature>
<feature type="sequence variant" id="VAR_038970" description="In AMYLD1; dbSNP:rs11541796." evidence="2">
    <original>E</original>
    <variation>D</variation>
    <location>
        <position position="62"/>
    </location>
</feature>
<feature type="sequence variant" id="VAR_007558" description="In AMYLD1; amyloid polyneuropathy; dbSNP:rs11541796." evidence="70 87">
    <original>E</original>
    <variation>G</variation>
    <location>
        <position position="62"/>
    </location>
</feature>
<feature type="sequence variant" id="VAR_038971" description="In AMYLD1; dbSNP:rs104894665." evidence="21 104">
    <original>F</original>
    <variation>S</variation>
    <location>
        <position position="64"/>
    </location>
</feature>
<feature type="sequence variant" id="VAR_007559" description="In AMYLD1; amyloid cardiomyopathy; dbSNP:rs730881169.">
    <original>A</original>
    <variation>D</variation>
    <location>
        <position position="65"/>
    </location>
</feature>
<feature type="sequence variant" id="VAR_038972" description="In AMYLD1." evidence="15">
    <original>A</original>
    <variation>S</variation>
    <location>
        <position position="65"/>
    </location>
</feature>
<feature type="sequence variant" id="VAR_007560" description="In AMYLD1; amyloid cardiomyopathy; dbSNP:rs121918078." evidence="43 54">
    <original>A</original>
    <variation>T</variation>
    <location>
        <position position="65"/>
    </location>
</feature>
<feature type="sequence variant" id="VAR_007561" description="In AMYLD1; amyloid polyneuropathy; dbSNP:rs121918090." evidence="54 105">
    <original>G</original>
    <variation>A</variation>
    <location>
        <position position="67"/>
    </location>
</feature>
<feature type="sequence variant" id="VAR_038973" description="In AMYLD1." evidence="22 40">
    <original>G</original>
    <variation>E</variation>
    <location>
        <position position="67"/>
    </location>
</feature>
<feature type="sequence variant" id="VAR_007562" description="In AMYLD1; amyloid polyneuropathy; dbSNP:rs387906523." evidence="52">
    <original>G</original>
    <variation>R</variation>
    <location>
        <position position="67"/>
    </location>
</feature>
<feature type="sequence variant" id="VAR_007563" description="In AMYLD1; amyloid polyneuropathy with carpal tunnel syndrome.">
    <original>G</original>
    <variation>V</variation>
    <location>
        <position position="67"/>
    </location>
</feature>
<feature type="sequence variant" id="VAR_007564" description="In AMYLD1; amyloid polyneuropathy; dbSNP:rs121918081." evidence="29 54 83">
    <original>T</original>
    <variation>A</variation>
    <location>
        <position position="69"/>
    </location>
</feature>
<feature type="sequence variant" id="VAR_038974" description="In AMYLD1." evidence="7 54">
    <original>T</original>
    <variation>I</variation>
    <location>
        <position position="69"/>
    </location>
</feature>
<feature type="sequence variant" id="VAR_007565" description="In AMYLD1; amyloid cardiomyopathy; dbSNP:rs121918080." evidence="38">
    <original>S</original>
    <variation>I</variation>
    <location>
        <position position="70"/>
    </location>
</feature>
<feature type="sequence variant" id="VAR_007566" description="In AMYLD1; amyloid polyneuropathy; dbSNP:rs386134269." evidence="10 69 70 83">
    <original>S</original>
    <variation>R</variation>
    <location>
        <position position="70"/>
    </location>
</feature>
<feature type="sequence variant" id="VAR_007567" description="In AMYLD1; amyloid polyneuropathy.">
    <original>S</original>
    <variation>P</variation>
    <location>
        <position position="72"/>
    </location>
</feature>
<feature type="sequence variant" id="VAR_038975" description="In AMYLD1; dbSNP:rs121918097." evidence="19">
    <original>G</original>
    <variation>E</variation>
    <location>
        <position position="73"/>
    </location>
</feature>
<feature type="sequence variant" id="VAR_007568" description="In AMYLD1; amyloid polyneuropathy.">
    <original>E</original>
    <variation>G</variation>
    <location>
        <position position="74"/>
    </location>
</feature>
<feature type="sequence variant" id="VAR_038976" description="In AMYLD1; early-onset amyloid polyneuropathy." evidence="39">
    <original>E</original>
    <variation>K</variation>
    <location>
        <position position="74"/>
    </location>
</feature>
<feature type="sequence variant" id="VAR_007569" description="In AMYLD1; amyloid polyneuropathy; dbSNP:rs121918079." evidence="30 50 85 103">
    <original>L</original>
    <variation>P</variation>
    <location>
        <position position="75"/>
    </location>
</feature>
<feature type="sequence variant" id="VAR_038977" description="In AMYLD1." evidence="24">
    <original>L</original>
    <variation>Q</variation>
    <location>
        <position position="75"/>
    </location>
</feature>
<feature type="sequence variant" id="VAR_007570" description="In AMYLD1; amyloid polyneuropathy; dbSNP:rs121918069." evidence="40">
    <original>L</original>
    <variation>H</variation>
    <location>
        <position position="78"/>
    </location>
</feature>
<feature type="sequence variant" id="VAR_007571" description="In AMYLD1; amyloid polyneuropathy; dbSNP:rs121918069." evidence="49">
    <original>L</original>
    <variation>R</variation>
    <location>
        <position position="78"/>
    </location>
</feature>
<feature type="sequence variant" id="VAR_007572" description="In AMYLD1; amyloid cardiomyopathy; dbSNP:rs730881163." evidence="84">
    <original>T</original>
    <variation>K</variation>
    <location>
        <position position="79"/>
    </location>
</feature>
<feature type="sequence variant" id="VAR_007573" description="In AMYLD1; amyloid polyneuropathy and cardiomyopathy; dbSNP:rs121918070." evidence="22 40 54 83">
    <original>T</original>
    <variation>A</variation>
    <location>
        <position position="80"/>
    </location>
</feature>
<feature type="sequence variant" id="VAR_038978" description="In AMYLD1." evidence="53">
    <original>E</original>
    <variation>G</variation>
    <location>
        <position position="81"/>
    </location>
</feature>
<feature type="sequence variant" id="VAR_007574" description="In AMYLD1; amyloid polyneuropathy; dbSNP:rs121918086." evidence="96">
    <original>E</original>
    <variation>K</variation>
    <location>
        <position position="81"/>
    </location>
</feature>
<feature type="sequence variant" id="VAR_007575" description="In AMYLD1; amyloid polyneuropathy; dbSNP:rs121918091." evidence="21 54 67">
    <original>F</original>
    <variation>L</variation>
    <location>
        <position position="84"/>
    </location>
</feature>
<feature type="sequence variant" id="VAR_007576" description="In AMYLD1; amyloid cardiomyopathy; dbSNP:rs121918085." evidence="54 89">
    <original>I</original>
    <variation>L</variation>
    <location>
        <position position="88"/>
    </location>
</feature>
<feature type="sequence variant" id="VAR_007577" description="In AMYLD1; leptomeningeal amyloidosis; vitreous amyloid in some patients; dbSNP:rs121918100." evidence="26">
    <original>Y</original>
    <variation>H</variation>
    <location>
        <position position="89"/>
    </location>
</feature>
<feature type="sequence variant" id="VAR_007578" description="In AMYLD1; amyloid polyneuropathy; dbSNP:rs267607160." evidence="32">
    <original>K</original>
    <variation>N</variation>
    <location>
        <position position="90"/>
    </location>
</feature>
<feature type="sequence variant" id="VAR_007579" description="In AMYLD1; amyloid polyneuropathy; dbSNP:rs121918084." evidence="54 92 94">
    <original>V</original>
    <variation>A</variation>
    <location>
        <position position="91"/>
    </location>
</feature>
<feature type="sequence variant" id="VAR_007580" description="In AMYLD1; amyloid polyneuropathy." evidence="13">
    <original>I</original>
    <variation>V</variation>
    <location>
        <position position="93"/>
    </location>
</feature>
<feature type="sequence variant" id="VAR_007581" description="In dbSNP:rs730881164.">
    <original>D</original>
    <variation>H</variation>
    <location>
        <position position="94"/>
    </location>
</feature>
<feature type="sequence variant" id="VAR_007582" description="In AMYLD1; amyloid polyneuropathy; dbSNP:rs121918071." evidence="40 54 71 83">
    <original>S</original>
    <variation>Y</variation>
    <location>
        <position position="97"/>
    </location>
</feature>
<feature type="sequence variant" id="VAR_038979" description="In AMYLD1; dbSNP:rs958191819." evidence="50 54">
    <original>Y</original>
    <variation>F</variation>
    <location>
        <position position="98"/>
    </location>
</feature>
<feature type="sequence variant" id="VAR_007583" description="In AMYLD1; vitrous amyloid." evidence="54">
    <original>I</original>
    <variation>N</variation>
    <location>
        <position position="104"/>
    </location>
</feature>
<feature type="sequence variant" id="VAR_007584" description="In AMYLD1; amyloid polyneuropathy; almost no RBP binding; dbSNP:rs121918072." evidence="54 76 91">
    <original>I</original>
    <variation>S</variation>
    <location>
        <position position="104"/>
    </location>
</feature>
<feature type="sequence variant" id="VAR_038980" description="In AMYLD1." evidence="54">
    <original>I</original>
    <variation>T</variation>
    <location>
        <position position="104"/>
    </location>
</feature>
<feature type="sequence variant" id="VAR_010659" description="In AMYLD1; amyloid polyneuropathy." evidence="14">
    <original>E</original>
    <variation>K</variation>
    <location>
        <position position="109"/>
    </location>
</feature>
<feature type="sequence variant" id="VAR_007585" description="In AMYLD1; amyloid polyneuropathy and cardiomyopathy; dbSNP:rs121918082." evidence="29 83">
    <original>E</original>
    <variation>Q</variation>
    <location>
        <position position="109"/>
    </location>
</feature>
<feature type="sequence variant" id="VAR_007586" description="In dbSNP:rs121918074." evidence="66 87">
    <original>H</original>
    <variation>N</variation>
    <location>
        <position position="110"/>
    </location>
</feature>
<feature type="sequence variant" id="VAR_007587" description="In AMYLD1; amyloid polyneuropathy." evidence="11">
    <original>A</original>
    <variation>S</variation>
    <location>
        <position position="111"/>
    </location>
</feature>
<feature type="sequence variant" id="VAR_038981" description="In a patient with amyloidosis." evidence="40 54">
    <original>V</original>
    <variation>A</variation>
    <location>
        <position position="114"/>
    </location>
</feature>
<feature type="sequence variant" id="VAR_007588" description="In AMYLD1; amyloid polyneuropathy; dbSNP:rs121918087." evidence="10 54 93">
    <original>A</original>
    <variation>G</variation>
    <location>
        <position position="117"/>
    </location>
</feature>
<feature type="sequence variant" id="VAR_038982" description="In AMYLD1; dbSNP:rs267607161." evidence="10">
    <original>A</original>
    <variation>S</variation>
    <location>
        <position position="117"/>
    </location>
</feature>
<feature type="sequence variant" id="VAR_007589" description="In dbSNP:rs755337715." evidence="12 54">
    <original>G</original>
    <variation>S</variation>
    <location>
        <position position="121"/>
    </location>
</feature>
<feature type="sequence variant" id="VAR_007590">
    <original>P</original>
    <variation>R</variation>
    <location>
        <position position="122"/>
    </location>
</feature>
<feature type="sequence variant" id="VAR_007591" description="In dbSNP:rs745834030.">
    <original>R</original>
    <variation>C</variation>
    <location>
        <position position="124"/>
    </location>
</feature>
<feature type="sequence variant" id="VAR_038983" description="In dbSNP:rs121918095." evidence="9 44">
    <original>R</original>
    <variation>H</variation>
    <location>
        <position position="124"/>
    </location>
</feature>
<feature type="sequence variant" id="VAR_038984" description="In AMYLD1; dbSNP:rs1456101911." evidence="54">
    <original>T</original>
    <variation>N</variation>
    <location>
        <position position="126"/>
    </location>
</feature>
<feature type="sequence variant" id="VAR_038985" description="In AMYLD1." evidence="54">
    <original>I</original>
    <variation>M</variation>
    <location>
        <position position="127"/>
    </location>
</feature>
<feature type="sequence variant" id="VAR_007592" description="In AMYLD1; amyloid polyneuropathy; dbSNP:rs121918089." evidence="54 86 90">
    <original>I</original>
    <variation>V</variation>
    <location>
        <position position="127"/>
    </location>
</feature>
<feature type="sequence variant" id="VAR_007593" description="In DTTRH; increased affinity for thyroxine; dbSNP:rs267607159." evidence="54 65">
    <original>A</original>
    <variation>T</variation>
    <location>
        <position position="129"/>
    </location>
</feature>
<feature type="sequence variant" id="VAR_007594" description="In AMYLD1; dbSNP:rs121918073." evidence="54">
    <original>L</original>
    <variation>M</variation>
    <location>
        <position position="131"/>
    </location>
</feature>
<feature type="sequence variant" id="VAR_007595" description="In AMYLD1; amyloid polyneuropathy; dbSNP:rs121918075." evidence="23 47 68">
    <original>Y</original>
    <variation>C</variation>
    <location>
        <position position="134"/>
    </location>
</feature>
<feature type="sequence variant" id="VAR_007598" description="In CTS1; amyloid deposit on carpal tunnel; patients show no other abnormalities; dbSNP:rs121918088." evidence="95">
    <original>Y</original>
    <variation>H</variation>
    <location>
        <position position="134"/>
    </location>
</feature>
<feature type="sequence variant" id="VAR_007596" description="In AMYLD1; amyloid polyneuropathy; dbSNP:rs730881167." evidence="11">
    <original>Y</original>
    <variation>S</variation>
    <location>
        <position position="136"/>
    </location>
</feature>
<feature type="sequence variant" id="VAR_007597" description="Requires 2 nucleotide substitutions." evidence="74">
    <original>Y</original>
    <variation>V</variation>
    <location>
        <position position="136"/>
    </location>
</feature>
<feature type="sequence variant" id="VAR_007599" description="In Chicago variant; dbSNP:rs28933981." evidence="21 54 60">
    <original>T</original>
    <variation>M</variation>
    <location>
        <position position="139"/>
    </location>
</feature>
<feature type="sequence variant" id="VAR_038986" description="In AMYLD1; dbSNP:rs876658108." evidence="22">
    <original>A</original>
    <variation>S</variation>
    <location>
        <position position="140"/>
    </location>
</feature>
<feature type="sequence variant" id="VAR_038987" description="In AMYLD1." evidence="5">
    <original>V</original>
    <variation>A</variation>
    <location>
        <position position="142"/>
    </location>
</feature>
<feature type="sequence variant" id="VAR_007600" description="In AMYLD1; dbSNP:rs76992529." evidence="22 54 73">
    <original>V</original>
    <variation>I</variation>
    <location>
        <position position="142"/>
    </location>
</feature>
<feature type="sequence variant" id="VAR_038988" description="In AMYLD1; uncertain significance; dbSNP:rs144965179." evidence="55">
    <original>N</original>
    <variation>S</variation>
    <location>
        <position position="144"/>
    </location>
</feature>
<feature type="mutagenesis site" description="Loss of tetramerization; when associated with M-130." evidence="20">
    <original>F</original>
    <variation>M</variation>
    <location>
        <position position="107"/>
    </location>
</feature>
<feature type="mutagenesis site" description="Loss of tetramerization; when associated with M-107." evidence="20">
    <original>L</original>
    <variation>M</variation>
    <location>
        <position position="130"/>
    </location>
</feature>
<feature type="sequence conflict" description="In Ref. 3; AAA98771." evidence="106" ref="3">
    <original>R</original>
    <variation>P</variation>
    <location>
        <position position="41"/>
    </location>
</feature>
<feature type="sequence conflict" description="In Ref. 12; CAG33189." evidence="106" ref="12">
    <original>E</original>
    <variation>D</variation>
    <location>
        <position position="147"/>
    </location>
</feature>
<feature type="turn" evidence="111">
    <location>
        <begin position="23"/>
        <end position="26"/>
    </location>
</feature>
<feature type="strand" evidence="110">
    <location>
        <begin position="32"/>
        <end position="38"/>
    </location>
</feature>
<feature type="turn" evidence="110">
    <location>
        <begin position="39"/>
        <end position="42"/>
    </location>
</feature>
<feature type="strand" evidence="110">
    <location>
        <begin position="49"/>
        <end position="55"/>
    </location>
</feature>
<feature type="turn" evidence="114">
    <location>
        <begin position="57"/>
        <end position="59"/>
    </location>
</feature>
<feature type="strand" evidence="110">
    <location>
        <begin position="61"/>
        <end position="68"/>
    </location>
</feature>
<feature type="strand" evidence="110">
    <location>
        <begin position="73"/>
        <end position="75"/>
    </location>
</feature>
<feature type="strand" evidence="112">
    <location>
        <begin position="77"/>
        <end position="80"/>
    </location>
</feature>
<feature type="turn" evidence="110">
    <location>
        <begin position="81"/>
        <end position="83"/>
    </location>
</feature>
<feature type="strand" evidence="110">
    <location>
        <begin position="86"/>
        <end position="93"/>
    </location>
</feature>
<feature type="helix" evidence="110">
    <location>
        <begin position="95"/>
        <end position="101"/>
    </location>
</feature>
<feature type="strand" evidence="110">
    <location>
        <begin position="107"/>
        <end position="118"/>
    </location>
</feature>
<feature type="strand" evidence="113">
    <location>
        <begin position="120"/>
        <end position="122"/>
    </location>
</feature>
<feature type="strand" evidence="110">
    <location>
        <begin position="124"/>
        <end position="132"/>
    </location>
</feature>
<feature type="strand" evidence="110">
    <location>
        <begin position="135"/>
        <end position="143"/>
    </location>
</feature>
<sequence>MASHRLLLLCLAGLVFVSEAGPTGTGESKCPLMVKVLDAVRGSPAINVAVHVFRKAADDTWEPFASGKTSESGELHGLTTEEEFVEGIYKVEIDTKSYWKALGISPFHEHAEVVFTANDSGPRRYTIAALLSPYSYSTTAVVTNPKE</sequence>
<protein>
    <recommendedName>
        <fullName>Transthyretin</fullName>
    </recommendedName>
    <alternativeName>
        <fullName>ATTR</fullName>
    </alternativeName>
    <alternativeName>
        <fullName>Prealbumin</fullName>
    </alternativeName>
    <alternativeName>
        <fullName>TBPA</fullName>
    </alternativeName>
</protein>
<dbReference type="EMBL" id="K02091">
    <property type="protein sequence ID" value="AAA60011.1"/>
    <property type="molecule type" value="mRNA"/>
</dbReference>
<dbReference type="EMBL" id="M10605">
    <property type="protein sequence ID" value="AAA60012.1"/>
    <property type="molecule type" value="mRNA"/>
</dbReference>
<dbReference type="EMBL" id="M11518">
    <property type="protein sequence ID" value="AAA98771.1"/>
    <property type="molecule type" value="Genomic_DNA"/>
</dbReference>
<dbReference type="EMBL" id="M11844">
    <property type="protein sequence ID" value="AAA60013.1"/>
    <property type="molecule type" value="Genomic_DNA"/>
</dbReference>
<dbReference type="EMBL" id="X59498">
    <property type="protein sequence ID" value="CAA42087.1"/>
    <property type="molecule type" value="mRNA"/>
</dbReference>
<dbReference type="EMBL" id="D00096">
    <property type="protein sequence ID" value="BAA00059.1"/>
    <property type="molecule type" value="mRNA"/>
</dbReference>
<dbReference type="EMBL" id="M15517">
    <property type="protein sequence ID" value="AAA60018.1"/>
    <property type="molecule type" value="Genomic_DNA"/>
</dbReference>
<dbReference type="EMBL" id="M15515">
    <property type="protein sequence ID" value="AAA60018.1"/>
    <property type="status" value="JOINED"/>
    <property type="molecule type" value="Genomic_DNA"/>
</dbReference>
<dbReference type="EMBL" id="M15516">
    <property type="protein sequence ID" value="AAA60018.1"/>
    <property type="status" value="JOINED"/>
    <property type="molecule type" value="Genomic_DNA"/>
</dbReference>
<dbReference type="EMBL" id="U19780">
    <property type="protein sequence ID" value="AAA73473.1"/>
    <property type="molecule type" value="mRNA"/>
</dbReference>
<dbReference type="EMBL" id="AF162690">
    <property type="protein sequence ID" value="AAD45014.1"/>
    <property type="molecule type" value="mRNA"/>
</dbReference>
<dbReference type="EMBL" id="AK312051">
    <property type="protein sequence ID" value="BAG34987.1"/>
    <property type="molecule type" value="mRNA"/>
</dbReference>
<dbReference type="EMBL" id="BT007189">
    <property type="protein sequence ID" value="AAP35853.1"/>
    <property type="molecule type" value="mRNA"/>
</dbReference>
<dbReference type="EMBL" id="CR456908">
    <property type="protein sequence ID" value="CAG33189.1"/>
    <property type="molecule type" value="mRNA"/>
</dbReference>
<dbReference type="EMBL" id="CH471088">
    <property type="protein sequence ID" value="EAX01264.1"/>
    <property type="molecule type" value="Genomic_DNA"/>
</dbReference>
<dbReference type="EMBL" id="BC005310">
    <property type="protein sequence ID" value="AAH05310.1"/>
    <property type="molecule type" value="mRNA"/>
</dbReference>
<dbReference type="EMBL" id="BC020791">
    <property type="protein sequence ID" value="AAH20791.1"/>
    <property type="molecule type" value="mRNA"/>
</dbReference>
<dbReference type="EMBL" id="S63185">
    <property type="protein sequence ID" value="AAD14937.2"/>
    <property type="molecule type" value="Genomic_DNA"/>
</dbReference>
<dbReference type="EMBL" id="S72385">
    <property type="protein sequence ID" value="AAD14098.1"/>
    <property type="molecule type" value="Genomic_DNA"/>
</dbReference>
<dbReference type="EMBL" id="M11714">
    <property type="protein sequence ID" value="AAA61181.1"/>
    <property type="molecule type" value="mRNA"/>
</dbReference>
<dbReference type="EMBL" id="M63285">
    <property type="protein sequence ID" value="AAA36784.1"/>
    <property type="molecule type" value="Genomic_DNA"/>
</dbReference>
<dbReference type="CCDS" id="CCDS11899.1"/>
<dbReference type="PIR" id="A91532">
    <property type="entry name" value="VBHU"/>
</dbReference>
<dbReference type="RefSeq" id="NP_000362.1">
    <property type="nucleotide sequence ID" value="NM_000371.4"/>
</dbReference>
<dbReference type="PDB" id="1BM7">
    <property type="method" value="X-ray"/>
    <property type="resolution" value="2.00 A"/>
    <property type="chains" value="A/B=21-147"/>
</dbReference>
<dbReference type="PDB" id="1BMZ">
    <property type="method" value="X-ray"/>
    <property type="resolution" value="2.00 A"/>
    <property type="chains" value="A/B=21-147"/>
</dbReference>
<dbReference type="PDB" id="1BZ8">
    <property type="method" value="X-ray"/>
    <property type="resolution" value="2.00 A"/>
    <property type="chains" value="A/B=21-147"/>
</dbReference>
<dbReference type="PDB" id="1BZD">
    <property type="method" value="X-ray"/>
    <property type="resolution" value="1.90 A"/>
    <property type="chains" value="A/B=21-147"/>
</dbReference>
<dbReference type="PDB" id="1BZE">
    <property type="method" value="X-ray"/>
    <property type="resolution" value="1.80 A"/>
    <property type="chains" value="A/B=21-147"/>
</dbReference>
<dbReference type="PDB" id="1DVQ">
    <property type="method" value="X-ray"/>
    <property type="resolution" value="2.00 A"/>
    <property type="chains" value="A/B=21-144"/>
</dbReference>
<dbReference type="PDB" id="1DVS">
    <property type="method" value="X-ray"/>
    <property type="resolution" value="2.00 A"/>
    <property type="chains" value="A/B=21-144"/>
</dbReference>
<dbReference type="PDB" id="1DVT">
    <property type="method" value="X-ray"/>
    <property type="resolution" value="1.90 A"/>
    <property type="chains" value="A/B=21-144"/>
</dbReference>
<dbReference type="PDB" id="1DVU">
    <property type="method" value="X-ray"/>
    <property type="resolution" value="1.90 A"/>
    <property type="chains" value="A/B=21-144"/>
</dbReference>
<dbReference type="PDB" id="1DVX">
    <property type="method" value="X-ray"/>
    <property type="resolution" value="2.00 A"/>
    <property type="chains" value="A/B=21-144"/>
</dbReference>
<dbReference type="PDB" id="1DVY">
    <property type="method" value="X-ray"/>
    <property type="resolution" value="1.90 A"/>
    <property type="chains" value="A/B=21-144"/>
</dbReference>
<dbReference type="PDB" id="1DVZ">
    <property type="method" value="X-ray"/>
    <property type="resolution" value="1.90 A"/>
    <property type="chains" value="A/B=21-144"/>
</dbReference>
<dbReference type="PDB" id="1E3F">
    <property type="method" value="X-ray"/>
    <property type="resolution" value="1.90 A"/>
    <property type="chains" value="A/B=21-147"/>
</dbReference>
<dbReference type="PDB" id="1E4H">
    <property type="method" value="X-ray"/>
    <property type="resolution" value="1.80 A"/>
    <property type="chains" value="A/B=21-147"/>
</dbReference>
<dbReference type="PDB" id="1E5A">
    <property type="method" value="X-ray"/>
    <property type="resolution" value="1.80 A"/>
    <property type="chains" value="A/B=21-147"/>
</dbReference>
<dbReference type="PDB" id="1ETA">
    <property type="method" value="X-ray"/>
    <property type="resolution" value="1.70 A"/>
    <property type="chains" value="1/2=21-147"/>
</dbReference>
<dbReference type="PDB" id="1ETB">
    <property type="method" value="X-ray"/>
    <property type="resolution" value="1.70 A"/>
    <property type="chains" value="1/2=21-147"/>
</dbReference>
<dbReference type="PDB" id="1F41">
    <property type="method" value="X-ray"/>
    <property type="resolution" value="1.30 A"/>
    <property type="chains" value="A/B=21-147"/>
</dbReference>
<dbReference type="PDB" id="1F86">
    <property type="method" value="X-ray"/>
    <property type="resolution" value="1.10 A"/>
    <property type="chains" value="A/B=30-144"/>
</dbReference>
<dbReference type="PDB" id="1FH2">
    <property type="method" value="X-ray"/>
    <property type="resolution" value="1.80 A"/>
    <property type="chains" value="A/B=21-147"/>
</dbReference>
<dbReference type="PDB" id="1FHN">
    <property type="method" value="X-ray"/>
    <property type="resolution" value="1.75 A"/>
    <property type="chains" value="A/B=21-147"/>
</dbReference>
<dbReference type="PDB" id="1G1O">
    <property type="method" value="X-ray"/>
    <property type="resolution" value="2.30 A"/>
    <property type="chains" value="A/B/C/D=21-147"/>
</dbReference>
<dbReference type="PDB" id="1GKO">
    <property type="method" value="X-ray"/>
    <property type="resolution" value="2.10 A"/>
    <property type="chains" value="A/B/C/D=21-147"/>
</dbReference>
<dbReference type="PDB" id="1ICT">
    <property type="method" value="X-ray"/>
    <property type="resolution" value="3.00 A"/>
    <property type="chains" value="A/B/C/D/E/F/G/H=21-147"/>
</dbReference>
<dbReference type="PDB" id="1III">
    <property type="method" value="X-ray"/>
    <property type="resolution" value="2.00 A"/>
    <property type="chains" value="A/B=21-147"/>
</dbReference>
<dbReference type="PDB" id="1IIK">
    <property type="method" value="X-ray"/>
    <property type="resolution" value="2.00 A"/>
    <property type="chains" value="A/B=21-147"/>
</dbReference>
<dbReference type="PDB" id="1IJN">
    <property type="method" value="X-ray"/>
    <property type="resolution" value="1.70 A"/>
    <property type="chains" value="A/B=21-147"/>
</dbReference>
<dbReference type="PDB" id="1QAB">
    <property type="method" value="X-ray"/>
    <property type="resolution" value="3.20 A"/>
    <property type="chains" value="A/B/C/D=21-147"/>
</dbReference>
<dbReference type="PDB" id="1QWH">
    <property type="method" value="X-ray"/>
    <property type="resolution" value="1.36 A"/>
    <property type="chains" value="A/B=31-147"/>
</dbReference>
<dbReference type="PDB" id="1RLB">
    <property type="method" value="X-ray"/>
    <property type="resolution" value="3.10 A"/>
    <property type="chains" value="A/B/C/D=21-147"/>
</dbReference>
<dbReference type="PDB" id="1SOK">
    <property type="method" value="X-ray"/>
    <property type="resolution" value="1.60 A"/>
    <property type="chains" value="A/B=21-147"/>
</dbReference>
<dbReference type="PDB" id="1SOQ">
    <property type="method" value="X-ray"/>
    <property type="resolution" value="2.10 A"/>
    <property type="chains" value="A/B/C/D=21-147"/>
</dbReference>
<dbReference type="PDB" id="1THA">
    <property type="method" value="X-ray"/>
    <property type="resolution" value="2.00 A"/>
    <property type="chains" value="A/B=21-147"/>
</dbReference>
<dbReference type="PDB" id="1THC">
    <property type="method" value="X-ray"/>
    <property type="resolution" value="2.30 A"/>
    <property type="chains" value="A/B=21-147"/>
</dbReference>
<dbReference type="PDB" id="1TLM">
    <property type="method" value="X-ray"/>
    <property type="resolution" value="1.90 A"/>
    <property type="chains" value="A/B=21-147"/>
</dbReference>
<dbReference type="PDB" id="1TSH">
    <property type="method" value="X-ray"/>
    <property type="resolution" value="1.70 A"/>
    <property type="chains" value="A/B=21-147"/>
</dbReference>
<dbReference type="PDB" id="1TT6">
    <property type="method" value="X-ray"/>
    <property type="resolution" value="1.80 A"/>
    <property type="chains" value="A/B=21-147"/>
</dbReference>
<dbReference type="PDB" id="1TTA">
    <property type="method" value="X-ray"/>
    <property type="resolution" value="1.70 A"/>
    <property type="chains" value="A/B=21-147"/>
</dbReference>
<dbReference type="PDB" id="1TTB">
    <property type="method" value="X-ray"/>
    <property type="resolution" value="1.70 A"/>
    <property type="chains" value="A/B=21-147"/>
</dbReference>
<dbReference type="PDB" id="1TTC">
    <property type="method" value="X-ray"/>
    <property type="resolution" value="1.70 A"/>
    <property type="chains" value="A/B=21-147"/>
</dbReference>
<dbReference type="PDB" id="1TTR">
    <property type="method" value="X-ray"/>
    <property type="resolution" value="1.90 A"/>
    <property type="chains" value="A/B=21-147"/>
</dbReference>
<dbReference type="PDB" id="1TYR">
    <property type="method" value="X-ray"/>
    <property type="resolution" value="1.80 A"/>
    <property type="chains" value="A/B=21-147"/>
</dbReference>
<dbReference type="PDB" id="1TZ8">
    <property type="method" value="X-ray"/>
    <property type="resolution" value="1.85 A"/>
    <property type="chains" value="A/B/C/D=21-147"/>
</dbReference>
<dbReference type="PDB" id="1U21">
    <property type="method" value="X-ray"/>
    <property type="resolution" value="1.69 A"/>
    <property type="chains" value="A/B=21-147"/>
</dbReference>
<dbReference type="PDB" id="1X7S">
    <property type="method" value="X-ray"/>
    <property type="resolution" value="1.55 A"/>
    <property type="chains" value="A/B=21-147"/>
</dbReference>
<dbReference type="PDB" id="1X7T">
    <property type="method" value="X-ray"/>
    <property type="resolution" value="1.60 A"/>
    <property type="chains" value="A/B=21-147"/>
</dbReference>
<dbReference type="PDB" id="1Y1D">
    <property type="method" value="X-ray"/>
    <property type="resolution" value="1.70 A"/>
    <property type="chains" value="A/B=21-147"/>
</dbReference>
<dbReference type="PDB" id="1Z7J">
    <property type="method" value="X-ray"/>
    <property type="resolution" value="2.20 A"/>
    <property type="chains" value="A/B=21-147"/>
</dbReference>
<dbReference type="PDB" id="1ZCR">
    <property type="method" value="X-ray"/>
    <property type="resolution" value="1.80 A"/>
    <property type="chains" value="A/B=21-147"/>
</dbReference>
<dbReference type="PDB" id="1ZD6">
    <property type="method" value="X-ray"/>
    <property type="resolution" value="1.90 A"/>
    <property type="chains" value="A/B=21-147"/>
</dbReference>
<dbReference type="PDB" id="2B14">
    <property type="method" value="X-ray"/>
    <property type="resolution" value="2.00 A"/>
    <property type="chains" value="A/B=21-147"/>
</dbReference>
<dbReference type="PDB" id="2B15">
    <property type="method" value="X-ray"/>
    <property type="resolution" value="1.70 A"/>
    <property type="chains" value="A/B=21-147"/>
</dbReference>
<dbReference type="PDB" id="2B16">
    <property type="method" value="X-ray"/>
    <property type="resolution" value="1.75 A"/>
    <property type="chains" value="A/B=21-147"/>
</dbReference>
<dbReference type="PDB" id="2B77">
    <property type="method" value="X-ray"/>
    <property type="resolution" value="1.70 A"/>
    <property type="chains" value="A/B=21-147"/>
</dbReference>
<dbReference type="PDB" id="2B9A">
    <property type="method" value="X-ray"/>
    <property type="resolution" value="1.54 A"/>
    <property type="chains" value="A/B=21-147"/>
</dbReference>
<dbReference type="PDB" id="2F7I">
    <property type="method" value="X-ray"/>
    <property type="resolution" value="1.60 A"/>
    <property type="chains" value="A/B=21-147"/>
</dbReference>
<dbReference type="PDB" id="2F8I">
    <property type="method" value="X-ray"/>
    <property type="resolution" value="1.54 A"/>
    <property type="chains" value="A/B=21-147"/>
</dbReference>
<dbReference type="PDB" id="2FBR">
    <property type="method" value="X-ray"/>
    <property type="resolution" value="1.46 A"/>
    <property type="chains" value="A/B=21-147"/>
</dbReference>
<dbReference type="PDB" id="2FLM">
    <property type="method" value="X-ray"/>
    <property type="resolution" value="1.65 A"/>
    <property type="chains" value="A/B=21-147"/>
</dbReference>
<dbReference type="PDB" id="2G3X">
    <property type="method" value="X-ray"/>
    <property type="resolution" value="1.58 A"/>
    <property type="chains" value="A/B=21-147"/>
</dbReference>
<dbReference type="PDB" id="2G3Z">
    <property type="method" value="X-ray"/>
    <property type="resolution" value="1.90 A"/>
    <property type="chains" value="A/B=21-147"/>
</dbReference>
<dbReference type="PDB" id="2G4E">
    <property type="method" value="X-ray"/>
    <property type="resolution" value="2.17 A"/>
    <property type="chains" value="A/B=21-147"/>
</dbReference>
<dbReference type="PDB" id="2G4G">
    <property type="method" value="X-ray"/>
    <property type="resolution" value="1.85 A"/>
    <property type="chains" value="A/B=21-147"/>
</dbReference>
<dbReference type="PDB" id="2G5U">
    <property type="method" value="X-ray"/>
    <property type="resolution" value="1.80 A"/>
    <property type="chains" value="A/B=21-147"/>
</dbReference>
<dbReference type="PDB" id="2G9K">
    <property type="method" value="X-ray"/>
    <property type="resolution" value="1.85 A"/>
    <property type="chains" value="A/B=21-147"/>
</dbReference>
<dbReference type="PDB" id="2GAB">
    <property type="method" value="X-ray"/>
    <property type="resolution" value="1.85 A"/>
    <property type="chains" value="A/B=21-147"/>
</dbReference>
<dbReference type="PDB" id="2H4E">
    <property type="method" value="X-ray"/>
    <property type="resolution" value="1.45 A"/>
    <property type="chains" value="A/B=21-147"/>
</dbReference>
<dbReference type="PDB" id="2M5N">
    <property type="method" value="NMR"/>
    <property type="chains" value="A/B/C/D/E/F/G/H/I/J/K/L/M/N/O/P=125-135"/>
</dbReference>
<dbReference type="PDB" id="2NBO">
    <property type="method" value="NMR"/>
    <property type="chains" value="A=21-147"/>
</dbReference>
<dbReference type="PDB" id="2NBP">
    <property type="method" value="NMR"/>
    <property type="chains" value="A=21-147"/>
</dbReference>
<dbReference type="PDB" id="2NOY">
    <property type="method" value="X-ray"/>
    <property type="resolution" value="1.80 A"/>
    <property type="chains" value="A/B=21-147"/>
</dbReference>
<dbReference type="PDB" id="2PAB">
    <property type="method" value="X-ray"/>
    <property type="resolution" value="1.80 A"/>
    <property type="chains" value="A/B=21-147"/>
</dbReference>
<dbReference type="PDB" id="2QEL">
    <property type="method" value="X-ray"/>
    <property type="resolution" value="2.29 A"/>
    <property type="chains" value="A/B/C/D=21-147"/>
</dbReference>
<dbReference type="PDB" id="2QGB">
    <property type="method" value="X-ray"/>
    <property type="resolution" value="1.40 A"/>
    <property type="chains" value="A/B=21-147"/>
</dbReference>
<dbReference type="PDB" id="2QGC">
    <property type="method" value="X-ray"/>
    <property type="resolution" value="1.30 A"/>
    <property type="chains" value="A/B=21-147"/>
</dbReference>
<dbReference type="PDB" id="2QGD">
    <property type="method" value="X-ray"/>
    <property type="resolution" value="1.50 A"/>
    <property type="chains" value="A/B=21-147"/>
</dbReference>
<dbReference type="PDB" id="2QGE">
    <property type="method" value="X-ray"/>
    <property type="resolution" value="1.45 A"/>
    <property type="chains" value="A/B=21-147"/>
</dbReference>
<dbReference type="PDB" id="2ROX">
    <property type="method" value="X-ray"/>
    <property type="resolution" value="2.00 A"/>
    <property type="chains" value="A/B=21-147"/>
</dbReference>
<dbReference type="PDB" id="2ROY">
    <property type="method" value="X-ray"/>
    <property type="resolution" value="2.20 A"/>
    <property type="chains" value="A/B=21-147"/>
</dbReference>
<dbReference type="PDB" id="2TRH">
    <property type="method" value="X-ray"/>
    <property type="resolution" value="1.90 A"/>
    <property type="chains" value="A/B=21-147"/>
</dbReference>
<dbReference type="PDB" id="2TRY">
    <property type="method" value="X-ray"/>
    <property type="resolution" value="2.00 A"/>
    <property type="chains" value="A/B=21-147"/>
</dbReference>
<dbReference type="PDB" id="2WQA">
    <property type="method" value="X-ray"/>
    <property type="resolution" value="2.85 A"/>
    <property type="chains" value="A/B/C/D=21-147"/>
</dbReference>
<dbReference type="PDB" id="3A4D">
    <property type="method" value="X-ray"/>
    <property type="resolution" value="2.00 A"/>
    <property type="chains" value="A/B=21-147"/>
</dbReference>
<dbReference type="PDB" id="3A4E">
    <property type="method" value="X-ray"/>
    <property type="resolution" value="1.70 A"/>
    <property type="chains" value="A/B=21-147"/>
</dbReference>
<dbReference type="PDB" id="3A4F">
    <property type="method" value="X-ray"/>
    <property type="resolution" value="1.99 A"/>
    <property type="chains" value="A/B=21-147"/>
</dbReference>
<dbReference type="PDB" id="3B56">
    <property type="method" value="X-ray"/>
    <property type="resolution" value="1.55 A"/>
    <property type="chains" value="A/B=21-147"/>
</dbReference>
<dbReference type="PDB" id="3BSZ">
    <property type="method" value="X-ray"/>
    <property type="resolution" value="3.38 A"/>
    <property type="chains" value="A/B/C/D=21-147"/>
</dbReference>
<dbReference type="PDB" id="3BT0">
    <property type="method" value="X-ray"/>
    <property type="resolution" value="1.59 A"/>
    <property type="chains" value="A/B=21-147"/>
</dbReference>
<dbReference type="PDB" id="3CBR">
    <property type="method" value="X-ray"/>
    <property type="resolution" value="1.70 A"/>
    <property type="chains" value="A/B=21-147"/>
</dbReference>
<dbReference type="PDB" id="3CFM">
    <property type="method" value="X-ray"/>
    <property type="resolution" value="1.60 A"/>
    <property type="chains" value="A/B=30-147"/>
</dbReference>
<dbReference type="PDB" id="3CFN">
    <property type="method" value="X-ray"/>
    <property type="resolution" value="1.87 A"/>
    <property type="chains" value="A/B=30-147"/>
</dbReference>
<dbReference type="PDB" id="3CFQ">
    <property type="method" value="X-ray"/>
    <property type="resolution" value="2.09 A"/>
    <property type="chains" value="A/B=30-147"/>
</dbReference>
<dbReference type="PDB" id="3CFT">
    <property type="method" value="X-ray"/>
    <property type="resolution" value="1.87 A"/>
    <property type="chains" value="A/B=30-147"/>
</dbReference>
<dbReference type="PDB" id="3CN0">
    <property type="method" value="X-ray"/>
    <property type="resolution" value="1.52 A"/>
    <property type="chains" value="A/B=21-147"/>
</dbReference>
<dbReference type="PDB" id="3CN1">
    <property type="method" value="X-ray"/>
    <property type="resolution" value="1.52 A"/>
    <property type="chains" value="A/B=21-147"/>
</dbReference>
<dbReference type="PDB" id="3CN2">
    <property type="method" value="X-ray"/>
    <property type="resolution" value="1.52 A"/>
    <property type="chains" value="A/B=21-147"/>
</dbReference>
<dbReference type="PDB" id="3CN3">
    <property type="method" value="X-ray"/>
    <property type="resolution" value="1.80 A"/>
    <property type="chains" value="A/B=21-147"/>
</dbReference>
<dbReference type="PDB" id="3CN4">
    <property type="method" value="X-ray"/>
    <property type="resolution" value="1.40 A"/>
    <property type="chains" value="A/B=21-147"/>
</dbReference>
<dbReference type="PDB" id="3CXF">
    <property type="method" value="X-ray"/>
    <property type="resolution" value="2.30 A"/>
    <property type="chains" value="A/B=21-147"/>
</dbReference>
<dbReference type="PDB" id="3D2T">
    <property type="method" value="X-ray"/>
    <property type="resolution" value="1.85 A"/>
    <property type="chains" value="A/B=21-147"/>
</dbReference>
<dbReference type="PDB" id="3D7P">
    <property type="method" value="X-ray"/>
    <property type="resolution" value="1.72 A"/>
    <property type="chains" value="A/B=21-147"/>
</dbReference>
<dbReference type="PDB" id="3DGD">
    <property type="method" value="X-ray"/>
    <property type="resolution" value="1.38 A"/>
    <property type="chains" value="A/B/C/D=21-147"/>
</dbReference>
<dbReference type="PDB" id="3DID">
    <property type="method" value="X-ray"/>
    <property type="resolution" value="1.78 A"/>
    <property type="chains" value="A/B/C/D=21-147"/>
</dbReference>
<dbReference type="PDB" id="3DJR">
    <property type="method" value="X-ray"/>
    <property type="resolution" value="2.02 A"/>
    <property type="chains" value="A/B=21-147"/>
</dbReference>
<dbReference type="PDB" id="3DJS">
    <property type="method" value="X-ray"/>
    <property type="resolution" value="1.80 A"/>
    <property type="chains" value="A/B=21-147"/>
</dbReference>
<dbReference type="PDB" id="3DJT">
    <property type="method" value="X-ray"/>
    <property type="resolution" value="2.30 A"/>
    <property type="chains" value="A/B=21-147"/>
</dbReference>
<dbReference type="PDB" id="3DJZ">
    <property type="method" value="X-ray"/>
    <property type="resolution" value="1.82 A"/>
    <property type="chains" value="A/B=21-147"/>
</dbReference>
<dbReference type="PDB" id="3DK0">
    <property type="method" value="X-ray"/>
    <property type="resolution" value="1.87 A"/>
    <property type="chains" value="A/B=21-147"/>
</dbReference>
<dbReference type="PDB" id="3DK2">
    <property type="method" value="X-ray"/>
    <property type="resolution" value="2.35 A"/>
    <property type="chains" value="A/B=21-147"/>
</dbReference>
<dbReference type="PDB" id="3DO4">
    <property type="method" value="X-ray"/>
    <property type="resolution" value="2.40 A"/>
    <property type="chains" value="A/B/C/D/E/F/G/H=21-147"/>
</dbReference>
<dbReference type="PDB" id="3ESN">
    <property type="method" value="X-ray"/>
    <property type="resolution" value="1.35 A"/>
    <property type="chains" value="A/B=21-147"/>
</dbReference>
<dbReference type="PDB" id="3ESO">
    <property type="method" value="X-ray"/>
    <property type="resolution" value="1.31 A"/>
    <property type="chains" value="A/B=21-147"/>
</dbReference>
<dbReference type="PDB" id="3ESP">
    <property type="method" value="X-ray"/>
    <property type="resolution" value="1.31 A"/>
    <property type="chains" value="A/B=21-147"/>
</dbReference>
<dbReference type="PDB" id="3FC8">
    <property type="method" value="X-ray"/>
    <property type="resolution" value="1.85 A"/>
    <property type="chains" value="A/B=21-144"/>
</dbReference>
<dbReference type="PDB" id="3FCB">
    <property type="method" value="X-ray"/>
    <property type="resolution" value="1.80 A"/>
    <property type="chains" value="A/B=21-144"/>
</dbReference>
<dbReference type="PDB" id="3GLZ">
    <property type="method" value="X-ray"/>
    <property type="resolution" value="1.78 A"/>
    <property type="chains" value="A/B=21-147"/>
</dbReference>
<dbReference type="PDB" id="3GPS">
    <property type="method" value="X-ray"/>
    <property type="resolution" value="1.78 A"/>
    <property type="chains" value="A/B/C/D=21-147"/>
</dbReference>
<dbReference type="PDB" id="3GRB">
    <property type="method" value="X-ray"/>
    <property type="resolution" value="1.75 A"/>
    <property type="chains" value="A/B/C/D=21-147"/>
</dbReference>
<dbReference type="PDB" id="3GRG">
    <property type="method" value="X-ray"/>
    <property type="resolution" value="1.90 A"/>
    <property type="chains" value="A/B/C/D=21-147"/>
</dbReference>
<dbReference type="PDB" id="3GS0">
    <property type="method" value="X-ray"/>
    <property type="resolution" value="1.85 A"/>
    <property type="chains" value="A/B=21-147"/>
</dbReference>
<dbReference type="PDB" id="3GS4">
    <property type="method" value="X-ray"/>
    <property type="resolution" value="1.78 A"/>
    <property type="chains" value="A/B=21-147"/>
</dbReference>
<dbReference type="PDB" id="3GS7">
    <property type="method" value="X-ray"/>
    <property type="resolution" value="1.80 A"/>
    <property type="chains" value="A/B=21-147"/>
</dbReference>
<dbReference type="PDB" id="3HJ0">
    <property type="method" value="X-ray"/>
    <property type="resolution" value="1.34 A"/>
    <property type="chains" value="A/B=21-147"/>
</dbReference>
<dbReference type="PDB" id="3I9A">
    <property type="method" value="X-ray"/>
    <property type="resolution" value="1.65 A"/>
    <property type="chains" value="A/B=21-147"/>
</dbReference>
<dbReference type="PDB" id="3I9I">
    <property type="method" value="X-ray"/>
    <property type="resolution" value="1.80 A"/>
    <property type="chains" value="A/B=30-145"/>
</dbReference>
<dbReference type="PDB" id="3I9P">
    <property type="method" value="X-ray"/>
    <property type="resolution" value="1.90 A"/>
    <property type="chains" value="A/B=30-145"/>
</dbReference>
<dbReference type="PDB" id="3IMR">
    <property type="method" value="X-ray"/>
    <property type="resolution" value="1.70 A"/>
    <property type="chains" value="A/B=21-147"/>
</dbReference>
<dbReference type="PDB" id="3IMS">
    <property type="method" value="X-ray"/>
    <property type="resolution" value="1.40 A"/>
    <property type="chains" value="A/B=21-147"/>
</dbReference>
<dbReference type="PDB" id="3IMT">
    <property type="method" value="X-ray"/>
    <property type="resolution" value="1.40 A"/>
    <property type="chains" value="A/B=21-147"/>
</dbReference>
<dbReference type="PDB" id="3IMU">
    <property type="method" value="X-ray"/>
    <property type="resolution" value="1.40 A"/>
    <property type="chains" value="A/B=21-147"/>
</dbReference>
<dbReference type="PDB" id="3IMV">
    <property type="method" value="X-ray"/>
    <property type="resolution" value="1.47 A"/>
    <property type="chains" value="A/B=21-147"/>
</dbReference>
<dbReference type="PDB" id="3IMW">
    <property type="method" value="X-ray"/>
    <property type="resolution" value="1.31 A"/>
    <property type="chains" value="A/B=21-147"/>
</dbReference>
<dbReference type="PDB" id="3IPB">
    <property type="method" value="X-ray"/>
    <property type="resolution" value="1.90 A"/>
    <property type="chains" value="A/B=21-147"/>
</dbReference>
<dbReference type="PDB" id="3IPE">
    <property type="method" value="X-ray"/>
    <property type="resolution" value="1.40 A"/>
    <property type="chains" value="A/B=21-147"/>
</dbReference>
<dbReference type="PDB" id="3KGS">
    <property type="method" value="X-ray"/>
    <property type="resolution" value="1.80 A"/>
    <property type="chains" value="A/B=21-147"/>
</dbReference>
<dbReference type="PDB" id="3KGT">
    <property type="method" value="X-ray"/>
    <property type="resolution" value="1.95 A"/>
    <property type="chains" value="A/B=21-147"/>
</dbReference>
<dbReference type="PDB" id="3KGU">
    <property type="method" value="X-ray"/>
    <property type="resolution" value="1.85 A"/>
    <property type="chains" value="A/B=21-147"/>
</dbReference>
<dbReference type="PDB" id="3M1O">
    <property type="method" value="X-ray"/>
    <property type="resolution" value="1.20 A"/>
    <property type="chains" value="A/B=21-147"/>
</dbReference>
<dbReference type="PDB" id="3NEE">
    <property type="method" value="X-ray"/>
    <property type="resolution" value="1.55 A"/>
    <property type="chains" value="A/B=30-145"/>
</dbReference>
<dbReference type="PDB" id="3NEO">
    <property type="method" value="X-ray"/>
    <property type="resolution" value="2.00 A"/>
    <property type="chains" value="A/B=30-145"/>
</dbReference>
<dbReference type="PDB" id="3NES">
    <property type="method" value="X-ray"/>
    <property type="resolution" value="1.75 A"/>
    <property type="chains" value="A/B=30-145"/>
</dbReference>
<dbReference type="PDB" id="3NEX">
    <property type="method" value="X-ray"/>
    <property type="resolution" value="1.70 A"/>
    <property type="chains" value="A/B=30-145"/>
</dbReference>
<dbReference type="PDB" id="3NG5">
    <property type="method" value="X-ray"/>
    <property type="resolution" value="1.70 A"/>
    <property type="chains" value="A/B=21-147"/>
</dbReference>
<dbReference type="PDB" id="3OZK">
    <property type="method" value="X-ray"/>
    <property type="resolution" value="1.90 A"/>
    <property type="chains" value="A/B=21-147"/>
</dbReference>
<dbReference type="PDB" id="3OZL">
    <property type="method" value="X-ray"/>
    <property type="resolution" value="1.90 A"/>
    <property type="chains" value="A/B=21-147"/>
</dbReference>
<dbReference type="PDB" id="3P3R">
    <property type="method" value="X-ray"/>
    <property type="resolution" value="1.25 A"/>
    <property type="chains" value="A/B=21-147"/>
</dbReference>
<dbReference type="PDB" id="3P3S">
    <property type="method" value="X-ray"/>
    <property type="resolution" value="1.60 A"/>
    <property type="chains" value="A/B=21-147"/>
</dbReference>
<dbReference type="PDB" id="3P3T">
    <property type="method" value="X-ray"/>
    <property type="resolution" value="1.45 A"/>
    <property type="chains" value="A/B=21-147"/>
</dbReference>
<dbReference type="PDB" id="3P3U">
    <property type="method" value="X-ray"/>
    <property type="resolution" value="1.50 A"/>
    <property type="chains" value="A/B=21-147"/>
</dbReference>
<dbReference type="PDB" id="3SSG">
    <property type="method" value="X-ray"/>
    <property type="resolution" value="2.00 A"/>
    <property type="chains" value="A=21-147"/>
</dbReference>
<dbReference type="PDB" id="3TCT">
    <property type="method" value="X-ray"/>
    <property type="resolution" value="1.30 A"/>
    <property type="chains" value="A/B=21-147"/>
</dbReference>
<dbReference type="PDB" id="3TFB">
    <property type="method" value="X-ray"/>
    <property type="resolution" value="2.03 A"/>
    <property type="chains" value="A/B=30-145"/>
</dbReference>
<dbReference type="PDB" id="3U2I">
    <property type="method" value="X-ray"/>
    <property type="resolution" value="1.70 A"/>
    <property type="chains" value="A/B=32-147"/>
</dbReference>
<dbReference type="PDB" id="3U2J">
    <property type="method" value="Neutron"/>
    <property type="resolution" value="2.00 A"/>
    <property type="chains" value="A/B=32-147"/>
</dbReference>
<dbReference type="PDB" id="3W3B">
    <property type="method" value="X-ray"/>
    <property type="resolution" value="1.90 A"/>
    <property type="chains" value="A/B=21-147"/>
</dbReference>
<dbReference type="PDB" id="4ABQ">
    <property type="method" value="X-ray"/>
    <property type="resolution" value="1.70 A"/>
    <property type="chains" value="A/B=21-144"/>
</dbReference>
<dbReference type="PDB" id="4ABU">
    <property type="method" value="X-ray"/>
    <property type="resolution" value="1.86 A"/>
    <property type="chains" value="A/B=21-144"/>
</dbReference>
<dbReference type="PDB" id="4ABV">
    <property type="method" value="X-ray"/>
    <property type="resolution" value="1.80 A"/>
    <property type="chains" value="A/B=21-144"/>
</dbReference>
<dbReference type="PDB" id="4ABW">
    <property type="method" value="X-ray"/>
    <property type="resolution" value="1.70 A"/>
    <property type="chains" value="A/B=21-144"/>
</dbReference>
<dbReference type="PDB" id="4AC2">
    <property type="method" value="X-ray"/>
    <property type="resolution" value="1.81 A"/>
    <property type="chains" value="A/B=21-144"/>
</dbReference>
<dbReference type="PDB" id="4AC4">
    <property type="method" value="X-ray"/>
    <property type="resolution" value="1.80 A"/>
    <property type="chains" value="A/B=21-147"/>
</dbReference>
<dbReference type="PDB" id="4ACT">
    <property type="method" value="X-ray"/>
    <property type="resolution" value="1.80 A"/>
    <property type="chains" value="A/B=21-147"/>
</dbReference>
<dbReference type="PDB" id="4ANK">
    <property type="method" value="X-ray"/>
    <property type="resolution" value="1.70 A"/>
    <property type="chains" value="A/B=1-147"/>
</dbReference>
<dbReference type="PDB" id="4D7B">
    <property type="method" value="X-ray"/>
    <property type="resolution" value="1.15 A"/>
    <property type="chains" value="A/B=21-147"/>
</dbReference>
<dbReference type="PDB" id="4DER">
    <property type="method" value="X-ray"/>
    <property type="resolution" value="1.90 A"/>
    <property type="chains" value="A/B=30-145"/>
</dbReference>
<dbReference type="PDB" id="4DES">
    <property type="method" value="X-ray"/>
    <property type="resolution" value="1.75 A"/>
    <property type="chains" value="A/B=30-145"/>
</dbReference>
<dbReference type="PDB" id="4DET">
    <property type="method" value="X-ray"/>
    <property type="resolution" value="2.05 A"/>
    <property type="chains" value="A/B=30-145"/>
</dbReference>
<dbReference type="PDB" id="4DEU">
    <property type="method" value="X-ray"/>
    <property type="resolution" value="1.60 A"/>
    <property type="chains" value="A/B=30-145"/>
</dbReference>
<dbReference type="PDB" id="4DEW">
    <property type="method" value="X-ray"/>
    <property type="resolution" value="1.90 A"/>
    <property type="chains" value="A/B=1-147"/>
</dbReference>
<dbReference type="PDB" id="4FI6">
    <property type="method" value="X-ray"/>
    <property type="resolution" value="1.46 A"/>
    <property type="chains" value="A/B=21-147"/>
</dbReference>
<dbReference type="PDB" id="4FI7">
    <property type="method" value="X-ray"/>
    <property type="resolution" value="1.40 A"/>
    <property type="chains" value="A/B=21-147"/>
</dbReference>
<dbReference type="PDB" id="4FI8">
    <property type="method" value="X-ray"/>
    <property type="resolution" value="1.22 A"/>
    <property type="chains" value="A/B=21-147"/>
</dbReference>
<dbReference type="PDB" id="4HIQ">
    <property type="method" value="X-ray"/>
    <property type="resolution" value="1.18 A"/>
    <property type="chains" value="A/B=21-147"/>
</dbReference>
<dbReference type="PDB" id="4HIS">
    <property type="method" value="X-ray"/>
    <property type="resolution" value="1.20 A"/>
    <property type="chains" value="A/B=21-147"/>
</dbReference>
<dbReference type="PDB" id="4HJS">
    <property type="method" value="X-ray"/>
    <property type="resolution" value="1.22 A"/>
    <property type="chains" value="A/B=30-145"/>
</dbReference>
<dbReference type="PDB" id="4HJT">
    <property type="method" value="X-ray"/>
    <property type="resolution" value="1.45 A"/>
    <property type="chains" value="A/B=21-147"/>
</dbReference>
<dbReference type="PDB" id="4HJU">
    <property type="method" value="X-ray"/>
    <property type="resolution" value="1.35 A"/>
    <property type="chains" value="A/B=21-147"/>
</dbReference>
<dbReference type="PDB" id="4I85">
    <property type="method" value="X-ray"/>
    <property type="resolution" value="1.67 A"/>
    <property type="chains" value="A/B=21-147"/>
</dbReference>
<dbReference type="PDB" id="4I87">
    <property type="method" value="X-ray"/>
    <property type="resolution" value="1.69 A"/>
    <property type="chains" value="A/B=21-147"/>
</dbReference>
<dbReference type="PDB" id="4I89">
    <property type="method" value="X-ray"/>
    <property type="resolution" value="1.69 A"/>
    <property type="chains" value="A/B=21-147"/>
</dbReference>
<dbReference type="PDB" id="4IIZ">
    <property type="method" value="X-ray"/>
    <property type="resolution" value="2.10 A"/>
    <property type="chains" value="A/B=21-147"/>
</dbReference>
<dbReference type="PDB" id="4IK6">
    <property type="method" value="X-ray"/>
    <property type="resolution" value="2.00 A"/>
    <property type="chains" value="A/B=21-147"/>
</dbReference>
<dbReference type="PDB" id="4IK7">
    <property type="method" value="X-ray"/>
    <property type="resolution" value="2.10 A"/>
    <property type="chains" value="A/B=21-147"/>
</dbReference>
<dbReference type="PDB" id="4IKI">
    <property type="method" value="X-ray"/>
    <property type="resolution" value="2.00 A"/>
    <property type="chains" value="A/B=21-147"/>
</dbReference>
<dbReference type="PDB" id="4IKJ">
    <property type="method" value="X-ray"/>
    <property type="resolution" value="2.10 A"/>
    <property type="chains" value="A/B=21-147"/>
</dbReference>
<dbReference type="PDB" id="4IKK">
    <property type="method" value="X-ray"/>
    <property type="resolution" value="1.90 A"/>
    <property type="chains" value="A/B=21-147"/>
</dbReference>
<dbReference type="PDB" id="4IKL">
    <property type="method" value="X-ray"/>
    <property type="resolution" value="1.90 A"/>
    <property type="chains" value="A/B=21-147"/>
</dbReference>
<dbReference type="PDB" id="4KY2">
    <property type="method" value="X-ray"/>
    <property type="resolution" value="1.13 A"/>
    <property type="chains" value="A/B=21-147"/>
</dbReference>
<dbReference type="PDB" id="4L1S">
    <property type="method" value="X-ray"/>
    <property type="resolution" value="1.50 A"/>
    <property type="chains" value="A/B=21-147"/>
</dbReference>
<dbReference type="PDB" id="4L1T">
    <property type="method" value="X-ray"/>
    <property type="resolution" value="1.16 A"/>
    <property type="chains" value="A/B=21-147"/>
</dbReference>
<dbReference type="PDB" id="4MAS">
    <property type="method" value="X-ray"/>
    <property type="resolution" value="1.22 A"/>
    <property type="chains" value="A/B=21-147"/>
</dbReference>
<dbReference type="PDB" id="4MRB">
    <property type="method" value="X-ray"/>
    <property type="resolution" value="1.27 A"/>
    <property type="chains" value="A/B=21-147"/>
</dbReference>
<dbReference type="PDB" id="4MRC">
    <property type="method" value="X-ray"/>
    <property type="resolution" value="1.54 A"/>
    <property type="chains" value="A/B=22-147"/>
</dbReference>
<dbReference type="PDB" id="4N85">
    <property type="method" value="X-ray"/>
    <property type="resolution" value="1.60 A"/>
    <property type="chains" value="A/B=1-147"/>
</dbReference>
<dbReference type="PDB" id="4N86">
    <property type="method" value="X-ray"/>
    <property type="resolution" value="2.00 A"/>
    <property type="chains" value="A/B=1-147"/>
</dbReference>
<dbReference type="PDB" id="4N87">
    <property type="method" value="X-ray"/>
    <property type="resolution" value="1.79 A"/>
    <property type="chains" value="A/B=1-147"/>
</dbReference>
<dbReference type="PDB" id="4PM1">
    <property type="method" value="X-ray"/>
    <property type="resolution" value="1.23 A"/>
    <property type="chains" value="A/B=21-147"/>
</dbReference>
<dbReference type="PDB" id="4PME">
    <property type="method" value="X-ray"/>
    <property type="resolution" value="1.26 A"/>
    <property type="chains" value="A/B=29-146"/>
</dbReference>
<dbReference type="PDB" id="4PMF">
    <property type="method" value="X-ray"/>
    <property type="resolution" value="1.35 A"/>
    <property type="chains" value="A/B=29-145"/>
</dbReference>
<dbReference type="PDB" id="4PVL">
    <property type="method" value="X-ray"/>
    <property type="resolution" value="1.85 A"/>
    <property type="chains" value="A/B=21-147"/>
</dbReference>
<dbReference type="PDB" id="4PVM">
    <property type="method" value="Other"/>
    <property type="resolution" value="2.00 A"/>
    <property type="chains" value="A/B=21-147"/>
</dbReference>
<dbReference type="PDB" id="4PVN">
    <property type="method" value="Other"/>
    <property type="resolution" value="2.30 A"/>
    <property type="chains" value="A/B=21-147"/>
</dbReference>
<dbReference type="PDB" id="4PWE">
    <property type="method" value="X-ray"/>
    <property type="resolution" value="1.40 A"/>
    <property type="chains" value="A/B=1-147"/>
</dbReference>
<dbReference type="PDB" id="4PWF">
    <property type="method" value="X-ray"/>
    <property type="resolution" value="1.60 A"/>
    <property type="chains" value="A/B=1-147"/>
</dbReference>
<dbReference type="PDB" id="4PWG">
    <property type="method" value="X-ray"/>
    <property type="resolution" value="1.80 A"/>
    <property type="chains" value="A/B=1-147"/>
</dbReference>
<dbReference type="PDB" id="4PWH">
    <property type="method" value="X-ray"/>
    <property type="resolution" value="1.80 A"/>
    <property type="chains" value="A/B=1-147"/>
</dbReference>
<dbReference type="PDB" id="4PWI">
    <property type="method" value="X-ray"/>
    <property type="resolution" value="1.49 A"/>
    <property type="chains" value="A/B=1-147"/>
</dbReference>
<dbReference type="PDB" id="4PWJ">
    <property type="method" value="X-ray"/>
    <property type="resolution" value="1.55 A"/>
    <property type="chains" value="A/B=1-147"/>
</dbReference>
<dbReference type="PDB" id="4PWK">
    <property type="method" value="X-ray"/>
    <property type="resolution" value="1.59 A"/>
    <property type="chains" value="A/B=1-147"/>
</dbReference>
<dbReference type="PDB" id="4QRF">
    <property type="method" value="X-ray"/>
    <property type="resolution" value="1.80 A"/>
    <property type="chains" value="A/B=1-147"/>
</dbReference>
<dbReference type="PDB" id="4QXV">
    <property type="method" value="X-ray"/>
    <property type="resolution" value="1.12 A"/>
    <property type="chains" value="A/B=21-147"/>
</dbReference>
<dbReference type="PDB" id="4QYA">
    <property type="method" value="X-ray"/>
    <property type="resolution" value="1.70 A"/>
    <property type="chains" value="A/B=21-147"/>
</dbReference>
<dbReference type="PDB" id="4TKW">
    <property type="method" value="X-ray"/>
    <property type="resolution" value="1.80 A"/>
    <property type="chains" value="A/B=29-147"/>
</dbReference>
<dbReference type="PDB" id="4TL4">
    <property type="method" value="X-ray"/>
    <property type="resolution" value="1.75 A"/>
    <property type="chains" value="A/B=29-147"/>
</dbReference>
<dbReference type="PDB" id="4TL5">
    <property type="method" value="X-ray"/>
    <property type="resolution" value="1.44 A"/>
    <property type="chains" value="A/B=29-147"/>
</dbReference>
<dbReference type="PDB" id="4TLK">
    <property type="method" value="X-ray"/>
    <property type="resolution" value="1.44 A"/>
    <property type="chains" value="A/B=29-147"/>
</dbReference>
<dbReference type="PDB" id="4TLS">
    <property type="method" value="X-ray"/>
    <property type="resolution" value="1.35 A"/>
    <property type="chains" value="A/B=29-147"/>
</dbReference>
<dbReference type="PDB" id="4TLT">
    <property type="method" value="X-ray"/>
    <property type="resolution" value="1.70 A"/>
    <property type="chains" value="A/B=29-147"/>
</dbReference>
<dbReference type="PDB" id="4TLU">
    <property type="method" value="X-ray"/>
    <property type="resolution" value="1.75 A"/>
    <property type="chains" value="A/B=29-147"/>
</dbReference>
<dbReference type="PDB" id="4TM9">
    <property type="method" value="X-ray"/>
    <property type="resolution" value="1.70 A"/>
    <property type="chains" value="A/B=29-147"/>
</dbReference>
<dbReference type="PDB" id="4TNE">
    <property type="method" value="X-ray"/>
    <property type="resolution" value="1.55 A"/>
    <property type="chains" value="A/B=29-147"/>
</dbReference>
<dbReference type="PDB" id="4TNF">
    <property type="method" value="X-ray"/>
    <property type="resolution" value="1.60 A"/>
    <property type="chains" value="A/B=29-147"/>
</dbReference>
<dbReference type="PDB" id="4TNG">
    <property type="method" value="X-ray"/>
    <property type="resolution" value="1.60 A"/>
    <property type="chains" value="A/B=29-147"/>
</dbReference>
<dbReference type="PDB" id="4TQ8">
    <property type="method" value="X-ray"/>
    <property type="resolution" value="1.52 A"/>
    <property type="chains" value="A/B=21-147"/>
</dbReference>
<dbReference type="PDB" id="4TQH">
    <property type="method" value="X-ray"/>
    <property type="resolution" value="1.51 A"/>
    <property type="chains" value="A/B=21-147"/>
</dbReference>
<dbReference type="PDB" id="4TQI">
    <property type="method" value="X-ray"/>
    <property type="resolution" value="1.25 A"/>
    <property type="chains" value="A/B=21-147"/>
</dbReference>
<dbReference type="PDB" id="4TQP">
    <property type="method" value="X-ray"/>
    <property type="resolution" value="1.58 A"/>
    <property type="chains" value="A/B=21-147"/>
</dbReference>
<dbReference type="PDB" id="4WNJ">
    <property type="method" value="X-ray"/>
    <property type="resolution" value="1.40 A"/>
    <property type="chains" value="A/B=21-147"/>
</dbReference>
<dbReference type="PDB" id="4WNS">
    <property type="method" value="X-ray"/>
    <property type="resolution" value="1.40 A"/>
    <property type="chains" value="A/B=21-147"/>
</dbReference>
<dbReference type="PDB" id="4WO0">
    <property type="method" value="X-ray"/>
    <property type="resolution" value="1.34 A"/>
    <property type="chains" value="A/B=21-147"/>
</dbReference>
<dbReference type="PDB" id="4Y9B">
    <property type="method" value="X-ray"/>
    <property type="resolution" value="1.40 A"/>
    <property type="chains" value="A/B=1-147"/>
</dbReference>
<dbReference type="PDB" id="4Y9C">
    <property type="method" value="X-ray"/>
    <property type="resolution" value="1.49 A"/>
    <property type="chains" value="A/B=1-147"/>
</dbReference>
<dbReference type="PDB" id="4Y9E">
    <property type="method" value="X-ray"/>
    <property type="resolution" value="1.49 A"/>
    <property type="chains" value="A/B=1-147"/>
</dbReference>
<dbReference type="PDB" id="4Y9F">
    <property type="method" value="X-ray"/>
    <property type="resolution" value="1.50 A"/>
    <property type="chains" value="A/B=1-147"/>
</dbReference>
<dbReference type="PDB" id="4Y9G">
    <property type="method" value="X-ray"/>
    <property type="resolution" value="1.89 A"/>
    <property type="chains" value="A/B=1-147"/>
</dbReference>
<dbReference type="PDB" id="4YDM">
    <property type="method" value="X-ray"/>
    <property type="resolution" value="1.25 A"/>
    <property type="chains" value="A/B=21-147"/>
</dbReference>
<dbReference type="PDB" id="4YDN">
    <property type="method" value="X-ray"/>
    <property type="resolution" value="1.35 A"/>
    <property type="chains" value="A/B=21-147"/>
</dbReference>
<dbReference type="PDB" id="5A6I">
    <property type="method" value="X-ray"/>
    <property type="resolution" value="1.86 A"/>
    <property type="chains" value="A=21-147"/>
</dbReference>
<dbReference type="PDB" id="5AKS">
    <property type="method" value="X-ray"/>
    <property type="resolution" value="1.25 A"/>
    <property type="chains" value="A/B=21-147"/>
</dbReference>
<dbReference type="PDB" id="5AKT">
    <property type="method" value="X-ray"/>
    <property type="resolution" value="1.35 A"/>
    <property type="chains" value="A/B=21-147"/>
</dbReference>
<dbReference type="PDB" id="5AKV">
    <property type="method" value="X-ray"/>
    <property type="resolution" value="1.52 A"/>
    <property type="chains" value="A/B=21-147"/>
</dbReference>
<dbReference type="PDB" id="5AL0">
    <property type="method" value="X-ray"/>
    <property type="resolution" value="1.39 A"/>
    <property type="chains" value="A/B=21-147"/>
</dbReference>
<dbReference type="PDB" id="5AL8">
    <property type="method" value="X-ray"/>
    <property type="resolution" value="1.50 A"/>
    <property type="chains" value="A/B=21-147"/>
</dbReference>
<dbReference type="PDB" id="5AYT">
    <property type="method" value="X-ray"/>
    <property type="resolution" value="1.40 A"/>
    <property type="chains" value="A/B=1-147"/>
</dbReference>
<dbReference type="PDB" id="5BOJ">
    <property type="method" value="X-ray"/>
    <property type="resolution" value="1.75 A"/>
    <property type="chains" value="A/B=21-147"/>
</dbReference>
<dbReference type="PDB" id="5CLX">
    <property type="method" value="X-ray"/>
    <property type="resolution" value="1.28 A"/>
    <property type="chains" value="A/B=21-147"/>
</dbReference>
<dbReference type="PDB" id="5CLY">
    <property type="method" value="X-ray"/>
    <property type="resolution" value="1.23 A"/>
    <property type="chains" value="A/B=21-147"/>
</dbReference>
<dbReference type="PDB" id="5CLZ">
    <property type="method" value="X-ray"/>
    <property type="resolution" value="1.22 A"/>
    <property type="chains" value="A/B=21-147"/>
</dbReference>
<dbReference type="PDB" id="5CM1">
    <property type="method" value="X-ray"/>
    <property type="resolution" value="1.22 A"/>
    <property type="chains" value="A/B=21-147"/>
</dbReference>
<dbReference type="PDB" id="5CN3">
    <property type="method" value="X-ray"/>
    <property type="resolution" value="1.30 A"/>
    <property type="chains" value="A/B=21-147"/>
</dbReference>
<dbReference type="PDB" id="5CNH">
    <property type="method" value="X-ray"/>
    <property type="resolution" value="1.42 A"/>
    <property type="chains" value="A/B=21-147"/>
</dbReference>
<dbReference type="PDB" id="5CR1">
    <property type="method" value="X-ray"/>
    <property type="resolution" value="1.54 A"/>
    <property type="chains" value="A/B=30-145"/>
</dbReference>
<dbReference type="PDB" id="5DEJ">
    <property type="method" value="X-ray"/>
    <property type="resolution" value="1.37 A"/>
    <property type="chains" value="A/B=30-145"/>
</dbReference>
<dbReference type="PDB" id="5DWP">
    <property type="method" value="X-ray"/>
    <property type="resolution" value="1.20 A"/>
    <property type="chains" value="A/B=30-145"/>
</dbReference>
<dbReference type="PDB" id="5E23">
    <property type="method" value="X-ray"/>
    <property type="resolution" value="1.41 A"/>
    <property type="chains" value="A/B=21-147"/>
</dbReference>
<dbReference type="PDB" id="5E4A">
    <property type="method" value="X-ray"/>
    <property type="resolution" value="1.33 A"/>
    <property type="chains" value="A/B=10-146"/>
</dbReference>
<dbReference type="PDB" id="5E4O">
    <property type="method" value="X-ray"/>
    <property type="resolution" value="1.50 A"/>
    <property type="chains" value="A/B=30-146"/>
</dbReference>
<dbReference type="PDB" id="5EN3">
    <property type="method" value="X-ray"/>
    <property type="resolution" value="1.25 A"/>
    <property type="chains" value="A/B=21-147"/>
</dbReference>
<dbReference type="PDB" id="5EZP">
    <property type="method" value="X-ray"/>
    <property type="resolution" value="2.50 A"/>
    <property type="chains" value="A/B/C/D/E/F/G/H=26-147"/>
</dbReference>
<dbReference type="PDB" id="5FO2">
    <property type="method" value="X-ray"/>
    <property type="resolution" value="1.45 A"/>
    <property type="chains" value="A/B=21-147"/>
</dbReference>
<dbReference type="PDB" id="5FW6">
    <property type="method" value="X-ray"/>
    <property type="resolution" value="1.30 A"/>
    <property type="chains" value="A/B=21-147"/>
</dbReference>
<dbReference type="PDB" id="5FW7">
    <property type="method" value="X-ray"/>
    <property type="resolution" value="1.20 A"/>
    <property type="chains" value="A/B=21-147"/>
</dbReference>
<dbReference type="PDB" id="5FW8">
    <property type="method" value="X-ray"/>
    <property type="resolution" value="1.60 A"/>
    <property type="chains" value="A/B=21-147"/>
</dbReference>
<dbReference type="PDB" id="5H0V">
    <property type="method" value="X-ray"/>
    <property type="resolution" value="1.58 A"/>
    <property type="chains" value="A/B/C/D=31-147"/>
</dbReference>
<dbReference type="PDB" id="5H0W">
    <property type="method" value="X-ray"/>
    <property type="resolution" value="1.90 A"/>
    <property type="chains" value="A=31-147"/>
</dbReference>
<dbReference type="PDB" id="5H0X">
    <property type="method" value="X-ray"/>
    <property type="resolution" value="1.57 A"/>
    <property type="chains" value="A/B=31-147"/>
</dbReference>
<dbReference type="PDB" id="5H0Y">
    <property type="method" value="X-ray"/>
    <property type="resolution" value="1.80 A"/>
    <property type="chains" value="A=31-147"/>
</dbReference>
<dbReference type="PDB" id="5H0Z">
    <property type="method" value="X-ray"/>
    <property type="resolution" value="1.74 A"/>
    <property type="chains" value="A=31-147"/>
</dbReference>
<dbReference type="PDB" id="5HJG">
    <property type="method" value="X-ray"/>
    <property type="resolution" value="1.40 A"/>
    <property type="chains" value="A/B=21-147"/>
</dbReference>
<dbReference type="PDB" id="5IHH">
    <property type="method" value="X-ray"/>
    <property type="resolution" value="1.35 A"/>
    <property type="chains" value="A/B=21-147"/>
</dbReference>
<dbReference type="PDB" id="5JID">
    <property type="method" value="X-ray"/>
    <property type="resolution" value="1.20 A"/>
    <property type="chains" value="A/B=21-147"/>
</dbReference>
<dbReference type="PDB" id="5JIM">
    <property type="method" value="X-ray"/>
    <property type="resolution" value="1.26 A"/>
    <property type="chains" value="A/B=21-147"/>
</dbReference>
<dbReference type="PDB" id="5JIQ">
    <property type="method" value="X-ray"/>
    <property type="resolution" value="1.45 A"/>
    <property type="chains" value="A/B=21-147"/>
</dbReference>
<dbReference type="PDB" id="5K1J">
    <property type="method" value="X-ray"/>
    <property type="resolution" value="1.69 A"/>
    <property type="chains" value="A/B=30-145"/>
</dbReference>
<dbReference type="PDB" id="5K1N">
    <property type="method" value="X-ray"/>
    <property type="resolution" value="1.81 A"/>
    <property type="chains" value="A/B=30-147"/>
</dbReference>
<dbReference type="PDB" id="5L4F">
    <property type="method" value="X-ray"/>
    <property type="resolution" value="1.48 A"/>
    <property type="chains" value="A/B=21-147"/>
</dbReference>
<dbReference type="PDB" id="5L4I">
    <property type="method" value="X-ray"/>
    <property type="resolution" value="1.45 A"/>
    <property type="chains" value="A/B=21-147"/>
</dbReference>
<dbReference type="PDB" id="5L4J">
    <property type="method" value="X-ray"/>
    <property type="resolution" value="1.62 A"/>
    <property type="chains" value="A/B=21-147"/>
</dbReference>
<dbReference type="PDB" id="5L4M">
    <property type="method" value="X-ray"/>
    <property type="resolution" value="1.58 A"/>
    <property type="chains" value="A/B=21-147"/>
</dbReference>
<dbReference type="PDB" id="5LLL">
    <property type="method" value="X-ray"/>
    <property type="resolution" value="1.42 A"/>
    <property type="chains" value="A/B=21-147"/>
</dbReference>
<dbReference type="PDB" id="5LLV">
    <property type="method" value="X-ray"/>
    <property type="resolution" value="1.70 A"/>
    <property type="chains" value="A/B/C/D=21-147"/>
</dbReference>
<dbReference type="PDB" id="5N5Q">
    <property type="method" value="X-ray"/>
    <property type="resolution" value="2.53 A"/>
    <property type="chains" value="A/B=30-145"/>
</dbReference>
<dbReference type="PDB" id="5N62">
    <property type="method" value="X-ray"/>
    <property type="resolution" value="1.80 A"/>
    <property type="chains" value="A/B=30-146"/>
</dbReference>
<dbReference type="PDB" id="5N7C">
    <property type="method" value="X-ray"/>
    <property type="resolution" value="2.45 A"/>
    <property type="chains" value="A/B=30-145"/>
</dbReference>
<dbReference type="PDB" id="5NFE">
    <property type="method" value="Other"/>
    <property type="resolution" value="1.85 A"/>
    <property type="chains" value="A/B=21-147"/>
</dbReference>
<dbReference type="PDB" id="5NFW">
    <property type="method" value="Other"/>
    <property type="resolution" value="1.80 A"/>
    <property type="chains" value="A/B=21-147"/>
</dbReference>
<dbReference type="PDB" id="5OQ0">
    <property type="method" value="X-ray"/>
    <property type="resolution" value="1.94 A"/>
    <property type="chains" value="A=21-147"/>
</dbReference>
<dbReference type="PDB" id="5TTR">
    <property type="method" value="X-ray"/>
    <property type="resolution" value="2.70 A"/>
    <property type="chains" value="A/B/C/D/E/F/G/H=21-147"/>
</dbReference>
<dbReference type="PDB" id="5TZL">
    <property type="method" value="X-ray"/>
    <property type="resolution" value="1.40 A"/>
    <property type="chains" value="A/B=21-147"/>
</dbReference>
<dbReference type="PDB" id="5U48">
    <property type="method" value="X-ray"/>
    <property type="resolution" value="1.50 A"/>
    <property type="chains" value="A/B=21-147"/>
</dbReference>
<dbReference type="PDB" id="5U49">
    <property type="method" value="X-ray"/>
    <property type="resolution" value="2.22 A"/>
    <property type="chains" value="A=21-147"/>
</dbReference>
<dbReference type="PDB" id="5U4A">
    <property type="method" value="X-ray"/>
    <property type="resolution" value="1.90 A"/>
    <property type="chains" value="A/B=21-147"/>
</dbReference>
<dbReference type="PDB" id="5U4B">
    <property type="method" value="X-ray"/>
    <property type="resolution" value="1.45 A"/>
    <property type="chains" value="A/B=21-147"/>
</dbReference>
<dbReference type="PDB" id="5U4C">
    <property type="method" value="X-ray"/>
    <property type="resolution" value="1.70 A"/>
    <property type="chains" value="A/B=21-147"/>
</dbReference>
<dbReference type="PDB" id="5U4D">
    <property type="method" value="X-ray"/>
    <property type="resolution" value="1.55 A"/>
    <property type="chains" value="A/B=21-147"/>
</dbReference>
<dbReference type="PDB" id="5U4E">
    <property type="method" value="X-ray"/>
    <property type="resolution" value="1.45 A"/>
    <property type="chains" value="A/B=21-147"/>
</dbReference>
<dbReference type="PDB" id="5U4F">
    <property type="method" value="X-ray"/>
    <property type="resolution" value="1.50 A"/>
    <property type="chains" value="A/B=21-147"/>
</dbReference>
<dbReference type="PDB" id="5U4G">
    <property type="method" value="X-ray"/>
    <property type="resolution" value="1.80 A"/>
    <property type="chains" value="A/B=21-147"/>
</dbReference>
<dbReference type="PDB" id="6D0W">
    <property type="method" value="X-ray"/>
    <property type="resolution" value="1.70 A"/>
    <property type="chains" value="A/B=21-147"/>
</dbReference>
<dbReference type="PDB" id="6E6Z">
    <property type="method" value="X-ray"/>
    <property type="resolution" value="1.75 A"/>
    <property type="chains" value="A/B=30-144"/>
</dbReference>
<dbReference type="PDB" id="6E70">
    <property type="method" value="X-ray"/>
    <property type="resolution" value="1.99 A"/>
    <property type="chains" value="A/B=30-144"/>
</dbReference>
<dbReference type="PDB" id="6E71">
    <property type="method" value="X-ray"/>
    <property type="resolution" value="1.50 A"/>
    <property type="chains" value="A/B=30-144"/>
</dbReference>
<dbReference type="PDB" id="6E72">
    <property type="method" value="X-ray"/>
    <property type="resolution" value="1.45 A"/>
    <property type="chains" value="A/B=30-144"/>
</dbReference>
<dbReference type="PDB" id="6E73">
    <property type="method" value="X-ray"/>
    <property type="resolution" value="1.80 A"/>
    <property type="chains" value="A/B=30-144"/>
</dbReference>
<dbReference type="PDB" id="6E74">
    <property type="method" value="X-ray"/>
    <property type="resolution" value="1.60 A"/>
    <property type="chains" value="A/B=30-144"/>
</dbReference>
<dbReference type="PDB" id="6E75">
    <property type="method" value="X-ray"/>
    <property type="resolution" value="1.50 A"/>
    <property type="chains" value="A/B=30-144"/>
</dbReference>
<dbReference type="PDB" id="6E76">
    <property type="method" value="X-ray"/>
    <property type="resolution" value="1.60 A"/>
    <property type="chains" value="A/B=30-144"/>
</dbReference>
<dbReference type="PDB" id="6E77">
    <property type="method" value="X-ray"/>
    <property type="resolution" value="1.60 A"/>
    <property type="chains" value="A/B=30-144"/>
</dbReference>
<dbReference type="PDB" id="6E78">
    <property type="method" value="X-ray"/>
    <property type="resolution" value="1.50 A"/>
    <property type="chains" value="A/B=30-144"/>
</dbReference>
<dbReference type="PDB" id="6EOY">
    <property type="method" value="X-ray"/>
    <property type="resolution" value="1.38 A"/>
    <property type="chains" value="A/B=30-144"/>
</dbReference>
<dbReference type="PDB" id="6EP1">
    <property type="method" value="X-ray"/>
    <property type="resolution" value="1.30 A"/>
    <property type="chains" value="A/B=30-144"/>
</dbReference>
<dbReference type="PDB" id="6FFT">
    <property type="method" value="Other"/>
    <property type="resolution" value="2.00 A"/>
    <property type="chains" value="A/B=21-147"/>
</dbReference>
<dbReference type="PDB" id="6FWD">
    <property type="method" value="X-ray"/>
    <property type="resolution" value="1.58 A"/>
    <property type="chains" value="A/B=21-147"/>
</dbReference>
<dbReference type="PDB" id="6FXU">
    <property type="method" value="X-ray"/>
    <property type="resolution" value="1.36 A"/>
    <property type="chains" value="A/B=21-147"/>
</dbReference>
<dbReference type="PDB" id="6FZL">
    <property type="method" value="X-ray"/>
    <property type="resolution" value="1.45 A"/>
    <property type="chains" value="A/B=21-147"/>
</dbReference>
<dbReference type="PDB" id="6GR7">
    <property type="method" value="X-ray"/>
    <property type="resolution" value="1.40 A"/>
    <property type="chains" value="A/B=21-147"/>
</dbReference>
<dbReference type="PDB" id="6GRP">
    <property type="method" value="X-ray"/>
    <property type="resolution" value="1.60 A"/>
    <property type="chains" value="A/B=21-147"/>
</dbReference>
<dbReference type="PDB" id="6IMX">
    <property type="method" value="X-ray"/>
    <property type="resolution" value="1.60 A"/>
    <property type="chains" value="A/B=1-147"/>
</dbReference>
<dbReference type="PDB" id="6IMY">
    <property type="method" value="X-ray"/>
    <property type="resolution" value="1.50 A"/>
    <property type="chains" value="A/B=1-147"/>
</dbReference>
<dbReference type="PDB" id="6KGB">
    <property type="method" value="X-ray"/>
    <property type="resolution" value="1.30 A"/>
    <property type="chains" value="A/B=1-146"/>
</dbReference>
<dbReference type="PDB" id="6R66">
    <property type="method" value="X-ray"/>
    <property type="resolution" value="1.30 A"/>
    <property type="chains" value="A/B=1-147"/>
</dbReference>
<dbReference type="PDB" id="6R67">
    <property type="method" value="X-ray"/>
    <property type="resolution" value="1.30 A"/>
    <property type="chains" value="A/B=1-147"/>
</dbReference>
<dbReference type="PDB" id="6R68">
    <property type="method" value="X-ray"/>
    <property type="resolution" value="1.45 A"/>
    <property type="chains" value="A/B=1-147"/>
</dbReference>
<dbReference type="PDB" id="6R6I">
    <property type="method" value="X-ray"/>
    <property type="resolution" value="1.47 A"/>
    <property type="chains" value="A/B=1-147"/>
</dbReference>
<dbReference type="PDB" id="6SDZ">
    <property type="method" value="EM"/>
    <property type="resolution" value="2.97 A"/>
    <property type="chains" value="A/B/C/D/E/F/G/H/I/J/K=21-147"/>
</dbReference>
<dbReference type="PDB" id="6SUG">
    <property type="method" value="X-ray"/>
    <property type="resolution" value="1.21 A"/>
    <property type="chains" value="A/B=1-147"/>
</dbReference>
<dbReference type="PDB" id="6SUH">
    <property type="method" value="X-ray"/>
    <property type="resolution" value="1.26 A"/>
    <property type="chains" value="A/B=1-147"/>
</dbReference>
<dbReference type="PDB" id="6TI9">
    <property type="method" value="X-ray"/>
    <property type="resolution" value="1.45 A"/>
    <property type="chains" value="A/B=21-147"/>
</dbReference>
<dbReference type="PDB" id="6TJN">
    <property type="method" value="X-ray"/>
    <property type="resolution" value="1.70 A"/>
    <property type="chains" value="A/B=21-147"/>
</dbReference>
<dbReference type="PDB" id="6TXV">
    <property type="method" value="X-ray"/>
    <property type="resolution" value="1.60 A"/>
    <property type="chains" value="A/B=30-145"/>
</dbReference>
<dbReference type="PDB" id="6TXW">
    <property type="method" value="X-ray"/>
    <property type="resolution" value="1.15 A"/>
    <property type="chains" value="A/B=30-145"/>
</dbReference>
<dbReference type="PDB" id="6U0Q">
    <property type="method" value="X-ray"/>
    <property type="resolution" value="1.75 A"/>
    <property type="chains" value="A/B=21-147"/>
</dbReference>
<dbReference type="PDB" id="6XTK">
    <property type="method" value="X-ray"/>
    <property type="resolution" value="1.70 A"/>
    <property type="chains" value="A/B=30-145"/>
</dbReference>
<dbReference type="PDB" id="7ACU">
    <property type="method" value="X-ray"/>
    <property type="resolution" value="1.54 A"/>
    <property type="chains" value="A/B=30-144"/>
</dbReference>
<dbReference type="PDB" id="7DT3">
    <property type="method" value="X-ray"/>
    <property type="resolution" value="1.20 A"/>
    <property type="chains" value="A/B=1-147"/>
</dbReference>
<dbReference type="PDB" id="7DT5">
    <property type="method" value="X-ray"/>
    <property type="resolution" value="1.25 A"/>
    <property type="chains" value="A/B=1-147"/>
</dbReference>
<dbReference type="PDB" id="7DT6">
    <property type="method" value="X-ray"/>
    <property type="resolution" value="1.30 A"/>
    <property type="chains" value="A/B=1-147"/>
</dbReference>
<dbReference type="PDB" id="7DT8">
    <property type="method" value="X-ray"/>
    <property type="resolution" value="1.25 A"/>
    <property type="chains" value="A/B=1-147"/>
</dbReference>
<dbReference type="PDB" id="7EJQ">
    <property type="method" value="X-ray"/>
    <property type="resolution" value="1.15 A"/>
    <property type="chains" value="A/B=1-146"/>
</dbReference>
<dbReference type="PDB" id="7EJR">
    <property type="method" value="X-ray"/>
    <property type="resolution" value="1.45 A"/>
    <property type="chains" value="A/B=1-146"/>
</dbReference>
<dbReference type="PDB" id="7ERH">
    <property type="method" value="X-ray"/>
    <property type="resolution" value="1.55 A"/>
    <property type="chains" value="A/B=1-147"/>
</dbReference>
<dbReference type="PDB" id="7ERI">
    <property type="method" value="X-ray"/>
    <property type="resolution" value="1.81 A"/>
    <property type="chains" value="A/B=1-147"/>
</dbReference>
<dbReference type="PDB" id="7ERJ">
    <property type="method" value="X-ray"/>
    <property type="resolution" value="1.89 A"/>
    <property type="chains" value="A/B=1-147"/>
</dbReference>
<dbReference type="PDB" id="7ERK">
    <property type="method" value="X-ray"/>
    <property type="resolution" value="1.70 A"/>
    <property type="chains" value="A/B=1-147"/>
</dbReference>
<dbReference type="PDB" id="7OB4">
    <property type="method" value="EM"/>
    <property type="resolution" value="3.22 A"/>
    <property type="chains" value="A/B/C/D/E/F/G/H/I/J/K/L/M/N=21-147"/>
</dbReference>
<dbReference type="PDB" id="7Q3I">
    <property type="method" value="X-ray"/>
    <property type="resolution" value="1.55 A"/>
    <property type="chains" value="AAA/BBB=21-147"/>
</dbReference>
<dbReference type="PDB" id="7Q9L">
    <property type="method" value="X-ray"/>
    <property type="resolution" value="1.45 A"/>
    <property type="chains" value="A/B=29-147"/>
</dbReference>
<dbReference type="PDB" id="7Q9N">
    <property type="method" value="X-ray"/>
    <property type="resolution" value="1.45 A"/>
    <property type="chains" value="A/B=29-147"/>
</dbReference>
<dbReference type="PDB" id="7Q9O">
    <property type="method" value="X-ray"/>
    <property type="resolution" value="1.35 A"/>
    <property type="chains" value="A/B=29-147"/>
</dbReference>
<dbReference type="PDB" id="7QC5">
    <property type="method" value="X-ray"/>
    <property type="resolution" value="1.20 A"/>
    <property type="chains" value="A/B=21-147"/>
</dbReference>
<dbReference type="PDB" id="7THA">
    <property type="method" value="X-ray"/>
    <property type="resolution" value="1.75 A"/>
    <property type="chains" value="A/B=21-147"/>
</dbReference>
<dbReference type="PDB" id="7W9Q">
    <property type="method" value="X-ray"/>
    <property type="resolution" value="1.60 A"/>
    <property type="chains" value="A/B=1-147"/>
</dbReference>
<dbReference type="PDB" id="7W9R">
    <property type="method" value="X-ray"/>
    <property type="resolution" value="2.00 A"/>
    <property type="chains" value="A/B=1-147"/>
</dbReference>
<dbReference type="PDB" id="7WL6">
    <property type="method" value="X-ray"/>
    <property type="resolution" value="1.42 A"/>
    <property type="chains" value="A/B=21-147"/>
</dbReference>
<dbReference type="PDB" id="7Y1I">
    <property type="method" value="X-ray"/>
    <property type="resolution" value="2.79 A"/>
    <property type="chains" value="A/B/C/D/E/F/G/H/I/J/K/L/M/N/O/P/Q/R/S/T/U/V/W/X=1-147"/>
</dbReference>
<dbReference type="PDB" id="7Y6J">
    <property type="method" value="X-ray"/>
    <property type="resolution" value="1.38 A"/>
    <property type="chains" value="A/B=21-147"/>
</dbReference>
<dbReference type="PDB" id="7YBR">
    <property type="method" value="X-ray"/>
    <property type="resolution" value="1.71 A"/>
    <property type="chains" value="A/B=21-147"/>
</dbReference>
<dbReference type="PDB" id="7YCQ">
    <property type="method" value="X-ray"/>
    <property type="resolution" value="1.99 A"/>
    <property type="chains" value="A/B=21-147"/>
</dbReference>
<dbReference type="PDB" id="7Z60">
    <property type="method" value="X-ray"/>
    <property type="resolution" value="1.40 A"/>
    <property type="chains" value="A/B=21-147"/>
</dbReference>
<dbReference type="PDB" id="8ADE">
    <property type="method" value="EM"/>
    <property type="resolution" value="2.78 A"/>
    <property type="chains" value="A/B/C/D/E/F/G=21-147"/>
</dbReference>
<dbReference type="PDB" id="8AWI">
    <property type="method" value="X-ray"/>
    <property type="resolution" value="1.15 A"/>
    <property type="chains" value="A/B=29-147"/>
</dbReference>
<dbReference type="PDB" id="8AWW">
    <property type="method" value="X-ray"/>
    <property type="resolution" value="1.60 A"/>
    <property type="chains" value="A/B=30-145"/>
</dbReference>
<dbReference type="PDB" id="8C85">
    <property type="method" value="X-ray"/>
    <property type="resolution" value="1.19 A"/>
    <property type="chains" value="A/B=21-147"/>
</dbReference>
<dbReference type="PDB" id="8C86">
    <property type="method" value="X-ray"/>
    <property type="resolution" value="1.10 A"/>
    <property type="chains" value="A/B=21-147"/>
</dbReference>
<dbReference type="PDB" id="8E7D">
    <property type="method" value="EM"/>
    <property type="resolution" value="3.31 A"/>
    <property type="chains" value="A/B/C/D/E=1-147"/>
</dbReference>
<dbReference type="PDB" id="8E7E">
    <property type="method" value="EM"/>
    <property type="resolution" value="3.61 A"/>
    <property type="chains" value="A/B/C/D/E=1-147"/>
</dbReference>
<dbReference type="PDB" id="8E7H">
    <property type="method" value="EM"/>
    <property type="resolution" value="3.70 A"/>
    <property type="chains" value="A/B/C/D/E=1-147"/>
</dbReference>
<dbReference type="PDB" id="8E7I">
    <property type="method" value="EM"/>
    <property type="resolution" value="3.65 A"/>
    <property type="chains" value="A/B/C/D/E=1-147"/>
</dbReference>
<dbReference type="PDB" id="8E7J">
    <property type="method" value="EM"/>
    <property type="resolution" value="3.10 A"/>
    <property type="chains" value="A/B/C/D/E=1-147"/>
</dbReference>
<dbReference type="PDB" id="8G9R">
    <property type="method" value="EM"/>
    <property type="resolution" value="3.28 A"/>
    <property type="chains" value="A/B/C/D/E=1-147"/>
</dbReference>
<dbReference type="PDB" id="8GBR">
    <property type="method" value="EM"/>
    <property type="resolution" value="3.40 A"/>
    <property type="chains" value="A/B/C/D/E=1-147"/>
</dbReference>
<dbReference type="PDB" id="8HEJ">
    <property type="method" value="X-ray"/>
    <property type="resolution" value="1.54 A"/>
    <property type="chains" value="A/B=31-144"/>
</dbReference>
<dbReference type="PDB" id="8HY4">
    <property type="method" value="X-ray"/>
    <property type="resolution" value="1.53 A"/>
    <property type="chains" value="A/B=21-147"/>
</dbReference>
<dbReference type="PDB" id="8I00">
    <property type="method" value="X-ray"/>
    <property type="resolution" value="1.80 A"/>
    <property type="chains" value="A/B=21-147"/>
</dbReference>
<dbReference type="PDB" id="8I0O">
    <property type="method" value="X-ray"/>
    <property type="resolution" value="1.88 A"/>
    <property type="chains" value="A/B/C/D=21-147"/>
</dbReference>
<dbReference type="PDB" id="8IG1">
    <property type="method" value="X-ray"/>
    <property type="resolution" value="1.45 A"/>
    <property type="chains" value="A/B=1-147"/>
</dbReference>
<dbReference type="PDB" id="8II1">
    <property type="method" value="X-ray"/>
    <property type="resolution" value="1.91 A"/>
    <property type="chains" value="A/B=1-147"/>
</dbReference>
<dbReference type="PDB" id="8II2">
    <property type="method" value="X-ray"/>
    <property type="resolution" value="1.80 A"/>
    <property type="chains" value="A/B=1-147"/>
</dbReference>
<dbReference type="PDB" id="8II3">
    <property type="method" value="X-ray"/>
    <property type="resolution" value="1.40 A"/>
    <property type="chains" value="A/B=1-147"/>
</dbReference>
<dbReference type="PDB" id="8II4">
    <property type="method" value="X-ray"/>
    <property type="resolution" value="1.50 A"/>
    <property type="chains" value="A/B=1-147"/>
</dbReference>
<dbReference type="PDB" id="8JNU">
    <property type="method" value="X-ray"/>
    <property type="resolution" value="1.64 A"/>
    <property type="chains" value="A/B=21-147"/>
</dbReference>
<dbReference type="PDB" id="8JOK">
    <property type="method" value="X-ray"/>
    <property type="resolution" value="1.64 A"/>
    <property type="chains" value="A/B=21-147"/>
</dbReference>
<dbReference type="PDB" id="8JQW">
    <property type="method" value="X-ray"/>
    <property type="resolution" value="1.80 A"/>
    <property type="chains" value="A/B=21-147"/>
</dbReference>
<dbReference type="PDB" id="8PKE">
    <property type="method" value="EM"/>
    <property type="resolution" value="3.39 A"/>
    <property type="chains" value="A/B/C/D/E/F=21-147"/>
</dbReference>
<dbReference type="PDB" id="8PKF">
    <property type="method" value="EM"/>
    <property type="resolution" value="2.37 A"/>
    <property type="chains" value="A/B/C/D/E/F=21-147"/>
</dbReference>
<dbReference type="PDB" id="8PKG">
    <property type="method" value="EM"/>
    <property type="resolution" value="2.99 A"/>
    <property type="chains" value="A/B/C/D/E/F=21-147"/>
</dbReference>
<dbReference type="PDB" id="8PM8">
    <property type="method" value="X-ray"/>
    <property type="resolution" value="1.57 A"/>
    <property type="chains" value="A/B=21-147"/>
</dbReference>
<dbReference type="PDB" id="8PM9">
    <property type="method" value="X-ray"/>
    <property type="resolution" value="1.85 A"/>
    <property type="chains" value="A/B=21-147"/>
</dbReference>
<dbReference type="PDB" id="8PMA">
    <property type="method" value="X-ray"/>
    <property type="resolution" value="1.20 A"/>
    <property type="chains" value="A/B=21-147"/>
</dbReference>
<dbReference type="PDB" id="8PMO">
    <property type="method" value="X-ray"/>
    <property type="resolution" value="1.24 A"/>
    <property type="chains" value="A/B=21-147"/>
</dbReference>
<dbReference type="PDB" id="8T5X">
    <property type="method" value="X-ray"/>
    <property type="resolution" value="1.63 A"/>
    <property type="chains" value="A/B=21-147"/>
</dbReference>
<dbReference type="PDB" id="8TDN">
    <property type="method" value="EM"/>
    <property type="resolution" value="3.10 A"/>
    <property type="chains" value="A/B/C/D/E=1-147"/>
</dbReference>
<dbReference type="PDB" id="8TDO">
    <property type="method" value="EM"/>
    <property type="resolution" value="3.10 A"/>
    <property type="chains" value="A/B/C/E=1-147"/>
</dbReference>
<dbReference type="PDB" id="8U52">
    <property type="method" value="X-ray"/>
    <property type="resolution" value="1.50 A"/>
    <property type="chains" value="A/B=21-147"/>
</dbReference>
<dbReference type="PDB" id="8VE0">
    <property type="method" value="EM"/>
    <property type="resolution" value="3.10 A"/>
    <property type="chains" value="A/B/C/D=21-147"/>
</dbReference>
<dbReference type="PDB" id="8VE1">
    <property type="method" value="EM"/>
    <property type="resolution" value="2.70 A"/>
    <property type="chains" value="A/B/C/D=21-147"/>
</dbReference>
<dbReference type="PDB" id="8VE2">
    <property type="method" value="EM"/>
    <property type="resolution" value="3.30 A"/>
    <property type="chains" value="A/B/C/D=21-147"/>
</dbReference>
<dbReference type="PDB" id="8VE3">
    <property type="method" value="EM"/>
    <property type="resolution" value="3.30 A"/>
    <property type="chains" value="A/B/C/D=21-147"/>
</dbReference>
<dbReference type="PDB" id="8VE4">
    <property type="method" value="EM"/>
    <property type="resolution" value="3.30 A"/>
    <property type="chains" value="A/B/C/D=21-147"/>
</dbReference>
<dbReference type="PDB" id="8VE5">
    <property type="method" value="EM"/>
    <property type="resolution" value="3.40 A"/>
    <property type="chains" value="A/B/C/D=21-147"/>
</dbReference>
<dbReference type="PDB" id="8VE6">
    <property type="method" value="EM"/>
    <property type="resolution" value="4.10 A"/>
    <property type="chains" value="A/B/C/D=21-147"/>
</dbReference>
<dbReference type="PDB" id="8W1N">
    <property type="method" value="X-ray"/>
    <property type="resolution" value="1.60 A"/>
    <property type="chains" value="A/B=21-147"/>
</dbReference>
<dbReference type="PDB" id="8W2W">
    <property type="method" value="X-ray"/>
    <property type="resolution" value="2.07 A"/>
    <property type="chains" value="A=1-147"/>
</dbReference>
<dbReference type="PDB" id="8W42">
    <property type="method" value="X-ray"/>
    <property type="resolution" value="1.45 A"/>
    <property type="chains" value="A/B=1-147"/>
</dbReference>
<dbReference type="PDB" id="8W43">
    <property type="method" value="X-ray"/>
    <property type="resolution" value="1.30 A"/>
    <property type="chains" value="A/B=1-147"/>
</dbReference>
<dbReference type="PDB" id="8W44">
    <property type="method" value="X-ray"/>
    <property type="resolution" value="1.40 A"/>
    <property type="chains" value="A/B=1-147"/>
</dbReference>
<dbReference type="PDB" id="8W45">
    <property type="method" value="X-ray"/>
    <property type="resolution" value="1.10 A"/>
    <property type="chains" value="A/B=1-147"/>
</dbReference>
<dbReference type="PDB" id="8W46">
    <property type="method" value="X-ray"/>
    <property type="resolution" value="1.35 A"/>
    <property type="chains" value="A/B=1-147"/>
</dbReference>
<dbReference type="PDB" id="8W47">
    <property type="method" value="X-ray"/>
    <property type="resolution" value="1.40 A"/>
    <property type="chains" value="A/B=1-147"/>
</dbReference>
<dbReference type="PDB" id="8W48">
    <property type="method" value="Other"/>
    <property type="resolution" value="1.19 A"/>
    <property type="chains" value="A/B=1-147"/>
</dbReference>
<dbReference type="PDB" id="8WGS">
    <property type="method" value="X-ray"/>
    <property type="resolution" value="1.80 A"/>
    <property type="chains" value="A/B=1-147"/>
</dbReference>
<dbReference type="PDB" id="8WGT">
    <property type="method" value="X-ray"/>
    <property type="resolution" value="1.70 A"/>
    <property type="chains" value="A/B=1-147"/>
</dbReference>
<dbReference type="PDB" id="8WGU">
    <property type="method" value="X-ray"/>
    <property type="resolution" value="1.51 A"/>
    <property type="chains" value="A/B=1-147"/>
</dbReference>
<dbReference type="PDB" id="8YQD">
    <property type="method" value="X-ray"/>
    <property type="resolution" value="1.69 A"/>
    <property type="chains" value="A/B=21-144"/>
</dbReference>
<dbReference type="PDB" id="9BYN">
    <property type="method" value="EM"/>
    <property type="resolution" value="3.36 A"/>
    <property type="chains" value="A/B/C/D/E=21-147"/>
</dbReference>
<dbReference type="PDB" id="9BZS">
    <property type="method" value="EM"/>
    <property type="resolution" value="3.14 A"/>
    <property type="chains" value="A/B/C/D/E=21-147"/>
</dbReference>
<dbReference type="PDB" id="9H7A">
    <property type="method" value="X-ray"/>
    <property type="resolution" value="1.76 A"/>
    <property type="chains" value="A/B=21-147"/>
</dbReference>
<dbReference type="PDB" id="9H7B">
    <property type="method" value="X-ray"/>
    <property type="resolution" value="1.51 A"/>
    <property type="chains" value="A/B=21-147"/>
</dbReference>
<dbReference type="PDB" id="9H7C">
    <property type="method" value="X-ray"/>
    <property type="resolution" value="1.27 A"/>
    <property type="chains" value="A/B=21-147"/>
</dbReference>
<dbReference type="PDB" id="9H7D">
    <property type="method" value="X-ray"/>
    <property type="resolution" value="1.23 A"/>
    <property type="chains" value="A/B=21-147"/>
</dbReference>
<dbReference type="PDB" id="9H7E">
    <property type="method" value="X-ray"/>
    <property type="resolution" value="1.43 A"/>
    <property type="chains" value="A/B=21-147"/>
</dbReference>
<dbReference type="PDB" id="9H7F">
    <property type="method" value="X-ray"/>
    <property type="resolution" value="1.24 A"/>
    <property type="chains" value="A/B=21-147"/>
</dbReference>
<dbReference type="PDB" id="9H7G">
    <property type="method" value="X-ray"/>
    <property type="resolution" value="1.49 A"/>
    <property type="chains" value="A/B=21-147"/>
</dbReference>
<dbReference type="PDB" id="9H7H">
    <property type="method" value="X-ray"/>
    <property type="resolution" value="1.47 A"/>
    <property type="chains" value="A/B=21-147"/>
</dbReference>
<dbReference type="PDB" id="9H7I">
    <property type="method" value="X-ray"/>
    <property type="resolution" value="1.21 A"/>
    <property type="chains" value="A/B=21-147"/>
</dbReference>
<dbReference type="PDB" id="9H7J">
    <property type="method" value="X-ray"/>
    <property type="resolution" value="1.30 A"/>
    <property type="chains" value="A/B=21-147"/>
</dbReference>
<dbReference type="PDB" id="9H7K">
    <property type="method" value="X-ray"/>
    <property type="resolution" value="1.60 A"/>
    <property type="chains" value="A/B=21-147"/>
</dbReference>
<dbReference type="PDB" id="9H7L">
    <property type="method" value="X-ray"/>
    <property type="resolution" value="1.18 A"/>
    <property type="chains" value="A/B=21-147"/>
</dbReference>
<dbReference type="PDB" id="9H7M">
    <property type="method" value="X-ray"/>
    <property type="resolution" value="1.27 A"/>
    <property type="chains" value="A/B=21-147"/>
</dbReference>
<dbReference type="PDB" id="9H7N">
    <property type="method" value="X-ray"/>
    <property type="resolution" value="1.26 A"/>
    <property type="chains" value="A/B=21-147"/>
</dbReference>
<dbReference type="PDB" id="9H7O">
    <property type="method" value="X-ray"/>
    <property type="resolution" value="1.24 A"/>
    <property type="chains" value="A/B=21-147"/>
</dbReference>
<dbReference type="PDB" id="9H7P">
    <property type="method" value="X-ray"/>
    <property type="resolution" value="1.36 A"/>
    <property type="chains" value="A/B=21-147"/>
</dbReference>
<dbReference type="PDB" id="9JIQ">
    <property type="method" value="X-ray"/>
    <property type="resolution" value="1.78 A"/>
    <property type="chains" value="A/B=1-147"/>
</dbReference>
<dbReference type="PDB" id="9JIR">
    <property type="method" value="X-ray"/>
    <property type="resolution" value="1.30 A"/>
    <property type="chains" value="A/B=1-147"/>
</dbReference>
<dbReference type="PDB" id="9JIS">
    <property type="method" value="X-ray"/>
    <property type="resolution" value="1.41 A"/>
    <property type="chains" value="A/B=1-147"/>
</dbReference>
<dbReference type="PDBsum" id="1BM7"/>
<dbReference type="PDBsum" id="1BMZ"/>
<dbReference type="PDBsum" id="1BZ8"/>
<dbReference type="PDBsum" id="1BZD"/>
<dbReference type="PDBsum" id="1BZE"/>
<dbReference type="PDBsum" id="1DVQ"/>
<dbReference type="PDBsum" id="1DVS"/>
<dbReference type="PDBsum" id="1DVT"/>
<dbReference type="PDBsum" id="1DVU"/>
<dbReference type="PDBsum" id="1DVX"/>
<dbReference type="PDBsum" id="1DVY"/>
<dbReference type="PDBsum" id="1DVZ"/>
<dbReference type="PDBsum" id="1E3F"/>
<dbReference type="PDBsum" id="1E4H"/>
<dbReference type="PDBsum" id="1E5A"/>
<dbReference type="PDBsum" id="1ETA"/>
<dbReference type="PDBsum" id="1ETB"/>
<dbReference type="PDBsum" id="1F41"/>
<dbReference type="PDBsum" id="1F86"/>
<dbReference type="PDBsum" id="1FH2"/>
<dbReference type="PDBsum" id="1FHN"/>
<dbReference type="PDBsum" id="1G1O"/>
<dbReference type="PDBsum" id="1GKO"/>
<dbReference type="PDBsum" id="1ICT"/>
<dbReference type="PDBsum" id="1III"/>
<dbReference type="PDBsum" id="1IIK"/>
<dbReference type="PDBsum" id="1IJN"/>
<dbReference type="PDBsum" id="1QAB"/>
<dbReference type="PDBsum" id="1QWH"/>
<dbReference type="PDBsum" id="1RLB"/>
<dbReference type="PDBsum" id="1SOK"/>
<dbReference type="PDBsum" id="1SOQ"/>
<dbReference type="PDBsum" id="1THA"/>
<dbReference type="PDBsum" id="1THC"/>
<dbReference type="PDBsum" id="1TLM"/>
<dbReference type="PDBsum" id="1TSH"/>
<dbReference type="PDBsum" id="1TT6"/>
<dbReference type="PDBsum" id="1TTA"/>
<dbReference type="PDBsum" id="1TTB"/>
<dbReference type="PDBsum" id="1TTC"/>
<dbReference type="PDBsum" id="1TTR"/>
<dbReference type="PDBsum" id="1TYR"/>
<dbReference type="PDBsum" id="1TZ8"/>
<dbReference type="PDBsum" id="1U21"/>
<dbReference type="PDBsum" id="1X7S"/>
<dbReference type="PDBsum" id="1X7T"/>
<dbReference type="PDBsum" id="1Y1D"/>
<dbReference type="PDBsum" id="1Z7J"/>
<dbReference type="PDBsum" id="1ZCR"/>
<dbReference type="PDBsum" id="1ZD6"/>
<dbReference type="PDBsum" id="2B14"/>
<dbReference type="PDBsum" id="2B15"/>
<dbReference type="PDBsum" id="2B16"/>
<dbReference type="PDBsum" id="2B77"/>
<dbReference type="PDBsum" id="2B9A"/>
<dbReference type="PDBsum" id="2F7I"/>
<dbReference type="PDBsum" id="2F8I"/>
<dbReference type="PDBsum" id="2FBR"/>
<dbReference type="PDBsum" id="2FLM"/>
<dbReference type="PDBsum" id="2G3X"/>
<dbReference type="PDBsum" id="2G3Z"/>
<dbReference type="PDBsum" id="2G4E"/>
<dbReference type="PDBsum" id="2G4G"/>
<dbReference type="PDBsum" id="2G5U"/>
<dbReference type="PDBsum" id="2G9K"/>
<dbReference type="PDBsum" id="2GAB"/>
<dbReference type="PDBsum" id="2H4E"/>
<dbReference type="PDBsum" id="2M5N"/>
<dbReference type="PDBsum" id="2NBO"/>
<dbReference type="PDBsum" id="2NBP"/>
<dbReference type="PDBsum" id="2NOY"/>
<dbReference type="PDBsum" id="2PAB"/>
<dbReference type="PDBsum" id="2QEL"/>
<dbReference type="PDBsum" id="2QGB"/>
<dbReference type="PDBsum" id="2QGC"/>
<dbReference type="PDBsum" id="2QGD"/>
<dbReference type="PDBsum" id="2QGE"/>
<dbReference type="PDBsum" id="2ROX"/>
<dbReference type="PDBsum" id="2ROY"/>
<dbReference type="PDBsum" id="2TRH"/>
<dbReference type="PDBsum" id="2TRY"/>
<dbReference type="PDBsum" id="2WQA"/>
<dbReference type="PDBsum" id="3A4D"/>
<dbReference type="PDBsum" id="3A4E"/>
<dbReference type="PDBsum" id="3A4F"/>
<dbReference type="PDBsum" id="3B56"/>
<dbReference type="PDBsum" id="3BSZ"/>
<dbReference type="PDBsum" id="3BT0"/>
<dbReference type="PDBsum" id="3CBR"/>
<dbReference type="PDBsum" id="3CFM"/>
<dbReference type="PDBsum" id="3CFN"/>
<dbReference type="PDBsum" id="3CFQ"/>
<dbReference type="PDBsum" id="3CFT"/>
<dbReference type="PDBsum" id="3CN0"/>
<dbReference type="PDBsum" id="3CN1"/>
<dbReference type="PDBsum" id="3CN2"/>
<dbReference type="PDBsum" id="3CN3"/>
<dbReference type="PDBsum" id="3CN4"/>
<dbReference type="PDBsum" id="3CXF"/>
<dbReference type="PDBsum" id="3D2T"/>
<dbReference type="PDBsum" id="3D7P"/>
<dbReference type="PDBsum" id="3DGD"/>
<dbReference type="PDBsum" id="3DID"/>
<dbReference type="PDBsum" id="3DJR"/>
<dbReference type="PDBsum" id="3DJS"/>
<dbReference type="PDBsum" id="3DJT"/>
<dbReference type="PDBsum" id="3DJZ"/>
<dbReference type="PDBsum" id="3DK0"/>
<dbReference type="PDBsum" id="3DK2"/>
<dbReference type="PDBsum" id="3DO4"/>
<dbReference type="PDBsum" id="3ESN"/>
<dbReference type="PDBsum" id="3ESO"/>
<dbReference type="PDBsum" id="3ESP"/>
<dbReference type="PDBsum" id="3FC8"/>
<dbReference type="PDBsum" id="3FCB"/>
<dbReference type="PDBsum" id="3GLZ"/>
<dbReference type="PDBsum" id="3GPS"/>
<dbReference type="PDBsum" id="3GRB"/>
<dbReference type="PDBsum" id="3GRG"/>
<dbReference type="PDBsum" id="3GS0"/>
<dbReference type="PDBsum" id="3GS4"/>
<dbReference type="PDBsum" id="3GS7"/>
<dbReference type="PDBsum" id="3HJ0"/>
<dbReference type="PDBsum" id="3I9A"/>
<dbReference type="PDBsum" id="3I9I"/>
<dbReference type="PDBsum" id="3I9P"/>
<dbReference type="PDBsum" id="3IMR"/>
<dbReference type="PDBsum" id="3IMS"/>
<dbReference type="PDBsum" id="3IMT"/>
<dbReference type="PDBsum" id="3IMU"/>
<dbReference type="PDBsum" id="3IMV"/>
<dbReference type="PDBsum" id="3IMW"/>
<dbReference type="PDBsum" id="3IPB"/>
<dbReference type="PDBsum" id="3IPE"/>
<dbReference type="PDBsum" id="3KGS"/>
<dbReference type="PDBsum" id="3KGT"/>
<dbReference type="PDBsum" id="3KGU"/>
<dbReference type="PDBsum" id="3M1O"/>
<dbReference type="PDBsum" id="3NEE"/>
<dbReference type="PDBsum" id="3NEO"/>
<dbReference type="PDBsum" id="3NES"/>
<dbReference type="PDBsum" id="3NEX"/>
<dbReference type="PDBsum" id="3NG5"/>
<dbReference type="PDBsum" id="3OZK"/>
<dbReference type="PDBsum" id="3OZL"/>
<dbReference type="PDBsum" id="3P3R"/>
<dbReference type="PDBsum" id="3P3S"/>
<dbReference type="PDBsum" id="3P3T"/>
<dbReference type="PDBsum" id="3P3U"/>
<dbReference type="PDBsum" id="3SSG"/>
<dbReference type="PDBsum" id="3TCT"/>
<dbReference type="PDBsum" id="3TFB"/>
<dbReference type="PDBsum" id="3U2I"/>
<dbReference type="PDBsum" id="3U2J"/>
<dbReference type="PDBsum" id="3W3B"/>
<dbReference type="PDBsum" id="4ABQ"/>
<dbReference type="PDBsum" id="4ABU"/>
<dbReference type="PDBsum" id="4ABV"/>
<dbReference type="PDBsum" id="4ABW"/>
<dbReference type="PDBsum" id="4AC2"/>
<dbReference type="PDBsum" id="4AC4"/>
<dbReference type="PDBsum" id="4ACT"/>
<dbReference type="PDBsum" id="4ANK"/>
<dbReference type="PDBsum" id="4D7B"/>
<dbReference type="PDBsum" id="4DER"/>
<dbReference type="PDBsum" id="4DES"/>
<dbReference type="PDBsum" id="4DET"/>
<dbReference type="PDBsum" id="4DEU"/>
<dbReference type="PDBsum" id="4DEW"/>
<dbReference type="PDBsum" id="4FI6"/>
<dbReference type="PDBsum" id="4FI7"/>
<dbReference type="PDBsum" id="4FI8"/>
<dbReference type="PDBsum" id="4HIQ"/>
<dbReference type="PDBsum" id="4HIS"/>
<dbReference type="PDBsum" id="4HJS"/>
<dbReference type="PDBsum" id="4HJT"/>
<dbReference type="PDBsum" id="4HJU"/>
<dbReference type="PDBsum" id="4I85"/>
<dbReference type="PDBsum" id="4I87"/>
<dbReference type="PDBsum" id="4I89"/>
<dbReference type="PDBsum" id="4IIZ"/>
<dbReference type="PDBsum" id="4IK6"/>
<dbReference type="PDBsum" id="4IK7"/>
<dbReference type="PDBsum" id="4IKI"/>
<dbReference type="PDBsum" id="4IKJ"/>
<dbReference type="PDBsum" id="4IKK"/>
<dbReference type="PDBsum" id="4IKL"/>
<dbReference type="PDBsum" id="4KY2"/>
<dbReference type="PDBsum" id="4L1S"/>
<dbReference type="PDBsum" id="4L1T"/>
<dbReference type="PDBsum" id="4MAS"/>
<dbReference type="PDBsum" id="4MRB"/>
<dbReference type="PDBsum" id="4MRC"/>
<dbReference type="PDBsum" id="4N85"/>
<dbReference type="PDBsum" id="4N86"/>
<dbReference type="PDBsum" id="4N87"/>
<dbReference type="PDBsum" id="4PM1"/>
<dbReference type="PDBsum" id="4PME"/>
<dbReference type="PDBsum" id="4PMF"/>
<dbReference type="PDBsum" id="4PVL"/>
<dbReference type="PDBsum" id="4PVM"/>
<dbReference type="PDBsum" id="4PVN"/>
<dbReference type="PDBsum" id="4PWE"/>
<dbReference type="PDBsum" id="4PWF"/>
<dbReference type="PDBsum" id="4PWG"/>
<dbReference type="PDBsum" id="4PWH"/>
<dbReference type="PDBsum" id="4PWI"/>
<dbReference type="PDBsum" id="4PWJ"/>
<dbReference type="PDBsum" id="4PWK"/>
<dbReference type="PDBsum" id="4QRF"/>
<dbReference type="PDBsum" id="4QXV"/>
<dbReference type="PDBsum" id="4QYA"/>
<dbReference type="PDBsum" id="4TKW"/>
<dbReference type="PDBsum" id="4TL4"/>
<dbReference type="PDBsum" id="4TL5"/>
<dbReference type="PDBsum" id="4TLK"/>
<dbReference type="PDBsum" id="4TLS"/>
<dbReference type="PDBsum" id="4TLT"/>
<dbReference type="PDBsum" id="4TLU"/>
<dbReference type="PDBsum" id="4TM9"/>
<dbReference type="PDBsum" id="4TNE"/>
<dbReference type="PDBsum" id="4TNF"/>
<dbReference type="PDBsum" id="4TNG"/>
<dbReference type="PDBsum" id="4TQ8"/>
<dbReference type="PDBsum" id="4TQH"/>
<dbReference type="PDBsum" id="4TQI"/>
<dbReference type="PDBsum" id="4TQP"/>
<dbReference type="PDBsum" id="4WNJ"/>
<dbReference type="PDBsum" id="4WNS"/>
<dbReference type="PDBsum" id="4WO0"/>
<dbReference type="PDBsum" id="4Y9B"/>
<dbReference type="PDBsum" id="4Y9C"/>
<dbReference type="PDBsum" id="4Y9E"/>
<dbReference type="PDBsum" id="4Y9F"/>
<dbReference type="PDBsum" id="4Y9G"/>
<dbReference type="PDBsum" id="4YDM"/>
<dbReference type="PDBsum" id="4YDN"/>
<dbReference type="PDBsum" id="5A6I"/>
<dbReference type="PDBsum" id="5AKS"/>
<dbReference type="PDBsum" id="5AKT"/>
<dbReference type="PDBsum" id="5AKV"/>
<dbReference type="PDBsum" id="5AL0"/>
<dbReference type="PDBsum" id="5AL8"/>
<dbReference type="PDBsum" id="5AYT"/>
<dbReference type="PDBsum" id="5BOJ"/>
<dbReference type="PDBsum" id="5CLX"/>
<dbReference type="PDBsum" id="5CLY"/>
<dbReference type="PDBsum" id="5CLZ"/>
<dbReference type="PDBsum" id="5CM1"/>
<dbReference type="PDBsum" id="5CN3"/>
<dbReference type="PDBsum" id="5CNH"/>
<dbReference type="PDBsum" id="5CR1"/>
<dbReference type="PDBsum" id="5DEJ"/>
<dbReference type="PDBsum" id="5DWP"/>
<dbReference type="PDBsum" id="5E23"/>
<dbReference type="PDBsum" id="5E4A"/>
<dbReference type="PDBsum" id="5E4O"/>
<dbReference type="PDBsum" id="5EN3"/>
<dbReference type="PDBsum" id="5EZP"/>
<dbReference type="PDBsum" id="5FO2"/>
<dbReference type="PDBsum" id="5FW6"/>
<dbReference type="PDBsum" id="5FW7"/>
<dbReference type="PDBsum" id="5FW8"/>
<dbReference type="PDBsum" id="5H0V"/>
<dbReference type="PDBsum" id="5H0W"/>
<dbReference type="PDBsum" id="5H0X"/>
<dbReference type="PDBsum" id="5H0Y"/>
<dbReference type="PDBsum" id="5H0Z"/>
<dbReference type="PDBsum" id="5HJG"/>
<dbReference type="PDBsum" id="5IHH"/>
<dbReference type="PDBsum" id="5JID"/>
<dbReference type="PDBsum" id="5JIM"/>
<dbReference type="PDBsum" id="5JIQ"/>
<dbReference type="PDBsum" id="5K1J"/>
<dbReference type="PDBsum" id="5K1N"/>
<dbReference type="PDBsum" id="5L4F"/>
<dbReference type="PDBsum" id="5L4I"/>
<dbReference type="PDBsum" id="5L4J"/>
<dbReference type="PDBsum" id="5L4M"/>
<dbReference type="PDBsum" id="5LLL"/>
<dbReference type="PDBsum" id="5LLV"/>
<dbReference type="PDBsum" id="5N5Q"/>
<dbReference type="PDBsum" id="5N62"/>
<dbReference type="PDBsum" id="5N7C"/>
<dbReference type="PDBsum" id="5NFE"/>
<dbReference type="PDBsum" id="5NFW"/>
<dbReference type="PDBsum" id="5OQ0"/>
<dbReference type="PDBsum" id="5TTR"/>
<dbReference type="PDBsum" id="5TZL"/>
<dbReference type="PDBsum" id="5U48"/>
<dbReference type="PDBsum" id="5U49"/>
<dbReference type="PDBsum" id="5U4A"/>
<dbReference type="PDBsum" id="5U4B"/>
<dbReference type="PDBsum" id="5U4C"/>
<dbReference type="PDBsum" id="5U4D"/>
<dbReference type="PDBsum" id="5U4E"/>
<dbReference type="PDBsum" id="5U4F"/>
<dbReference type="PDBsum" id="5U4G"/>
<dbReference type="PDBsum" id="6D0W"/>
<dbReference type="PDBsum" id="6E6Z"/>
<dbReference type="PDBsum" id="6E70"/>
<dbReference type="PDBsum" id="6E71"/>
<dbReference type="PDBsum" id="6E72"/>
<dbReference type="PDBsum" id="6E73"/>
<dbReference type="PDBsum" id="6E74"/>
<dbReference type="PDBsum" id="6E75"/>
<dbReference type="PDBsum" id="6E76"/>
<dbReference type="PDBsum" id="6E77"/>
<dbReference type="PDBsum" id="6E78"/>
<dbReference type="PDBsum" id="6EOY"/>
<dbReference type="PDBsum" id="6EP1"/>
<dbReference type="PDBsum" id="6FFT"/>
<dbReference type="PDBsum" id="6FWD"/>
<dbReference type="PDBsum" id="6FXU"/>
<dbReference type="PDBsum" id="6FZL"/>
<dbReference type="PDBsum" id="6GR7"/>
<dbReference type="PDBsum" id="6GRP"/>
<dbReference type="PDBsum" id="6IMX"/>
<dbReference type="PDBsum" id="6IMY"/>
<dbReference type="PDBsum" id="6KGB"/>
<dbReference type="PDBsum" id="6R66"/>
<dbReference type="PDBsum" id="6R67"/>
<dbReference type="PDBsum" id="6R68"/>
<dbReference type="PDBsum" id="6R6I"/>
<dbReference type="PDBsum" id="6SDZ"/>
<dbReference type="PDBsum" id="6SUG"/>
<dbReference type="PDBsum" id="6SUH"/>
<dbReference type="PDBsum" id="6TI9"/>
<dbReference type="PDBsum" id="6TJN"/>
<dbReference type="PDBsum" id="6TXV"/>
<dbReference type="PDBsum" id="6TXW"/>
<dbReference type="PDBsum" id="6U0Q"/>
<dbReference type="PDBsum" id="6XTK"/>
<dbReference type="PDBsum" id="7ACU"/>
<dbReference type="PDBsum" id="7DT3"/>
<dbReference type="PDBsum" id="7DT5"/>
<dbReference type="PDBsum" id="7DT6"/>
<dbReference type="PDBsum" id="7DT8"/>
<dbReference type="PDBsum" id="7EJQ"/>
<dbReference type="PDBsum" id="7EJR"/>
<dbReference type="PDBsum" id="7ERH"/>
<dbReference type="PDBsum" id="7ERI"/>
<dbReference type="PDBsum" id="7ERJ"/>
<dbReference type="PDBsum" id="7ERK"/>
<dbReference type="PDBsum" id="7OB4"/>
<dbReference type="PDBsum" id="7Q3I"/>
<dbReference type="PDBsum" id="7Q9L"/>
<dbReference type="PDBsum" id="7Q9N"/>
<dbReference type="PDBsum" id="7Q9O"/>
<dbReference type="PDBsum" id="7QC5"/>
<dbReference type="PDBsum" id="7THA"/>
<dbReference type="PDBsum" id="7W9Q"/>
<dbReference type="PDBsum" id="7W9R"/>
<dbReference type="PDBsum" id="7WL6"/>
<dbReference type="PDBsum" id="7Y1I"/>
<dbReference type="PDBsum" id="7Y6J"/>
<dbReference type="PDBsum" id="7YBR"/>
<dbReference type="PDBsum" id="7YCQ"/>
<dbReference type="PDBsum" id="7Z60"/>
<dbReference type="PDBsum" id="8ADE"/>
<dbReference type="PDBsum" id="8AWI"/>
<dbReference type="PDBsum" id="8AWW"/>
<dbReference type="PDBsum" id="8C85"/>
<dbReference type="PDBsum" id="8C86"/>
<dbReference type="PDBsum" id="8E7D"/>
<dbReference type="PDBsum" id="8E7E"/>
<dbReference type="PDBsum" id="8E7H"/>
<dbReference type="PDBsum" id="8E7I"/>
<dbReference type="PDBsum" id="8E7J"/>
<dbReference type="PDBsum" id="8G9R"/>
<dbReference type="PDBsum" id="8GBR"/>
<dbReference type="PDBsum" id="8HEJ"/>
<dbReference type="PDBsum" id="8HY4"/>
<dbReference type="PDBsum" id="8I00"/>
<dbReference type="PDBsum" id="8I0O"/>
<dbReference type="PDBsum" id="8IG1"/>
<dbReference type="PDBsum" id="8II1"/>
<dbReference type="PDBsum" id="8II2"/>
<dbReference type="PDBsum" id="8II3"/>
<dbReference type="PDBsum" id="8II4"/>
<dbReference type="PDBsum" id="8JNU"/>
<dbReference type="PDBsum" id="8JOK"/>
<dbReference type="PDBsum" id="8JQW"/>
<dbReference type="PDBsum" id="8PKE"/>
<dbReference type="PDBsum" id="8PKF"/>
<dbReference type="PDBsum" id="8PKG"/>
<dbReference type="PDBsum" id="8PM8"/>
<dbReference type="PDBsum" id="8PM9"/>
<dbReference type="PDBsum" id="8PMA"/>
<dbReference type="PDBsum" id="8PMO"/>
<dbReference type="PDBsum" id="8T5X"/>
<dbReference type="PDBsum" id="8TDN"/>
<dbReference type="PDBsum" id="8TDO"/>
<dbReference type="PDBsum" id="8U52"/>
<dbReference type="PDBsum" id="8VE0"/>
<dbReference type="PDBsum" id="8VE1"/>
<dbReference type="PDBsum" id="8VE2"/>
<dbReference type="PDBsum" id="8VE3"/>
<dbReference type="PDBsum" id="8VE4"/>
<dbReference type="PDBsum" id="8VE5"/>
<dbReference type="PDBsum" id="8VE6"/>
<dbReference type="PDBsum" id="8W1N"/>
<dbReference type="PDBsum" id="8W2W"/>
<dbReference type="PDBsum" id="8W42"/>
<dbReference type="PDBsum" id="8W43"/>
<dbReference type="PDBsum" id="8W44"/>
<dbReference type="PDBsum" id="8W45"/>
<dbReference type="PDBsum" id="8W46"/>
<dbReference type="PDBsum" id="8W47"/>
<dbReference type="PDBsum" id="8W48"/>
<dbReference type="PDBsum" id="8WGS"/>
<dbReference type="PDBsum" id="8WGT"/>
<dbReference type="PDBsum" id="8WGU"/>
<dbReference type="PDBsum" id="8YQD"/>
<dbReference type="PDBsum" id="9BYN"/>
<dbReference type="PDBsum" id="9BZS"/>
<dbReference type="PDBsum" id="9H7A"/>
<dbReference type="PDBsum" id="9H7B"/>
<dbReference type="PDBsum" id="9H7C"/>
<dbReference type="PDBsum" id="9H7D"/>
<dbReference type="PDBsum" id="9H7E"/>
<dbReference type="PDBsum" id="9H7F"/>
<dbReference type="PDBsum" id="9H7G"/>
<dbReference type="PDBsum" id="9H7H"/>
<dbReference type="PDBsum" id="9H7I"/>
<dbReference type="PDBsum" id="9H7J"/>
<dbReference type="PDBsum" id="9H7K"/>
<dbReference type="PDBsum" id="9H7L"/>
<dbReference type="PDBsum" id="9H7M"/>
<dbReference type="PDBsum" id="9H7N"/>
<dbReference type="PDBsum" id="9H7O"/>
<dbReference type="PDBsum" id="9H7P"/>
<dbReference type="PDBsum" id="9JIQ"/>
<dbReference type="PDBsum" id="9JIR"/>
<dbReference type="PDBsum" id="9JIS"/>
<dbReference type="BMRB" id="P02766"/>
<dbReference type="EMDB" id="EMD-10150"/>
<dbReference type="EMDB" id="EMD-12794"/>
<dbReference type="EMDB" id="EMD-15361"/>
<dbReference type="EMDB" id="EMD-17736"/>
<dbReference type="EMDB" id="EMD-17737"/>
<dbReference type="EMDB" id="EMD-17738"/>
<dbReference type="EMDB" id="EMD-26685"/>
<dbReference type="EMDB" id="EMD-26691"/>
<dbReference type="EMDB" id="EMD-26692"/>
<dbReference type="EMDB" id="EMD-27323"/>
<dbReference type="EMDB" id="EMD-29874"/>
<dbReference type="EMDB" id="EMD-29920"/>
<dbReference type="EMDB" id="EMD-41171"/>
<dbReference type="EMDB" id="EMD-41172"/>
<dbReference type="EMDB" id="EMD-43160"/>
<dbReference type="EMDB" id="EMD-43161"/>
<dbReference type="EMDB" id="EMD-43162"/>
<dbReference type="EMDB" id="EMD-43163"/>
<dbReference type="EMDB" id="EMD-43164"/>
<dbReference type="EMDB" id="EMD-43165"/>
<dbReference type="EMDB" id="EMD-43166"/>
<dbReference type="EMDB" id="EMD-45039"/>
<dbReference type="EMDB" id="EMD-45074"/>
<dbReference type="PCDDB" id="P02766"/>
<dbReference type="SMR" id="P02766"/>
<dbReference type="BioGRID" id="113127">
    <property type="interactions" value="106"/>
</dbReference>
<dbReference type="CORUM" id="P02766"/>
<dbReference type="DIP" id="DIP-1083N"/>
<dbReference type="FunCoup" id="P02766">
    <property type="interactions" value="47"/>
</dbReference>
<dbReference type="IntAct" id="P02766">
    <property type="interactions" value="128"/>
</dbReference>
<dbReference type="MINT" id="P02766"/>
<dbReference type="STRING" id="9606.ENSP00000237014"/>
<dbReference type="BindingDB" id="P02766"/>
<dbReference type="ChEMBL" id="CHEMBL3194"/>
<dbReference type="DrugBank" id="DB07201">
    <property type="generic name" value="(2S)-3-[(9H-fluoren-9-ylideneamino)oxy]-2-methylpropanoic acid"/>
</dbReference>
<dbReference type="DrugBank" id="DB07176">
    <property type="generic name" value="1-Naphthylamine-5-sulfonic acid"/>
</dbReference>
<dbReference type="DrugBank" id="DB07047">
    <property type="generic name" value="2',4'-DICHLORO-4-HYDROXY-1,1'-BIPHENYL-3-CARBOXYLIC ACID"/>
</dbReference>
<dbReference type="DrugBank" id="DB06935">
    <property type="generic name" value="2',6'-DIFLUOROBIPHENYL-4-CARBOXYLIC ACID"/>
</dbReference>
<dbReference type="DrugBank" id="DB02417">
    <property type="generic name" value="2,4,6-Tribromophenol"/>
</dbReference>
<dbReference type="DrugBank" id="DB07694">
    <property type="generic name" value="2,5-dichloro-N-(3,5-dibromo-4-hydroxyphenyl)benzamide"/>
</dbReference>
<dbReference type="DrugBank" id="DB08101">
    <property type="generic name" value="2,6-dibromo-4-[(E)-2-phenylethenyl]phenol"/>
</dbReference>
<dbReference type="DrugBank" id="DB08103">
    <property type="generic name" value="2,6-dibromo-4-phenoxyphenol"/>
</dbReference>
<dbReference type="DrugBank" id="DB08100">
    <property type="generic name" value="2,6-dimethyl-4-[(E)-2-phenylethenyl]phenol"/>
</dbReference>
<dbReference type="DrugBank" id="DB06907">
    <property type="generic name" value="2-(2,6-DICHLOROPHENYL)-1,3-BENZOXAZOLE-6-CARBOXYLIC ACID"/>
</dbReference>
<dbReference type="DrugBank" id="DB08207">
    <property type="generic name" value="2-(3,5-DIMETHYLPHENYL)-1,3-BENZOXAZOLE"/>
</dbReference>
<dbReference type="DrugBank" id="DB04756">
    <property type="generic name" value="2-[(3,5-Dichloro-4-trioxidanylphenyl)amino]benzoic acid"/>
</dbReference>
<dbReference type="DrugBank" id="DB04674">
    <property type="generic name" value="2-HYDROXY-3,5-DIIODOBENZOIC ACID"/>
</dbReference>
<dbReference type="DrugBank" id="DB07775">
    <property type="generic name" value="3',5'-DIBROMO-2',4,4',6'-TETRAHYDROXY AURONE"/>
</dbReference>
<dbReference type="DrugBank" id="DB07753">
    <property type="generic name" value="3',5'-DIFLUOROBIPHENYL-4-CARBOXYLIC ACID"/>
</dbReference>
<dbReference type="DrugBank" id="DB03239">
    <property type="generic name" value="3',5'-Dinitro-N-Acetyl-L-Thyronine"/>
</dbReference>
<dbReference type="DrugBank" id="DB03346">
    <property type="generic name" value="3,3',5,5'-tetrachlorobiphenyl-4,4'-diol"/>
</dbReference>
<dbReference type="DrugBank" id="DB08102">
    <property type="generic name" value="3,5-dibromobiphenyl-4-ol"/>
</dbReference>
<dbReference type="DrugBank" id="DB07282">
    <property type="generic name" value="3-({[(1Z)-(2-methoxyphenyl)methylidene]amino}oxy)propanoic acid"/>
</dbReference>
<dbReference type="DrugBank" id="DB07240">
    <property type="generic name" value="3-[(9H-fluoren-9-ylideneamino)oxy]propanoic acid"/>
</dbReference>
<dbReference type="DrugBank" id="DB06885">
    <property type="generic name" value="3-[({(1E)-[2-(trifluoromethyl)phenyl]methylidene}amino)oxy]propanoic acid"/>
</dbReference>
<dbReference type="DrugBank" id="DB08206">
    <property type="generic name" value="4-(1,3-BENZOXAZOL-2-YL)-2,6-DIBROMOPHENOL"/>
</dbReference>
<dbReference type="DrugBank" id="DB08205">
    <property type="generic name" value="4-(1,3-BENZOXAZOL-2-YL)-2,6-DIMETHYLPHENOL"/>
</dbReference>
<dbReference type="DrugBank" id="DB01838">
    <property type="generic name" value="6,4'-Dihydroxy-3-Methyl-3',5'-Dibromoflavone"/>
</dbReference>
<dbReference type="DrugBank" id="DB04474">
    <property type="generic name" value="8-anilinonaphthalene-1-sulfonic acid"/>
</dbReference>
<dbReference type="DrugBank" id="DB17999">
    <property type="generic name" value="Acoramidis"/>
</dbReference>
<dbReference type="DrugBank" id="DB09130">
    <property type="generic name" value="Copper"/>
</dbReference>
<dbReference type="DrugBank" id="DB03682">
    <property type="generic name" value="Dibenzofuran-4,6-Dicarboxylic Acid"/>
</dbReference>
<dbReference type="DrugBank" id="DB00586">
    <property type="generic name" value="Diclofenac"/>
</dbReference>
<dbReference type="DrugBank" id="DB00255">
    <property type="generic name" value="Diethylstilbestrol"/>
</dbReference>
<dbReference type="DrugBank" id="DB00861">
    <property type="generic name" value="Diflunisal"/>
</dbReference>
<dbReference type="DrugBank" id="DB01093">
    <property type="generic name" value="Dimethyl sulfoxide"/>
</dbReference>
<dbReference type="DrugBank" id="DB02266">
    <property type="generic name" value="Flufenamic acid"/>
</dbReference>
<dbReference type="DrugBank" id="DB05352">
    <property type="generic name" value="Fx-1006A"/>
</dbReference>
<dbReference type="DrugBank" id="DB01645">
    <property type="generic name" value="Genistein"/>
</dbReference>
<dbReference type="DrugBank" id="DB14713">
    <property type="generic name" value="Inotersen"/>
</dbReference>
<dbReference type="DrugBank" id="DB00451">
    <property type="generic name" value="Levothyroxine"/>
</dbReference>
<dbReference type="DrugBank" id="DB00279">
    <property type="generic name" value="Liothyronine"/>
</dbReference>
<dbReference type="DrugBank" id="DB01583">
    <property type="generic name" value="Liotrix"/>
</dbReference>
<dbReference type="DrugBank" id="DB07962">
    <property type="generic name" value="METHYL N-[(2',4'-DIFLUORO-4-HYDROXY-5-IODOBIPHENYL-3-YL)CARBONYL]-BETA-ALANINATE"/>
</dbReference>
<dbReference type="DrugBank" id="DB07693">
    <property type="generic name" value="N-(3,5-dibromo-4-hydroxyphenyl)-2,6-dimethylbenzamide"/>
</dbReference>
<dbReference type="DrugBank" id="DB07695">
    <property type="generic name" value="N-(3,5-dibromo-4-hydroxyphenyl)-4-hydroxy-3,5-dimethylbenzamide"/>
</dbReference>
<dbReference type="DrugBank" id="DB08104">
    <property type="generic name" value="N-(3,5-dibromo-4-hydroxyphenyl)benzamide"/>
</dbReference>
<dbReference type="DrugBank" id="DB02698">
    <property type="generic name" value="N-(M-Trifluoromethylphenyl) Phenoxazine-4,6-Dicarboxylic Acid"/>
</dbReference>
<dbReference type="DrugBank" id="DB07963">
    <property type="generic name" value="N-[(2',4'-DIFLUORO-4-HYDROXY-5-IODOBIPHENYL-3-YL)CARBONYL]-BETA-ALANINE"/>
</dbReference>
<dbReference type="DrugBank" id="DB05235">
    <property type="generic name" value="NRP409"/>
</dbReference>
<dbReference type="DrugBank" id="DB02179">
    <property type="generic name" value="O-Trifluoromethylphenyl Anthranilic Acid"/>
</dbReference>
<dbReference type="DrugBank" id="DB03167">
    <property type="generic name" value="Pentabromophenol"/>
</dbReference>
<dbReference type="DrugBank" id="DB02709">
    <property type="generic name" value="Resveratrol"/>
</dbReference>
<dbReference type="DrugBank" id="DB16309">
    <property type="generic name" value="Revusiran"/>
</dbReference>
<dbReference type="DrugBank" id="DB11644">
    <property type="generic name" value="Tafamidis"/>
</dbReference>
<dbReference type="DrugBank" id="DB01751">
    <property type="generic name" value="Tetraiodothyroacetic acid"/>
</dbReference>
<dbReference type="DrugBank" id="DB09100">
    <property type="generic name" value="Thyroid, porcine"/>
</dbReference>
<dbReference type="DrugBank" id="DB01593">
    <property type="generic name" value="Zinc"/>
</dbReference>
<dbReference type="DrugBank" id="DB14487">
    <property type="generic name" value="Zinc acetate"/>
</dbReference>
<dbReference type="DrugBank" id="DB14533">
    <property type="generic name" value="Zinc chloride"/>
</dbReference>
<dbReference type="DrugBank" id="DB14548">
    <property type="generic name" value="Zinc sulfate, unspecified form"/>
</dbReference>
<dbReference type="DrugCentral" id="P02766"/>
<dbReference type="GuidetoPHARMACOLOGY" id="2851"/>
<dbReference type="CarbonylDB" id="P02766"/>
<dbReference type="GlyCosmos" id="P02766">
    <property type="glycosylation" value="1 site, No reported glycans"/>
</dbReference>
<dbReference type="GlyGen" id="P02766">
    <property type="glycosylation" value="2 sites"/>
</dbReference>
<dbReference type="iPTMnet" id="P02766"/>
<dbReference type="PhosphoSitePlus" id="P02766"/>
<dbReference type="BioMuta" id="TTR"/>
<dbReference type="DMDM" id="136464"/>
<dbReference type="REPRODUCTION-2DPAGE" id="P02766"/>
<dbReference type="CPTAC" id="non-CPTAC-1165"/>
<dbReference type="jPOST" id="P02766"/>
<dbReference type="MassIVE" id="P02766"/>
<dbReference type="PaxDb" id="9606-ENSP00000237014"/>
<dbReference type="PeptideAtlas" id="P02766"/>
<dbReference type="PRIDE" id="P02766"/>
<dbReference type="ProteomicsDB" id="51586"/>
<dbReference type="TopDownProteomics" id="P02766"/>
<dbReference type="Antibodypedia" id="650">
    <property type="antibodies" value="1389 antibodies from 46 providers"/>
</dbReference>
<dbReference type="CPTC" id="P02766">
    <property type="antibodies" value="1 antibody"/>
</dbReference>
<dbReference type="DNASU" id="7276"/>
<dbReference type="Ensembl" id="ENST00000237014.8">
    <property type="protein sequence ID" value="ENSP00000237014.4"/>
    <property type="gene ID" value="ENSG00000118271.12"/>
</dbReference>
<dbReference type="Ensembl" id="ENST00000649620.1">
    <property type="protein sequence ID" value="ENSP00000497927.1"/>
    <property type="gene ID" value="ENSG00000118271.12"/>
</dbReference>
<dbReference type="GeneID" id="7276"/>
<dbReference type="KEGG" id="hsa:7276"/>
<dbReference type="MANE-Select" id="ENST00000237014.8">
    <property type="protein sequence ID" value="ENSP00000237014.4"/>
    <property type="RefSeq nucleotide sequence ID" value="NM_000371.4"/>
    <property type="RefSeq protein sequence ID" value="NP_000362.1"/>
</dbReference>
<dbReference type="UCSC" id="uc002kwx.5">
    <property type="organism name" value="human"/>
</dbReference>
<dbReference type="AGR" id="HGNC:12405"/>
<dbReference type="CTD" id="7276"/>
<dbReference type="DisGeNET" id="7276"/>
<dbReference type="GeneCards" id="TTR"/>
<dbReference type="GeneReviews" id="TTR"/>
<dbReference type="HGNC" id="HGNC:12405">
    <property type="gene designation" value="TTR"/>
</dbReference>
<dbReference type="HPA" id="ENSG00000118271">
    <property type="expression patterns" value="Tissue enriched (choroid)"/>
</dbReference>
<dbReference type="MalaCards" id="TTR"/>
<dbReference type="MIM" id="105210">
    <property type="type" value="phenotype"/>
</dbReference>
<dbReference type="MIM" id="115430">
    <property type="type" value="phenotype"/>
</dbReference>
<dbReference type="MIM" id="145680">
    <property type="type" value="phenotype"/>
</dbReference>
<dbReference type="MIM" id="176300">
    <property type="type" value="gene"/>
</dbReference>
<dbReference type="neXtProt" id="NX_P02766"/>
<dbReference type="OpenTargets" id="ENSG00000118271"/>
<dbReference type="Orphanet" id="85451">
    <property type="disease" value="ATTRV122I amyloidosis"/>
</dbReference>
<dbReference type="Orphanet" id="85447">
    <property type="disease" value="ATTRV30M amyloidosis"/>
</dbReference>
<dbReference type="Orphanet" id="597939">
    <property type="disease" value="Euthyroid dysprealbuminemic hyperthyroxinemia"/>
</dbReference>
<dbReference type="PharmGKB" id="PA37069"/>
<dbReference type="VEuPathDB" id="HostDB:ENSG00000118271"/>
<dbReference type="eggNOG" id="KOG3006">
    <property type="taxonomic scope" value="Eukaryota"/>
</dbReference>
<dbReference type="GeneTree" id="ENSGT00940000153229"/>
<dbReference type="HOGENOM" id="CLU_115536_2_0_1"/>
<dbReference type="InParanoid" id="P02766"/>
<dbReference type="OMA" id="AMYKVEL"/>
<dbReference type="OrthoDB" id="10265230at2759"/>
<dbReference type="PAN-GO" id="P02766">
    <property type="GO annotations" value="3 GO annotations based on evolutionary models"/>
</dbReference>
<dbReference type="PhylomeDB" id="P02766"/>
<dbReference type="TreeFam" id="TF300210"/>
<dbReference type="PathwayCommons" id="P02766"/>
<dbReference type="Reactome" id="R-HSA-2453902">
    <property type="pathway name" value="The canonical retinoid cycle in rods (twilight vision)"/>
</dbReference>
<dbReference type="Reactome" id="R-HSA-3000171">
    <property type="pathway name" value="Non-integrin membrane-ECM interactions"/>
</dbReference>
<dbReference type="Reactome" id="R-HSA-6798695">
    <property type="pathway name" value="Neutrophil degranulation"/>
</dbReference>
<dbReference type="Reactome" id="R-HSA-975634">
    <property type="pathway name" value="Retinoid metabolism and transport"/>
</dbReference>
<dbReference type="Reactome" id="R-HSA-977225">
    <property type="pathway name" value="Amyloid fiber formation"/>
</dbReference>
<dbReference type="Reactome" id="R-HSA-9918449">
    <property type="pathway name" value="Defective visual phototransduction due to STRA6 loss of function"/>
</dbReference>
<dbReference type="SignaLink" id="P02766"/>
<dbReference type="BioGRID-ORCS" id="7276">
    <property type="hits" value="10 hits in 1147 CRISPR screens"/>
</dbReference>
<dbReference type="ChiTaRS" id="TTR">
    <property type="organism name" value="human"/>
</dbReference>
<dbReference type="EvolutionaryTrace" id="P02766"/>
<dbReference type="GeneWiki" id="Transthyretin"/>
<dbReference type="GenomeRNAi" id="7276"/>
<dbReference type="Pharos" id="P02766">
    <property type="development level" value="Tclin"/>
</dbReference>
<dbReference type="PRO" id="PR:P02766"/>
<dbReference type="Proteomes" id="UP000005640">
    <property type="component" value="Chromosome 18"/>
</dbReference>
<dbReference type="RNAct" id="P02766">
    <property type="molecule type" value="protein"/>
</dbReference>
<dbReference type="Bgee" id="ENSG00000118271">
    <property type="expression patterns" value="Expressed in choroid plexus epithelium and 143 other cell types or tissues"/>
</dbReference>
<dbReference type="ExpressionAtlas" id="P02766">
    <property type="expression patterns" value="baseline and differential"/>
</dbReference>
<dbReference type="GO" id="GO:0035578">
    <property type="term" value="C:azurophil granule lumen"/>
    <property type="evidence" value="ECO:0000304"/>
    <property type="project" value="Reactome"/>
</dbReference>
<dbReference type="GO" id="GO:0070062">
    <property type="term" value="C:extracellular exosome"/>
    <property type="evidence" value="ECO:0007005"/>
    <property type="project" value="UniProtKB"/>
</dbReference>
<dbReference type="GO" id="GO:0005576">
    <property type="term" value="C:extracellular region"/>
    <property type="evidence" value="ECO:0000304"/>
    <property type="project" value="Reactome"/>
</dbReference>
<dbReference type="GO" id="GO:0005615">
    <property type="term" value="C:extracellular space"/>
    <property type="evidence" value="ECO:0007005"/>
    <property type="project" value="UniProtKB"/>
</dbReference>
<dbReference type="GO" id="GO:0032991">
    <property type="term" value="C:protein-containing complex"/>
    <property type="evidence" value="ECO:0007669"/>
    <property type="project" value="Ensembl"/>
</dbReference>
<dbReference type="GO" id="GO:0005179">
    <property type="term" value="F:hormone activity"/>
    <property type="evidence" value="ECO:0007669"/>
    <property type="project" value="UniProtKB-KW"/>
</dbReference>
<dbReference type="GO" id="GO:0042562">
    <property type="term" value="F:hormone binding"/>
    <property type="evidence" value="ECO:0007669"/>
    <property type="project" value="Ensembl"/>
</dbReference>
<dbReference type="GO" id="GO:0042802">
    <property type="term" value="F:identical protein binding"/>
    <property type="evidence" value="ECO:0000353"/>
    <property type="project" value="IntAct"/>
</dbReference>
<dbReference type="GO" id="GO:0140313">
    <property type="term" value="F:molecular sequestering activity"/>
    <property type="evidence" value="ECO:0007669"/>
    <property type="project" value="Ensembl"/>
</dbReference>
<dbReference type="GO" id="GO:0044877">
    <property type="term" value="F:protein-containing complex binding"/>
    <property type="evidence" value="ECO:0007669"/>
    <property type="project" value="Ensembl"/>
</dbReference>
<dbReference type="GO" id="GO:0003105">
    <property type="term" value="P:negative regulation of glomerular filtration"/>
    <property type="evidence" value="ECO:0007669"/>
    <property type="project" value="Ensembl"/>
</dbReference>
<dbReference type="GO" id="GO:0007603">
    <property type="term" value="P:phototransduction, visible light"/>
    <property type="evidence" value="ECO:0007669"/>
    <property type="project" value="Ensembl"/>
</dbReference>
<dbReference type="GO" id="GO:0006144">
    <property type="term" value="P:purine nucleobase metabolic process"/>
    <property type="evidence" value="ECO:0000318"/>
    <property type="project" value="GO_Central"/>
</dbReference>
<dbReference type="GO" id="GO:0001523">
    <property type="term" value="P:retinoid metabolic process"/>
    <property type="evidence" value="ECO:0007669"/>
    <property type="project" value="Ensembl"/>
</dbReference>
<dbReference type="CDD" id="cd05821">
    <property type="entry name" value="TLP_Transthyretin"/>
    <property type="match status" value="1"/>
</dbReference>
<dbReference type="FunFam" id="2.60.40.180:FF:000002">
    <property type="entry name" value="Transthyretin"/>
    <property type="match status" value="1"/>
</dbReference>
<dbReference type="Gene3D" id="2.60.40.180">
    <property type="entry name" value="Transthyretin/hydroxyisourate hydrolase domain"/>
    <property type="match status" value="1"/>
</dbReference>
<dbReference type="InterPro" id="IPR023418">
    <property type="entry name" value="Thyroxine_BS"/>
</dbReference>
<dbReference type="InterPro" id="IPR000895">
    <property type="entry name" value="Transthyretin/HIU_hydrolase"/>
</dbReference>
<dbReference type="InterPro" id="IPR023416">
    <property type="entry name" value="Transthyretin/HIU_hydrolase_d"/>
</dbReference>
<dbReference type="InterPro" id="IPR036817">
    <property type="entry name" value="Transthyretin/HIU_hydrolase_sf"/>
</dbReference>
<dbReference type="InterPro" id="IPR023419">
    <property type="entry name" value="Transthyretin_CS"/>
</dbReference>
<dbReference type="PANTHER" id="PTHR10395:SF12">
    <property type="entry name" value="TRANSTHYRETIN"/>
    <property type="match status" value="1"/>
</dbReference>
<dbReference type="PANTHER" id="PTHR10395">
    <property type="entry name" value="URICASE AND TRANSTHYRETIN-RELATED"/>
    <property type="match status" value="1"/>
</dbReference>
<dbReference type="Pfam" id="PF00576">
    <property type="entry name" value="Transthyretin"/>
    <property type="match status" value="1"/>
</dbReference>
<dbReference type="PRINTS" id="PR00189">
    <property type="entry name" value="TRNSTHYRETIN"/>
</dbReference>
<dbReference type="SMART" id="SM00095">
    <property type="entry name" value="TR_THY"/>
    <property type="match status" value="1"/>
</dbReference>
<dbReference type="SUPFAM" id="SSF49472">
    <property type="entry name" value="Transthyretin (synonym: prealbumin)"/>
    <property type="match status" value="1"/>
</dbReference>
<dbReference type="PROSITE" id="PS00768">
    <property type="entry name" value="TRANSTHYRETIN_1"/>
    <property type="match status" value="1"/>
</dbReference>
<dbReference type="PROSITE" id="PS00769">
    <property type="entry name" value="TRANSTHYRETIN_2"/>
    <property type="match status" value="1"/>
</dbReference>
<keyword id="KW-0002">3D-structure</keyword>
<keyword id="KW-0034">Amyloid</keyword>
<keyword id="KW-1008">Amyloidosis</keyword>
<keyword id="KW-0963">Cytoplasm</keyword>
<keyword id="KW-0903">Direct protein sequencing</keyword>
<keyword id="KW-0225">Disease variant</keyword>
<keyword id="KW-0301">Gamma-carboxyglutamic acid</keyword>
<keyword id="KW-0325">Glycoprotein</keyword>
<keyword id="KW-0372">Hormone</keyword>
<keyword id="KW-0622">Neuropathy</keyword>
<keyword id="KW-0597">Phosphoprotein</keyword>
<keyword id="KW-1267">Proteomics identification</keyword>
<keyword id="KW-1185">Reference proteome</keyword>
<keyword id="KW-0964">Secreted</keyword>
<keyword id="KW-0732">Signal</keyword>
<keyword id="KW-0765">Sulfation</keyword>
<keyword id="KW-0795">Thyroid hormone</keyword>
<keyword id="KW-0813">Transport</keyword>
<accession>P02766</accession>
<accession>Q549C7</accession>
<accession>Q6IB96</accession>
<accession>Q9UBZ6</accession>
<accession>Q9UCM9</accession>
<proteinExistence type="evidence at protein level"/>
<name>TTHY_HUMAN</name>
<organism>
    <name type="scientific">Homo sapiens</name>
    <name type="common">Human</name>
    <dbReference type="NCBI Taxonomy" id="9606"/>
    <lineage>
        <taxon>Eukaryota</taxon>
        <taxon>Metazoa</taxon>
        <taxon>Chordata</taxon>
        <taxon>Craniata</taxon>
        <taxon>Vertebrata</taxon>
        <taxon>Euteleostomi</taxon>
        <taxon>Mammalia</taxon>
        <taxon>Eutheria</taxon>
        <taxon>Euarchontoglires</taxon>
        <taxon>Primates</taxon>
        <taxon>Haplorrhini</taxon>
        <taxon>Catarrhini</taxon>
        <taxon>Hominidae</taxon>
        <taxon>Homo</taxon>
    </lineage>
</organism>
<gene>
    <name type="primary">TTR</name>
    <name type="synonym">PALB</name>
</gene>
<evidence type="ECO:0000250" key="1">
    <source>
        <dbReference type="UniProtKB" id="P02767"/>
    </source>
</evidence>
<evidence type="ECO:0000269" key="2">
    <source>
    </source>
</evidence>
<evidence type="ECO:0000269" key="3">
    <source>
    </source>
</evidence>
<evidence type="ECO:0000269" key="4">
    <source>
    </source>
</evidence>
<evidence type="ECO:0000269" key="5">
    <source>
    </source>
</evidence>
<evidence type="ECO:0000269" key="6">
    <source>
    </source>
</evidence>
<evidence type="ECO:0000269" key="7">
    <source>
    </source>
</evidence>
<evidence type="ECO:0000269" key="8">
    <source>
    </source>
</evidence>
<evidence type="ECO:0000269" key="9">
    <source>
    </source>
</evidence>
<evidence type="ECO:0000269" key="10">
    <source>
    </source>
</evidence>
<evidence type="ECO:0000269" key="11">
    <source>
    </source>
</evidence>
<evidence type="ECO:0000269" key="12">
    <source>
    </source>
</evidence>
<evidence type="ECO:0000269" key="13">
    <source>
    </source>
</evidence>
<evidence type="ECO:0000269" key="14">
    <source>
    </source>
</evidence>
<evidence type="ECO:0000269" key="15">
    <source>
    </source>
</evidence>
<evidence type="ECO:0000269" key="16">
    <source>
    </source>
</evidence>
<evidence type="ECO:0000269" key="17">
    <source>
    </source>
</evidence>
<evidence type="ECO:0000269" key="18">
    <source>
    </source>
</evidence>
<evidence type="ECO:0000269" key="19">
    <source>
    </source>
</evidence>
<evidence type="ECO:0000269" key="20">
    <source>
    </source>
</evidence>
<evidence type="ECO:0000269" key="21">
    <source>
    </source>
</evidence>
<evidence type="ECO:0000269" key="22">
    <source>
    </source>
</evidence>
<evidence type="ECO:0000269" key="23">
    <source>
    </source>
</evidence>
<evidence type="ECO:0000269" key="24">
    <source>
    </source>
</evidence>
<evidence type="ECO:0000269" key="25">
    <source>
    </source>
</evidence>
<evidence type="ECO:0000269" key="26">
    <source>
    </source>
</evidence>
<evidence type="ECO:0000269" key="27">
    <source>
    </source>
</evidence>
<evidence type="ECO:0000269" key="28">
    <source>
    </source>
</evidence>
<evidence type="ECO:0000269" key="29">
    <source>
    </source>
</evidence>
<evidence type="ECO:0000269" key="30">
    <source>
    </source>
</evidence>
<evidence type="ECO:0000269" key="31">
    <source>
    </source>
</evidence>
<evidence type="ECO:0000269" key="32">
    <source>
    </source>
</evidence>
<evidence type="ECO:0000269" key="33">
    <source>
    </source>
</evidence>
<evidence type="ECO:0000269" key="34">
    <source>
    </source>
</evidence>
<evidence type="ECO:0000269" key="35">
    <source>
    </source>
</evidence>
<evidence type="ECO:0000269" key="36">
    <source>
    </source>
</evidence>
<evidence type="ECO:0000269" key="37">
    <source>
    </source>
</evidence>
<evidence type="ECO:0000269" key="38">
    <source>
    </source>
</evidence>
<evidence type="ECO:0000269" key="39">
    <source>
    </source>
</evidence>
<evidence type="ECO:0000269" key="40">
    <source>
    </source>
</evidence>
<evidence type="ECO:0000269" key="41">
    <source>
    </source>
</evidence>
<evidence type="ECO:0000269" key="42">
    <source>
    </source>
</evidence>
<evidence type="ECO:0000269" key="43">
    <source>
    </source>
</evidence>
<evidence type="ECO:0000269" key="44">
    <source>
    </source>
</evidence>
<evidence type="ECO:0000269" key="45">
    <source>
    </source>
</evidence>
<evidence type="ECO:0000269" key="46">
    <source>
    </source>
</evidence>
<evidence type="ECO:0000269" key="47">
    <source>
    </source>
</evidence>
<evidence type="ECO:0000269" key="48">
    <source>
    </source>
</evidence>
<evidence type="ECO:0000269" key="49">
    <source>
    </source>
</evidence>
<evidence type="ECO:0000269" key="50">
    <source>
    </source>
</evidence>
<evidence type="ECO:0000269" key="51">
    <source>
    </source>
</evidence>
<evidence type="ECO:0000269" key="52">
    <source>
    </source>
</evidence>
<evidence type="ECO:0000269" key="53">
    <source>
    </source>
</evidence>
<evidence type="ECO:0000269" key="54">
    <source>
    </source>
</evidence>
<evidence type="ECO:0000269" key="55">
    <source>
    </source>
</evidence>
<evidence type="ECO:0000269" key="56">
    <source>
    </source>
</evidence>
<evidence type="ECO:0000269" key="57">
    <source>
    </source>
</evidence>
<evidence type="ECO:0000269" key="58">
    <source>
    </source>
</evidence>
<evidence type="ECO:0000269" key="59">
    <source>
    </source>
</evidence>
<evidence type="ECO:0000269" key="60">
    <source>
    </source>
</evidence>
<evidence type="ECO:0000269" key="61">
    <source>
    </source>
</evidence>
<evidence type="ECO:0000269" key="62">
    <source>
    </source>
</evidence>
<evidence type="ECO:0000269" key="63">
    <source>
    </source>
</evidence>
<evidence type="ECO:0000269" key="64">
    <source>
    </source>
</evidence>
<evidence type="ECO:0000269" key="65">
    <source>
    </source>
</evidence>
<evidence type="ECO:0000269" key="66">
    <source>
    </source>
</evidence>
<evidence type="ECO:0000269" key="67">
    <source>
    </source>
</evidence>
<evidence type="ECO:0000269" key="68">
    <source>
    </source>
</evidence>
<evidence type="ECO:0000269" key="69">
    <source>
    </source>
</evidence>
<evidence type="ECO:0000269" key="70">
    <source>
    </source>
</evidence>
<evidence type="ECO:0000269" key="71">
    <source>
    </source>
</evidence>
<evidence type="ECO:0000269" key="72">
    <source>
    </source>
</evidence>
<evidence type="ECO:0000269" key="73">
    <source>
    </source>
</evidence>
<evidence type="ECO:0000269" key="74">
    <source>
    </source>
</evidence>
<evidence type="ECO:0000269" key="75">
    <source>
    </source>
</evidence>
<evidence type="ECO:0000269" key="76">
    <source>
    </source>
</evidence>
<evidence type="ECO:0000269" key="77">
    <source>
    </source>
</evidence>
<evidence type="ECO:0000269" key="78">
    <source>
    </source>
</evidence>
<evidence type="ECO:0000269" key="79">
    <source>
    </source>
</evidence>
<evidence type="ECO:0000269" key="80">
    <source>
    </source>
</evidence>
<evidence type="ECO:0000269" key="81">
    <source>
    </source>
</evidence>
<evidence type="ECO:0000269" key="82">
    <source>
    </source>
</evidence>
<evidence type="ECO:0000269" key="83">
    <source>
    </source>
</evidence>
<evidence type="ECO:0000269" key="84">
    <source>
    </source>
</evidence>
<evidence type="ECO:0000269" key="85">
    <source>
    </source>
</evidence>
<evidence type="ECO:0000269" key="86">
    <source>
    </source>
</evidence>
<evidence type="ECO:0000269" key="87">
    <source>
    </source>
</evidence>
<evidence type="ECO:0000269" key="88">
    <source>
    </source>
</evidence>
<evidence type="ECO:0000269" key="89">
    <source>
    </source>
</evidence>
<evidence type="ECO:0000269" key="90">
    <source>
    </source>
</evidence>
<evidence type="ECO:0000269" key="91">
    <source>
    </source>
</evidence>
<evidence type="ECO:0000269" key="92">
    <source>
    </source>
</evidence>
<evidence type="ECO:0000269" key="93">
    <source>
    </source>
</evidence>
<evidence type="ECO:0000269" key="94">
    <source>
    </source>
</evidence>
<evidence type="ECO:0000269" key="95">
    <source>
    </source>
</evidence>
<evidence type="ECO:0000269" key="96">
    <source>
    </source>
</evidence>
<evidence type="ECO:0000269" key="97">
    <source>
    </source>
</evidence>
<evidence type="ECO:0000269" key="98">
    <source>
    </source>
</evidence>
<evidence type="ECO:0000269" key="99">
    <source>
    </source>
</evidence>
<evidence type="ECO:0000269" key="100">
    <source>
    </source>
</evidence>
<evidence type="ECO:0000269" key="101">
    <source>
    </source>
</evidence>
<evidence type="ECO:0000269" key="102">
    <source>
    </source>
</evidence>
<evidence type="ECO:0000269" key="103">
    <source>
    </source>
</evidence>
<evidence type="ECO:0000269" key="104">
    <source>
    </source>
</evidence>
<evidence type="ECO:0000269" key="105">
    <source ref="91"/>
</evidence>
<evidence type="ECO:0000305" key="106"/>
<evidence type="ECO:0000305" key="107">
    <source>
    </source>
</evidence>
<evidence type="ECO:0007744" key="108">
    <source>
        <dbReference type="PDB" id="1ICT"/>
    </source>
</evidence>
<evidence type="ECO:0007744" key="109">
    <source>
        <dbReference type="PDB" id="2H4E"/>
    </source>
</evidence>
<evidence type="ECO:0007829" key="110">
    <source>
        <dbReference type="PDB" id="1F86"/>
    </source>
</evidence>
<evidence type="ECO:0007829" key="111">
    <source>
        <dbReference type="PDB" id="1TSH"/>
    </source>
</evidence>
<evidence type="ECO:0007829" key="112">
    <source>
        <dbReference type="PDB" id="2QEL"/>
    </source>
</evidence>
<evidence type="ECO:0007829" key="113">
    <source>
        <dbReference type="PDB" id="5JIM"/>
    </source>
</evidence>
<evidence type="ECO:0007829" key="114">
    <source>
        <dbReference type="PDB" id="6E78"/>
    </source>
</evidence>
<comment type="function">
    <text evidence="75">Thyroid hormone-binding protein. Probably transports thyroxine from the bloodstream to the brain.</text>
</comment>
<comment type="subunit">
    <text evidence="3 17 20 27 33 34 44 45 46 57 58 61 62">Homotetramer. Dimer of dimers. In the homotetramer, subunits assemble around a central channel that can accommodate two ligand molecules. Interacts with RBP4.</text>
</comment>
<comment type="interaction">
    <interactant intactId="EBI-711909">
        <id>P02766</id>
    </interactant>
    <interactant intactId="EBI-1646426">
        <id>Q15109</id>
        <label>AGER</label>
    </interactant>
    <organismsDiffer>false</organismsDiffer>
    <experiments>2</experiments>
</comment>
<comment type="interaction">
    <interactant intactId="EBI-711909">
        <id>P02766</id>
    </interactant>
    <interactant intactId="EBI-77613">
        <id>P05067</id>
        <label>APP</label>
    </interactant>
    <organismsDiffer>false</organismsDiffer>
    <experiments>3</experiments>
</comment>
<comment type="interaction">
    <interactant intactId="EBI-711909">
        <id>P02766</id>
    </interactant>
    <interactant intactId="EBI-821758">
        <id>PRO_0000000092</id>
        <label>APP</label>
        <dbReference type="UniProtKB" id="P05067"/>
    </interactant>
    <organismsDiffer>false</organismsDiffer>
    <experiments>2</experiments>
</comment>
<comment type="interaction">
    <interactant intactId="EBI-711909">
        <id>P02766</id>
    </interactant>
    <interactant intactId="EBI-2875816">
        <id>Q9NP61</id>
        <label>ARFGAP3</label>
    </interactant>
    <organismsDiffer>false</organismsDiffer>
    <experiments>3</experiments>
</comment>
<comment type="interaction">
    <interactant intactId="EBI-711909">
        <id>P02766</id>
    </interactant>
    <interactant intactId="EBI-14199987">
        <id>Q9Y575-3</id>
        <label>ASB3</label>
    </interactant>
    <organismsDiffer>false</organismsDiffer>
    <experiments>3</experiments>
</comment>
<comment type="interaction">
    <interactant intactId="EBI-711909">
        <id>P02766</id>
    </interactant>
    <interactant intactId="EBI-492498">
        <id>P18848</id>
        <label>ATF4</label>
    </interactant>
    <organismsDiffer>false</organismsDiffer>
    <experiments>3</experiments>
</comment>
<comment type="interaction">
    <interactant intactId="EBI-711909">
        <id>P02766</id>
    </interactant>
    <interactant intactId="EBI-492509">
        <id>Q9Y2D1</id>
        <label>ATF5</label>
    </interactant>
    <organismsDiffer>false</organismsDiffer>
    <experiments>3</experiments>
</comment>
<comment type="interaction">
    <interactant intactId="EBI-711909">
        <id>P02766</id>
    </interactant>
    <interactant intactId="EBI-2891281">
        <id>P15313</id>
        <label>ATP6V1B1</label>
    </interactant>
    <organismsDiffer>false</organismsDiffer>
    <experiments>3</experiments>
</comment>
<comment type="interaction">
    <interactant intactId="EBI-711909">
        <id>P02766</id>
    </interactant>
    <interactant intactId="EBI-741210">
        <id>Q0VDD7</id>
        <label>BRME1</label>
    </interactant>
    <organismsDiffer>false</organismsDiffer>
    <experiments>3</experiments>
</comment>
<comment type="interaction">
    <interactant intactId="EBI-711909">
        <id>P02766</id>
    </interactant>
    <interactant intactId="EBI-355410">
        <id>Q8N163</id>
        <label>CCAR2</label>
    </interactant>
    <organismsDiffer>false</organismsDiffer>
    <experiments>3</experiments>
</comment>
<comment type="interaction">
    <interactant intactId="EBI-711909">
        <id>P02766</id>
    </interactant>
    <interactant intactId="EBI-1181367">
        <id>Q01850</id>
        <label>CDR2</label>
    </interactant>
    <organismsDiffer>false</organismsDiffer>
    <experiments>3</experiments>
</comment>
<comment type="interaction">
    <interactant intactId="EBI-711909">
        <id>P02766</id>
    </interactant>
    <interactant intactId="EBI-11953200">
        <id>Q494V2-2</id>
        <label>CFAP100</label>
    </interactant>
    <organismsDiffer>false</organismsDiffer>
    <experiments>3</experiments>
</comment>
<comment type="interaction">
    <interactant intactId="EBI-711909">
        <id>P02766</id>
    </interactant>
    <interactant intactId="EBI-744045">
        <id>Q9Y3D0</id>
        <label>CIAO2B</label>
    </interactant>
    <organismsDiffer>false</organismsDiffer>
    <experiments>3</experiments>
</comment>
<comment type="interaction">
    <interactant intactId="EBI-711909">
        <id>P02766</id>
    </interactant>
    <interactant intactId="EBI-3957044">
        <id>Q9Y240</id>
        <label>CLEC11A</label>
    </interactant>
    <organismsDiffer>false</organismsDiffer>
    <experiments>3</experiments>
</comment>
<comment type="interaction">
    <interactant intactId="EBI-711909">
        <id>P02766</id>
    </interactant>
    <interactant intactId="EBI-25836090">
        <id>Q6PJW8-3</id>
        <label>CNST</label>
    </interactant>
    <organismsDiffer>false</organismsDiffer>
    <experiments>3</experiments>
</comment>
<comment type="interaction">
    <interactant intactId="EBI-711909">
        <id>P02766</id>
    </interactant>
    <interactant intactId="EBI-720875">
        <id>Q96MW5</id>
        <label>COG8</label>
    </interactant>
    <organismsDiffer>false</organismsDiffer>
    <experiments>3</experiments>
</comment>
<comment type="interaction">
    <interactant intactId="EBI-711909">
        <id>P02766</id>
    </interactant>
    <interactant intactId="EBI-350590">
        <id>Q9UNS2</id>
        <label>COPS3</label>
    </interactant>
    <organismsDiffer>false</organismsDiffer>
    <experiments>3</experiments>
</comment>
<comment type="interaction">
    <interactant intactId="EBI-711909">
        <id>P02766</id>
    </interactant>
    <interactant intactId="EBI-10213520">
        <id>Q6NXG1</id>
        <label>ESRP1</label>
    </interactant>
    <organismsDiffer>false</organismsDiffer>
    <experiments>3</experiments>
</comment>
<comment type="interaction">
    <interactant intactId="EBI-711909">
        <id>P02766</id>
    </interactant>
    <interactant intactId="EBI-25835236">
        <id>Q49AJ0-4</id>
        <label>FAM135B</label>
    </interactant>
    <organismsDiffer>false</organismsDiffer>
    <experiments>3</experiments>
</comment>
<comment type="interaction">
    <interactant intactId="EBI-711909">
        <id>P02766</id>
    </interactant>
    <interactant intactId="EBI-396453">
        <id>Q9UHY8</id>
        <label>FEZ2</label>
    </interactant>
    <organismsDiffer>false</organismsDiffer>
    <experiments>3</experiments>
</comment>
<comment type="interaction">
    <interactant intactId="EBI-711909">
        <id>P02766</id>
    </interactant>
    <interactant intactId="EBI-21649723">
        <id>Q7Z602</id>
        <label>GPR141</label>
    </interactant>
    <organismsDiffer>false</organismsDiffer>
    <experiments>3</experiments>
</comment>
<comment type="interaction">
    <interactant intactId="EBI-711909">
        <id>P02766</id>
    </interactant>
    <interactant intactId="EBI-79722">
        <id>P68431</id>
        <label>H3C12</label>
    </interactant>
    <organismsDiffer>false</organismsDiffer>
    <experiments>3</experiments>
</comment>
<comment type="interaction">
    <interactant intactId="EBI-711909">
        <id>P02766</id>
    </interactant>
    <interactant intactId="EBI-8670520">
        <id>Q14642</id>
        <label>INPP5A</label>
    </interactant>
    <organismsDiffer>false</organismsDiffer>
    <experiments>2</experiments>
</comment>
<comment type="interaction">
    <interactant intactId="EBI-711909">
        <id>P02766</id>
    </interactant>
    <interactant intactId="EBI-10258659">
        <id>Q86U28</id>
        <label>ISCA2</label>
    </interactant>
    <organismsDiffer>false</organismsDiffer>
    <experiments>3</experiments>
</comment>
<comment type="interaction">
    <interactant intactId="EBI-711909">
        <id>P02766</id>
    </interactant>
    <interactant intactId="EBI-12382297">
        <id>Q96SI1-2</id>
        <label>KCTD15</label>
    </interactant>
    <organismsDiffer>false</organismsDiffer>
    <experiments>3</experiments>
</comment>
<comment type="interaction">
    <interactant intactId="EBI-711909">
        <id>P02766</id>
    </interactant>
    <interactant intactId="EBI-3909166">
        <id>Q06136</id>
        <label>KDSR</label>
    </interactant>
    <organismsDiffer>false</organismsDiffer>
    <experiments>3</experiments>
</comment>
<comment type="interaction">
    <interactant intactId="EBI-711909">
        <id>P02766</id>
    </interactant>
    <interactant intactId="EBI-2679809">
        <id>Q12756</id>
        <label>KIF1A</label>
    </interactant>
    <organismsDiffer>false</organismsDiffer>
    <experiments>3</experiments>
</comment>
<comment type="interaction">
    <interactant intactId="EBI-711909">
        <id>P02766</id>
    </interactant>
    <interactant intactId="EBI-714379">
        <id>Q9Y2M5</id>
        <label>KLHL20</label>
    </interactant>
    <organismsDiffer>false</organismsDiffer>
    <experiments>3</experiments>
</comment>
<comment type="interaction">
    <interactant intactId="EBI-711909">
        <id>P02766</id>
    </interactant>
    <interactant intactId="EBI-8487781">
        <id>Q8N6F8</id>
        <label>METTL27</label>
    </interactant>
    <organismsDiffer>false</organismsDiffer>
    <experiments>3</experiments>
</comment>
<comment type="interaction">
    <interactant intactId="EBI-711909">
        <id>P02766</id>
    </interactant>
    <interactant intactId="EBI-2829677">
        <id>P41218</id>
        <label>MNDA</label>
    </interactant>
    <organismsDiffer>false</organismsDiffer>
    <experiments>3</experiments>
</comment>
<comment type="interaction">
    <interactant intactId="EBI-711909">
        <id>P02766</id>
    </interactant>
    <interactant intactId="EBI-8084264">
        <id>P25713</id>
        <label>MT3</label>
    </interactant>
    <organismsDiffer>false</organismsDiffer>
    <experiments>3</experiments>
</comment>
<comment type="interaction">
    <interactant intactId="EBI-711909">
        <id>P02766</id>
    </interactant>
    <interactant intactId="EBI-746417">
        <id>Q16718</id>
        <label>NDUFA5</label>
    </interactant>
    <organismsDiffer>false</organismsDiffer>
    <experiments>3</experiments>
</comment>
<comment type="interaction">
    <interactant intactId="EBI-711909">
        <id>P02766</id>
    </interactant>
    <interactant intactId="EBI-10172876">
        <id>Q7Z6G3-2</id>
        <label>NECAB2</label>
    </interactant>
    <organismsDiffer>false</organismsDiffer>
    <experiments>3</experiments>
</comment>
<comment type="interaction">
    <interactant intactId="EBI-711909">
        <id>P02766</id>
    </interactant>
    <interactant intactId="EBI-1059321">
        <id>Q8NFH3</id>
        <label>NUP43</label>
    </interactant>
    <organismsDiffer>false</organismsDiffer>
    <experiments>3</experiments>
</comment>
<comment type="interaction">
    <interactant intactId="EBI-711909">
        <id>P02766</id>
    </interactant>
    <interactant intactId="EBI-1058491">
        <id>Q96FW1</id>
        <label>OTUB1</label>
    </interactant>
    <organismsDiffer>false</organismsDiffer>
    <experiments>4</experiments>
</comment>
<comment type="interaction">
    <interactant intactId="EBI-711909">
        <id>P02766</id>
    </interactant>
    <interactant intactId="EBI-25830200">
        <id>Q6GQQ9-2</id>
        <label>OTUD7B</label>
    </interactant>
    <organismsDiffer>false</organismsDiffer>
    <experiments>3</experiments>
</comment>
<comment type="interaction">
    <interactant intactId="EBI-711909">
        <id>P02766</id>
    </interactant>
    <interactant intactId="EBI-16399860">
        <id>O75781-2</id>
        <label>PALM</label>
    </interactant>
    <organismsDiffer>false</organismsDiffer>
    <experiments>3</experiments>
</comment>
<comment type="interaction">
    <interactant intactId="EBI-711909">
        <id>P02766</id>
    </interactant>
    <interactant intactId="EBI-2513978">
        <id>Q8N3R9</id>
        <label>PALS1</label>
    </interactant>
    <organismsDiffer>false</organismsDiffer>
    <experiments>3</experiments>
</comment>
<comment type="interaction">
    <interactant intactId="EBI-711909">
        <id>P02766</id>
    </interactant>
    <interactant intactId="EBI-9090282">
        <id>P27986-2</id>
        <label>PIK3R1</label>
    </interactant>
    <organismsDiffer>false</organismsDiffer>
    <experiments>3</experiments>
</comment>
<comment type="interaction">
    <interactant intactId="EBI-711909">
        <id>P02766</id>
    </interactant>
    <interactant intactId="EBI-4290895">
        <id>P11908</id>
        <label>PRPS2</label>
    </interactant>
    <organismsDiffer>false</organismsDiffer>
    <experiments>3</experiments>
</comment>
<comment type="interaction">
    <interactant intactId="EBI-711909">
        <id>P02766</id>
    </interactant>
    <interactant intactId="EBI-743880">
        <id>Q8WUY3</id>
        <label>PRUNE2</label>
    </interactant>
    <organismsDiffer>false</organismsDiffer>
    <experiments>3</experiments>
</comment>
<comment type="interaction">
    <interactant intactId="EBI-711909">
        <id>P02766</id>
    </interactant>
    <interactant intactId="EBI-2116134">
        <id>P02753</id>
        <label>RBP4</label>
    </interactant>
    <organismsDiffer>false</organismsDiffer>
    <experiments>4</experiments>
</comment>
<comment type="interaction">
    <interactant intactId="EBI-711909">
        <id>P02766</id>
    </interactant>
    <interactant intactId="EBI-743938">
        <id>Q96D59</id>
        <label>RNF183</label>
    </interactant>
    <organismsDiffer>false</organismsDiffer>
    <experiments>3</experiments>
</comment>
<comment type="interaction">
    <interactant intactId="EBI-711909">
        <id>P02766</id>
    </interactant>
    <interactant intactId="EBI-354861">
        <id>Q9C004</id>
        <label>SPRY4</label>
    </interactant>
    <organismsDiffer>false</organismsDiffer>
    <experiments>3</experiments>
</comment>
<comment type="interaction">
    <interactant intactId="EBI-711909">
        <id>P02766</id>
    </interactant>
    <interactant intactId="EBI-18616594">
        <id>Q8IXS7</id>
        <label>SRGAP3</label>
    </interactant>
    <organismsDiffer>false</organismsDiffer>
    <experiments>3</experiments>
</comment>
<comment type="interaction">
    <interactant intactId="EBI-711909">
        <id>P02766</id>
    </interactant>
    <interactant intactId="EBI-723091">
        <id>Q8NBJ7</id>
        <label>SUMF2</label>
    </interactant>
    <organismsDiffer>false</organismsDiffer>
    <experiments>3</experiments>
</comment>
<comment type="interaction">
    <interactant intactId="EBI-711909">
        <id>P02766</id>
    </interactant>
    <interactant intactId="EBI-21575846">
        <id>Q8WUA7-2</id>
        <label>TBC1D22A</label>
    </interactant>
    <organismsDiffer>false</organismsDiffer>
    <experiments>3</experiments>
</comment>
<comment type="interaction">
    <interactant intactId="EBI-711909">
        <id>P02766</id>
    </interactant>
    <interactant intactId="EBI-348333">
        <id>Q13569</id>
        <label>TDG</label>
    </interactant>
    <organismsDiffer>false</organismsDiffer>
    <experiments>3</experiments>
</comment>
<comment type="interaction">
    <interactant intactId="EBI-711909">
        <id>P02766</id>
    </interactant>
    <interactant intactId="EBI-25842075">
        <id>P21980-2</id>
        <label>TGM2</label>
    </interactant>
    <organismsDiffer>false</organismsDiffer>
    <experiments>3</experiments>
</comment>
<comment type="interaction">
    <interactant intactId="EBI-711909">
        <id>P02766</id>
    </interactant>
    <interactant intactId="EBI-25871541">
        <id>A0AVI4-2</id>
        <label>TMEM129</label>
    </interactant>
    <organismsDiffer>false</organismsDiffer>
    <experiments>3</experiments>
</comment>
<comment type="interaction">
    <interactant intactId="EBI-711909">
        <id>P02766</id>
    </interactant>
    <interactant intactId="EBI-711909">
        <id>P02766</id>
        <label>TTR</label>
    </interactant>
    <organismsDiffer>false</organismsDiffer>
    <experiments>11</experiments>
</comment>
<comment type="interaction">
    <interactant intactId="EBI-711909">
        <id>P02766</id>
    </interactant>
    <interactant intactId="EBI-348496">
        <id>Q969T4</id>
        <label>UBE2E3</label>
    </interactant>
    <organismsDiffer>false</organismsDiffer>
    <experiments>3</experiments>
</comment>
<comment type="interaction">
    <interactant intactId="EBI-711909">
        <id>P02766</id>
    </interactant>
    <interactant intactId="EBI-12876508">
        <id>O95164</id>
        <label>UBL3</label>
    </interactant>
    <organismsDiffer>false</organismsDiffer>
    <experiments>3</experiments>
</comment>
<comment type="interaction">
    <interactant intactId="EBI-711909">
        <id>P02766</id>
    </interactant>
    <interactant intactId="EBI-711736">
        <id>Q8IWV7</id>
        <label>UBR1</label>
    </interactant>
    <organismsDiffer>false</organismsDiffer>
    <experiments>3</experiments>
</comment>
<comment type="interaction">
    <interactant intactId="EBI-711909">
        <id>P02766</id>
    </interactant>
    <interactant intactId="EBI-354022">
        <id>P45880</id>
        <label>VDAC2</label>
    </interactant>
    <organismsDiffer>false</organismsDiffer>
    <experiments>3</experiments>
</comment>
<comment type="interaction">
    <interactant intactId="EBI-711909">
        <id>P02766</id>
    </interactant>
    <interactant intactId="EBI-6427899">
        <id>P58304</id>
        <label>VSX2</label>
    </interactant>
    <organismsDiffer>false</organismsDiffer>
    <experiments>3</experiments>
</comment>
<comment type="interaction">
    <interactant intactId="EBI-711909">
        <id>P02766</id>
    </interactant>
    <interactant intactId="EBI-7705033">
        <id>Q9BRX9</id>
        <label>WDR83</label>
    </interactant>
    <organismsDiffer>false</organismsDiffer>
    <experiments>3</experiments>
</comment>
<comment type="interaction">
    <interactant intactId="EBI-711909">
        <id>P02766</id>
    </interactant>
    <interactant intactId="EBI-1538838">
        <id>Q2QGD7</id>
        <label>ZXDC</label>
    </interactant>
    <organismsDiffer>false</organismsDiffer>
    <experiments>3</experiments>
</comment>
<comment type="interaction">
    <interactant intactId="EBI-711909">
        <id>P02766</id>
    </interactant>
    <interactant intactId="EBI-10259496">
        <id>Q86V28</id>
    </interactant>
    <organismsDiffer>false</organismsDiffer>
    <experiments>3</experiments>
</comment>
<comment type="subcellular location">
    <subcellularLocation>
        <location>Secreted</location>
    </subcellularLocation>
    <subcellularLocation>
        <location>Cytoplasm</location>
    </subcellularLocation>
</comment>
<comment type="tissue specificity">
    <text evidence="6 75">Detected in serum and cerebrospinal fluid (at protein level). Highly expressed in choroid plexus epithelial cells. Detected in retina pigment epithelium and liver.</text>
</comment>
<comment type="domain">
    <text>Each monomer has two 4-stranded beta sheets and the shape of a prolate ellipsoid. Antiparallel beta-sheet interactions link monomers into dimers. A short loop from each monomer forms the main dimer-dimer interaction. These two pairs of loops separate the opposed, convex beta-sheets of the dimers to form an internal channel.</text>
</comment>
<comment type="PTM">
    <text evidence="35 48 63">Not glycosylated under normal conditions. Following unfolding, caused for example by variant AMYLD1 'Gly-38', the cryptic Asn-118 site is exposed and glycosylated by STT3B-containing OST complex, leading to its degradation by the ER-associated degradation (ERAD) pathway.</text>
</comment>
<comment type="PTM">
    <text evidence="107">Sulfonation of the reactive cysteine Cys-30 enhances the stability of the native conformation of TTR, avoiding misassembly of the protein leading to amyloid formation.</text>
</comment>
<comment type="disease" evidence="2 4 5 7 8 10 11 13 14 15 16 17 19 21 22 23 24 26 29 30 31 32 36 37 38 39 40 41 42 43 44 47 49 50 52 53 54 55 56 63 64 67 68 69 70 71 72 73 76 77 80 81 82 83 84 85 86 87 88 89 90 92 93 94 96 97 98 99 100 101 102 103 105">
    <disease id="DI-00100">
        <name>Amyloidosis, hereditary systemic 1</name>
        <acronym>AMYLD1</acronym>
        <description>A form of hereditary systemic amyloidosis, a disorder characterized by amyloid deposition in multiple tissues resulting in a wide clinical spectrum. AMYLD1 is an autosomal dominant form due to transthyretin amyloid deposition. Protein fibrils can form in different tissues leading to amyloid polyneuropathies, amyloidotic cardiomyopathy, carpal tunnel syndrome, systemic senile amyloidosis. The disease includes leptomeningeal amyloidosis that is characterized by primary involvement of the central nervous system. Neuropathologic examination shows amyloid in the walls of leptomeningeal vessels, in pia arachnoid, and subpial deposits. Some patients also develop vitreous amyloid deposition that leads to visual impairment (oculoleptomeningeal amyloidosis). Clinical features include seizures, stroke-like episodes, dementia, psychomotor deterioration, variable amyloid deposition in the vitreous humor.</description>
        <dbReference type="MIM" id="105210"/>
    </disease>
    <text>The disease is caused by variants affecting the gene represented in this entry.</text>
</comment>
<comment type="disease" evidence="65">
    <disease id="DI-01785">
        <name>Hyperthyroxinemia, dystransthyretinemic</name>
        <acronym>DTTRH</acronym>
        <description>A condition characterized by elevation of total and free thyroxine in healthy, euthyroid persons without detectable binding protein abnormalities.</description>
        <dbReference type="MIM" id="145680"/>
    </disease>
    <text>The disease is caused by variants affecting the gene represented in this entry.</text>
</comment>
<comment type="disease" evidence="95">
    <disease id="DI-02811">
        <name>Carpal tunnel syndrome 1</name>
        <acronym>CTS1</acronym>
        <description>A condition characterized by entrapment of the median nerve within the carpal tunnel. Symptoms include burning pain and paresthesias involving the ventral surface of the hand and fingers which may radiate proximally. Impairment of sensation in the distribution of the median nerve and thenar muscle atrophy may occur. This condition may be associated with repetitive occupational trauma, wrist injuries, amyloid neuropathies, rheumatoid arthritis.</description>
        <dbReference type="MIM" id="115430"/>
    </disease>
    <text>The disease is caused by variants affecting the gene represented in this entry.</text>
</comment>
<comment type="miscellaneous">
    <text>Tetramer dissociation and partial unfolding leads to the formation of aggregates and amyloid fibrils. Small molecules that occupy at least one of the thyroid hormone binding sites stabilize the tetramer, and thereby stabilize the native state and protect against misfolding and the formation of amyloid fibrils.</text>
</comment>
<comment type="miscellaneous">
    <text>Two binding sites for thyroxine are located in the channel. Less than 1% of plasma prealbumin molecules are normally involved in thyroxine transport. L-thyroxine binds to the transthyretin by an order of magnitude stronger than does the triiodo-L-thyronine. Thyroxine-binding globulin is the major carrier protein for thyroid hormones in man.</text>
</comment>
<comment type="miscellaneous">
    <text>About 40% of plasma transthyretin circulates in a tight protein-protein complex with the plasma retinol-binding protein (RBP). The formation of the complex with RBP stabilizes the binding of retinol to RBP and decreases the glomerular filtration and renal catabolism of the relatively small RBP molecule. There is evidence for 2 binding sites for RBP, one possibly being a region that includes Ile-104, located on the outer surface of the transthyretin molecule.</text>
</comment>
<comment type="similarity">
    <text evidence="106">Belongs to the transthyretin family.</text>
</comment>
<comment type="online information" name="Wikipedia">
    <link uri="https://en.wikipedia.org/wiki/Transthyretin"/>
    <text>Transthyretin entry</text>
</comment>